<dbReference type="EC" id="3.4.19.12" evidence="35 47"/>
<dbReference type="EC" id="3.4.22.-" evidence="35 42"/>
<dbReference type="EC" id="3.4.22.69" evidence="35"/>
<dbReference type="EC" id="2.7.7.48"/>
<dbReference type="EC" id="2.7.7.50"/>
<dbReference type="EC" id="3.6.4.12" evidence="62"/>
<dbReference type="EC" id="3.6.4.13" evidence="62"/>
<dbReference type="EC" id="2.1.1.-"/>
<dbReference type="EC" id="2.1.1.56" evidence="74"/>
<dbReference type="EC" id="3.1.13.-"/>
<dbReference type="EC" id="4.6.1.-" evidence="44"/>
<dbReference type="EC" id="2.1.1.57" evidence="60"/>
<dbReference type="EMBL" id="AY278741">
    <property type="protein sequence ID" value="AAP13442.1"/>
    <property type="molecule type" value="Genomic_RNA"/>
</dbReference>
<dbReference type="EMBL" id="AY278741">
    <property type="protein sequence ID" value="AAP13440.1"/>
    <property type="status" value="ALT_SEQ"/>
    <property type="molecule type" value="Genomic_RNA"/>
</dbReference>
<dbReference type="EMBL" id="AY274119">
    <property type="protein sequence ID" value="AAP41036.1"/>
    <property type="status" value="ALT_SEQ"/>
    <property type="molecule type" value="Genomic_RNA"/>
</dbReference>
<dbReference type="EMBL" id="AY278554">
    <property type="protein sequence ID" value="AAP13566.1"/>
    <property type="molecule type" value="Genomic_RNA"/>
</dbReference>
<dbReference type="EMBL" id="AY282752">
    <property type="protein sequence ID" value="AAP30711.1"/>
    <property type="molecule type" value="Genomic_RNA"/>
</dbReference>
<dbReference type="EMBL" id="AY304495">
    <property type="status" value="NOT_ANNOTATED_CDS"/>
    <property type="molecule type" value="Genomic_RNA"/>
</dbReference>
<dbReference type="EMBL" id="AY304486">
    <property type="status" value="NOT_ANNOTATED_CDS"/>
    <property type="molecule type" value="Genomic_RNA"/>
</dbReference>
<dbReference type="EMBL" id="AY304488">
    <property type="status" value="NOT_ANNOTATED_CDS"/>
    <property type="molecule type" value="Genomic_RNA"/>
</dbReference>
<dbReference type="EMBL" id="AY278491">
    <property type="status" value="NOT_ANNOTATED_CDS"/>
    <property type="molecule type" value="Genomic_RNA"/>
</dbReference>
<dbReference type="EMBL" id="AY283794">
    <property type="status" value="NOT_ANNOTATED_CDS"/>
    <property type="molecule type" value="Genomic_RNA"/>
</dbReference>
<dbReference type="EMBL" id="AY283795">
    <property type="status" value="NOT_ANNOTATED_CDS"/>
    <property type="molecule type" value="Genomic_RNA"/>
</dbReference>
<dbReference type="EMBL" id="AY283796">
    <property type="status" value="NOT_ANNOTATED_CDS"/>
    <property type="molecule type" value="Genomic_RNA"/>
</dbReference>
<dbReference type="EMBL" id="AY283797">
    <property type="status" value="NOT_ANNOTATED_CDS"/>
    <property type="molecule type" value="Genomic_RNA"/>
</dbReference>
<dbReference type="EMBL" id="AY283798">
    <property type="status" value="NOT_ANNOTATED_CDS"/>
    <property type="molecule type" value="Genomic_RNA"/>
</dbReference>
<dbReference type="EMBL" id="AY286320">
    <property type="protein sequence ID" value="AAP49011.4"/>
    <property type="molecule type" value="Genomic_RNA"/>
</dbReference>
<dbReference type="EMBL" id="AY278488">
    <property type="protein sequence ID" value="AAP30028.1"/>
    <property type="molecule type" value="Genomic_RNA"/>
</dbReference>
<dbReference type="EMBL" id="AY278489">
    <property type="protein sequence ID" value="AAP51225.1"/>
    <property type="molecule type" value="Genomic_RNA"/>
</dbReference>
<dbReference type="EMBL" id="AY278490">
    <property type="status" value="NOT_ANNOTATED_CDS"/>
    <property type="molecule type" value="Genomic_RNA"/>
</dbReference>
<dbReference type="EMBL" id="AY279354">
    <property type="status" value="NOT_ANNOTATED_CDS"/>
    <property type="molecule type" value="Genomic_RNA"/>
</dbReference>
<dbReference type="EMBL" id="AY291451">
    <property type="protein sequence ID" value="AAP37015.1"/>
    <property type="molecule type" value="Genomic_RNA"/>
</dbReference>
<dbReference type="EMBL" id="AY310120">
    <property type="protein sequence ID" value="AAP50483.1"/>
    <property type="molecule type" value="Genomic_RNA"/>
</dbReference>
<dbReference type="EMBL" id="AY291315">
    <property type="protein sequence ID" value="AAP33696.1"/>
    <property type="molecule type" value="Genomic_RNA"/>
</dbReference>
<dbReference type="EMBL" id="AY323977">
    <property type="protein sequence ID" value="AAP72973.2"/>
    <property type="molecule type" value="Genomic_RNA"/>
</dbReference>
<dbReference type="EMBL" id="AY321118">
    <property type="status" value="NOT_ANNOTATED_CDS"/>
    <property type="molecule type" value="Genomic_RNA"/>
</dbReference>
<dbReference type="EMBL" id="AY338174">
    <property type="protein sequence ID" value="AAQ01594.1"/>
    <property type="molecule type" value="Genomic_RNA"/>
</dbReference>
<dbReference type="EMBL" id="AY338174">
    <property type="protein sequence ID" value="AAQ01596.1"/>
    <property type="status" value="ALT_SEQ"/>
    <property type="molecule type" value="Genomic_RNA"/>
</dbReference>
<dbReference type="EMBL" id="AY338175">
    <property type="protein sequence ID" value="AAQ01606.1"/>
    <property type="molecule type" value="Genomic_RNA"/>
</dbReference>
<dbReference type="EMBL" id="AY338175">
    <property type="protein sequence ID" value="AAQ01608.1"/>
    <property type="status" value="ALT_SEQ"/>
    <property type="molecule type" value="Genomic_RNA"/>
</dbReference>
<dbReference type="EMBL" id="AY348314">
    <property type="protein sequence ID" value="AAP97879.1"/>
    <property type="molecule type" value="Genomic_RNA"/>
</dbReference>
<dbReference type="EMBL" id="AY348314">
    <property type="protein sequence ID" value="AAP97881.1"/>
    <property type="status" value="ALT_SEQ"/>
    <property type="molecule type" value="Genomic_RNA"/>
</dbReference>
<dbReference type="EMBL" id="AP006557">
    <property type="protein sequence ID" value="BAC81346.1"/>
    <property type="molecule type" value="Genomic_RNA"/>
</dbReference>
<dbReference type="EMBL" id="AP006558">
    <property type="protein sequence ID" value="BAC81360.1"/>
    <property type="molecule type" value="Genomic_RNA"/>
</dbReference>
<dbReference type="EMBL" id="AP006559">
    <property type="protein sequence ID" value="BAC81374.1"/>
    <property type="molecule type" value="Genomic_RNA"/>
</dbReference>
<dbReference type="EMBL" id="AP006560">
    <property type="protein sequence ID" value="BAC81388.1"/>
    <property type="molecule type" value="Genomic_RNA"/>
</dbReference>
<dbReference type="EMBL" id="AP006561">
    <property type="protein sequence ID" value="BAC81402.1"/>
    <property type="molecule type" value="Genomic_RNA"/>
</dbReference>
<dbReference type="EMBL" id="AY427439">
    <property type="protein sequence ID" value="AAQ94058.1"/>
    <property type="molecule type" value="Genomic_RNA"/>
</dbReference>
<dbReference type="EMBL" id="AH012999">
    <property type="protein sequence ID" value="AAP82966.1"/>
    <property type="molecule type" value="Genomic_RNA"/>
</dbReference>
<dbReference type="EMBL" id="AH012999">
    <property type="protein sequence ID" value="AAP82975.1"/>
    <property type="status" value="ALT_SEQ"/>
    <property type="molecule type" value="Genomic_RNA"/>
</dbReference>
<dbReference type="EMBL" id="AH012999">
    <property type="protein sequence ID" value="AAP82967.1"/>
    <property type="molecule type" value="Genomic_RNA"/>
</dbReference>
<dbReference type="EMBL" id="AY463059">
    <property type="protein sequence ID" value="AAP82978.2"/>
    <property type="molecule type" value="Genomic_RNA"/>
</dbReference>
<dbReference type="EMBL" id="AY269391">
    <property type="protein sequence ID" value="AAP04003.1"/>
    <property type="molecule type" value="Genomic_RNA"/>
</dbReference>
<dbReference type="EMBL" id="AY268049">
    <property type="protein sequence ID" value="AAP04587.1"/>
    <property type="molecule type" value="Genomic_RNA"/>
</dbReference>
<dbReference type="RefSeq" id="NP_828849.2">
    <property type="nucleotide sequence ID" value="NC_004718.3"/>
</dbReference>
<dbReference type="PDB" id="1Q2W">
    <property type="method" value="X-ray"/>
    <property type="resolution" value="1.86 A"/>
    <property type="chains" value="A/B=3241-3544"/>
</dbReference>
<dbReference type="PDB" id="1QZ8">
    <property type="method" value="X-ray"/>
    <property type="resolution" value="2.70 A"/>
    <property type="chains" value="A/B=4118-4230"/>
</dbReference>
<dbReference type="PDB" id="1UJ1">
    <property type="method" value="X-ray"/>
    <property type="resolution" value="1.90 A"/>
    <property type="chains" value="A/B=3241-3546"/>
</dbReference>
<dbReference type="PDB" id="1UK2">
    <property type="method" value="X-ray"/>
    <property type="resolution" value="2.20 A"/>
    <property type="chains" value="A/B=3241-3546"/>
</dbReference>
<dbReference type="PDB" id="1UK3">
    <property type="method" value="X-ray"/>
    <property type="resolution" value="2.40 A"/>
    <property type="chains" value="A/B=3241-3546"/>
</dbReference>
<dbReference type="PDB" id="1UK4">
    <property type="method" value="X-ray"/>
    <property type="resolution" value="2.50 A"/>
    <property type="chains" value="A/B=3241-3546"/>
</dbReference>
<dbReference type="PDB" id="1UW7">
    <property type="method" value="X-ray"/>
    <property type="resolution" value="2.80 A"/>
    <property type="chains" value="A=4118-4230"/>
</dbReference>
<dbReference type="PDB" id="1WOF">
    <property type="method" value="X-ray"/>
    <property type="resolution" value="2.00 A"/>
    <property type="chains" value="A/B=3241-3546"/>
</dbReference>
<dbReference type="PDB" id="1YSY">
    <property type="method" value="NMR"/>
    <property type="chains" value="A=3837-3919"/>
</dbReference>
<dbReference type="PDB" id="1Z1I">
    <property type="method" value="X-ray"/>
    <property type="resolution" value="2.80 A"/>
    <property type="chains" value="A=3241-3546"/>
</dbReference>
<dbReference type="PDB" id="1Z1J">
    <property type="method" value="X-ray"/>
    <property type="resolution" value="2.80 A"/>
    <property type="chains" value="A/B=3241-3546"/>
</dbReference>
<dbReference type="PDB" id="2A5A">
    <property type="method" value="X-ray"/>
    <property type="resolution" value="2.08 A"/>
    <property type="chains" value="A=3241-3546"/>
</dbReference>
<dbReference type="PDB" id="2A5I">
    <property type="method" value="X-ray"/>
    <property type="resolution" value="1.88 A"/>
    <property type="chains" value="A=3241-3546"/>
</dbReference>
<dbReference type="PDB" id="2A5K">
    <property type="method" value="X-ray"/>
    <property type="resolution" value="2.30 A"/>
    <property type="chains" value="A/B=3241-3546"/>
</dbReference>
<dbReference type="PDB" id="2ACF">
    <property type="method" value="X-ray"/>
    <property type="resolution" value="1.40 A"/>
    <property type="chains" value="A/B/C/D=1002-1176"/>
</dbReference>
<dbReference type="PDB" id="2AHM">
    <property type="method" value="X-ray"/>
    <property type="resolution" value="2.40 A"/>
    <property type="chains" value="A/B/C/D=3837-3919, E/F/G/H=3920-4117"/>
</dbReference>
<dbReference type="PDB" id="2ALV">
    <property type="method" value="X-ray"/>
    <property type="resolution" value="1.90 A"/>
    <property type="chains" value="A=3241-3543"/>
</dbReference>
<dbReference type="PDB" id="2AMD">
    <property type="method" value="X-ray"/>
    <property type="resolution" value="1.85 A"/>
    <property type="chains" value="A/B=3241-3546"/>
</dbReference>
<dbReference type="PDB" id="2AMQ">
    <property type="method" value="X-ray"/>
    <property type="resolution" value="2.30 A"/>
    <property type="chains" value="A/B=3241-3546"/>
</dbReference>
<dbReference type="PDB" id="2BX3">
    <property type="method" value="X-ray"/>
    <property type="resolution" value="2.00 A"/>
    <property type="chains" value="A=3241-3546"/>
</dbReference>
<dbReference type="PDB" id="2BX4">
    <property type="method" value="X-ray"/>
    <property type="resolution" value="2.79 A"/>
    <property type="chains" value="A=3241-3546"/>
</dbReference>
<dbReference type="PDB" id="2C3S">
    <property type="method" value="X-ray"/>
    <property type="resolution" value="1.90 A"/>
    <property type="chains" value="A=3241-3546"/>
</dbReference>
<dbReference type="PDB" id="2D2D">
    <property type="method" value="X-ray"/>
    <property type="resolution" value="2.70 A"/>
    <property type="chains" value="A/B=3241-3546"/>
</dbReference>
<dbReference type="PDB" id="2DUC">
    <property type="method" value="X-ray"/>
    <property type="resolution" value="1.70 A"/>
    <property type="chains" value="A/B=3241-3546"/>
</dbReference>
<dbReference type="PDB" id="2FAV">
    <property type="method" value="X-ray"/>
    <property type="resolution" value="1.80 A"/>
    <property type="chains" value="A/B/C=1000-1173"/>
</dbReference>
<dbReference type="PDB" id="2FE8">
    <property type="method" value="X-ray"/>
    <property type="resolution" value="1.85 A"/>
    <property type="chains" value="A/B/C=1541-1854"/>
</dbReference>
<dbReference type="PDB" id="2FYG">
    <property type="method" value="X-ray"/>
    <property type="resolution" value="1.80 A"/>
    <property type="chains" value="A=4240-4362"/>
</dbReference>
<dbReference type="PDB" id="2G9T">
    <property type="method" value="X-ray"/>
    <property type="resolution" value="2.10 A"/>
    <property type="chains" value="A/B/C/D/E/F/G/H/I/J/K/L/M/N/O/P/Q/R/S/T/U/V/W/X=4231-4378"/>
</dbReference>
<dbReference type="PDB" id="2GA6">
    <property type="method" value="X-ray"/>
    <property type="resolution" value="2.70 A"/>
    <property type="chains" value="A/B/C/D/E/F/G/H/I/J/K/L/M/N/O/P/Q/R/S/T/U/V/W/X=4231-4378"/>
</dbReference>
<dbReference type="PDB" id="2GDT">
    <property type="method" value="NMR"/>
    <property type="chains" value="A=13-127"/>
</dbReference>
<dbReference type="PDB" id="2GRI">
    <property type="method" value="NMR"/>
    <property type="chains" value="A=819-930"/>
</dbReference>
<dbReference type="PDB" id="2GT7">
    <property type="method" value="X-ray"/>
    <property type="resolution" value="1.82 A"/>
    <property type="chains" value="A/B=3241-3546"/>
</dbReference>
<dbReference type="PDB" id="2GT8">
    <property type="method" value="X-ray"/>
    <property type="resolution" value="2.00 A"/>
    <property type="chains" value="A=3241-3546"/>
</dbReference>
<dbReference type="PDB" id="2GTB">
    <property type="method" value="X-ray"/>
    <property type="resolution" value="2.00 A"/>
    <property type="chains" value="A=3241-3546"/>
</dbReference>
<dbReference type="PDB" id="2GX4">
    <property type="method" value="X-ray"/>
    <property type="resolution" value="1.93 A"/>
    <property type="chains" value="A=3241-3546"/>
</dbReference>
<dbReference type="PDB" id="2GZ7">
    <property type="method" value="X-ray"/>
    <property type="resolution" value="1.86 A"/>
    <property type="chains" value="A=3241-3546"/>
</dbReference>
<dbReference type="PDB" id="2GZ8">
    <property type="method" value="X-ray"/>
    <property type="resolution" value="1.97 A"/>
    <property type="chains" value="A=3241-3546"/>
</dbReference>
<dbReference type="PDB" id="2GZ9">
    <property type="method" value="X-ray"/>
    <property type="resolution" value="2.17 A"/>
    <property type="chains" value="A=3241-3546"/>
</dbReference>
<dbReference type="PDB" id="2H2Z">
    <property type="method" value="X-ray"/>
    <property type="resolution" value="1.60 A"/>
    <property type="chains" value="A=3241-3546"/>
</dbReference>
<dbReference type="PDB" id="2H85">
    <property type="method" value="X-ray"/>
    <property type="resolution" value="2.60 A"/>
    <property type="chains" value="A=6429-6774"/>
</dbReference>
<dbReference type="PDB" id="2HOB">
    <property type="method" value="X-ray"/>
    <property type="resolution" value="1.95 A"/>
    <property type="chains" value="A=3241-3546"/>
</dbReference>
<dbReference type="PDB" id="2HSX">
    <property type="method" value="NMR"/>
    <property type="chains" value="A=13-127"/>
</dbReference>
<dbReference type="PDB" id="2IDY">
    <property type="method" value="NMR"/>
    <property type="chains" value="A=819-930"/>
</dbReference>
<dbReference type="PDB" id="2JZD">
    <property type="method" value="NMR"/>
    <property type="chains" value="A=1345-1469"/>
</dbReference>
<dbReference type="PDB" id="2JZE">
    <property type="method" value="NMR"/>
    <property type="chains" value="A=1345-1469"/>
</dbReference>
<dbReference type="PDB" id="2JZF">
    <property type="method" value="NMR"/>
    <property type="chains" value="A=1331-1469"/>
</dbReference>
<dbReference type="PDB" id="2K7X">
    <property type="method" value="NMR"/>
    <property type="chains" value="A=3427-3546"/>
</dbReference>
<dbReference type="PDB" id="2K87">
    <property type="method" value="NMR"/>
    <property type="chains" value="A=1884-1998"/>
</dbReference>
<dbReference type="PDB" id="2OP9">
    <property type="method" value="X-ray"/>
    <property type="resolution" value="1.80 A"/>
    <property type="chains" value="A/B=3241-3541"/>
</dbReference>
<dbReference type="PDB" id="2OZK">
    <property type="method" value="X-ray"/>
    <property type="resolution" value="2.90 A"/>
    <property type="chains" value="A/B/C/D=6430-6775"/>
</dbReference>
<dbReference type="PDB" id="2PWX">
    <property type="method" value="X-ray"/>
    <property type="resolution" value="2.50 A"/>
    <property type="chains" value="A=3241-3546"/>
</dbReference>
<dbReference type="PDB" id="2Q6G">
    <property type="method" value="X-ray"/>
    <property type="resolution" value="2.50 A"/>
    <property type="chains" value="A/B=3241-3546"/>
</dbReference>
<dbReference type="PDB" id="2QC2">
    <property type="method" value="X-ray"/>
    <property type="resolution" value="2.70 A"/>
    <property type="chains" value="A/B=3241-3546"/>
</dbReference>
<dbReference type="PDB" id="2QCY">
    <property type="method" value="X-ray"/>
    <property type="resolution" value="1.75 A"/>
    <property type="chains" value="A=3241-3546"/>
</dbReference>
<dbReference type="PDB" id="2QIQ">
    <property type="method" value="X-ray"/>
    <property type="resolution" value="1.90 A"/>
    <property type="chains" value="A=3242-3541"/>
</dbReference>
<dbReference type="PDB" id="2RHB">
    <property type="method" value="X-ray"/>
    <property type="resolution" value="2.80 A"/>
    <property type="chains" value="A/B/C/D/E/F=6430-6775"/>
</dbReference>
<dbReference type="PDB" id="2RNK">
    <property type="method" value="NMR"/>
    <property type="chains" value="A=1331-1469"/>
</dbReference>
<dbReference type="PDB" id="2V6N">
    <property type="method" value="X-ray"/>
    <property type="resolution" value="1.98 A"/>
    <property type="chains" value="A=3241-3546"/>
</dbReference>
<dbReference type="PDB" id="2VJ1">
    <property type="method" value="X-ray"/>
    <property type="resolution" value="2.25 A"/>
    <property type="chains" value="A/B=3242-3544"/>
</dbReference>
<dbReference type="PDB" id="2XYQ">
    <property type="method" value="X-ray"/>
    <property type="resolution" value="2.00 A"/>
    <property type="chains" value="A=6776-7065, B=4240-4361"/>
</dbReference>
<dbReference type="PDB" id="2XYR">
    <property type="method" value="X-ray"/>
    <property type="resolution" value="2.50 A"/>
    <property type="chains" value="A=6776-7067, B=4240-4361"/>
</dbReference>
<dbReference type="PDB" id="2XYV">
    <property type="method" value="X-ray"/>
    <property type="resolution" value="2.06 A"/>
    <property type="chains" value="A=6776-7067, B=4240-4361"/>
</dbReference>
<dbReference type="PDB" id="2Z3C">
    <property type="method" value="X-ray"/>
    <property type="resolution" value="1.79 A"/>
    <property type="chains" value="A=3241-3546"/>
</dbReference>
<dbReference type="PDB" id="2Z3D">
    <property type="method" value="X-ray"/>
    <property type="resolution" value="2.10 A"/>
    <property type="chains" value="A=3241-3546"/>
</dbReference>
<dbReference type="PDB" id="2Z3E">
    <property type="method" value="X-ray"/>
    <property type="resolution" value="2.32 A"/>
    <property type="chains" value="A=3241-3546"/>
</dbReference>
<dbReference type="PDB" id="2Z94">
    <property type="method" value="X-ray"/>
    <property type="resolution" value="1.78 A"/>
    <property type="chains" value="A=3241-3546"/>
</dbReference>
<dbReference type="PDB" id="2Z9G">
    <property type="method" value="X-ray"/>
    <property type="resolution" value="1.86 A"/>
    <property type="chains" value="A=3241-3546"/>
</dbReference>
<dbReference type="PDB" id="2Z9J">
    <property type="method" value="X-ray"/>
    <property type="resolution" value="1.95 A"/>
    <property type="chains" value="A/B=3241-3546"/>
</dbReference>
<dbReference type="PDB" id="2Z9K">
    <property type="method" value="X-ray"/>
    <property type="resolution" value="1.85 A"/>
    <property type="chains" value="A/B=3241-3546"/>
</dbReference>
<dbReference type="PDB" id="2Z9L">
    <property type="method" value="X-ray"/>
    <property type="resolution" value="2.10 A"/>
    <property type="chains" value="A/B=3241-3546"/>
</dbReference>
<dbReference type="PDB" id="3D62">
    <property type="method" value="X-ray"/>
    <property type="resolution" value="2.70 A"/>
    <property type="chains" value="A=3243-3541"/>
</dbReference>
<dbReference type="PDB" id="3E9S">
    <property type="method" value="X-ray"/>
    <property type="resolution" value="2.50 A"/>
    <property type="chains" value="A=1541-1855"/>
</dbReference>
<dbReference type="PDB" id="3EBN">
    <property type="method" value="X-ray"/>
    <property type="resolution" value="2.40 A"/>
    <property type="chains" value="A/B/C/D=3429-3546"/>
</dbReference>
<dbReference type="PDB" id="3R24">
    <property type="method" value="X-ray"/>
    <property type="resolution" value="2.00 A"/>
    <property type="chains" value="A=6776-7073, B=4240-4382"/>
</dbReference>
<dbReference type="PDB" id="4TWW">
    <property type="method" value="X-ray"/>
    <property type="resolution" value="2.42 A"/>
    <property type="chains" value="A/B=3241-3546"/>
</dbReference>
<dbReference type="PDB" id="4TWY">
    <property type="method" value="X-ray"/>
    <property type="resolution" value="1.60 A"/>
    <property type="chains" value="A=3241-3546"/>
</dbReference>
<dbReference type="PDB" id="4WY3">
    <property type="method" value="X-ray"/>
    <property type="resolution" value="1.89 A"/>
    <property type="chains" value="A=3241-3546"/>
</dbReference>
<dbReference type="PDB" id="4ZUH">
    <property type="method" value="X-ray"/>
    <property type="resolution" value="2.39 A"/>
    <property type="chains" value="C=3235-3245"/>
</dbReference>
<dbReference type="PDB" id="5B6O">
    <property type="method" value="X-ray"/>
    <property type="resolution" value="2.20 A"/>
    <property type="chains" value="A/B=3241-3556"/>
</dbReference>
<dbReference type="PDB" id="5C5N">
    <property type="method" value="X-ray"/>
    <property type="resolution" value="1.69 A"/>
    <property type="chains" value="A=3241-3546"/>
</dbReference>
<dbReference type="PDB" id="5C5O">
    <property type="method" value="X-ray"/>
    <property type="resolution" value="1.50 A"/>
    <property type="chains" value="A/B=3241-3546"/>
</dbReference>
<dbReference type="PDB" id="5C8S">
    <property type="method" value="X-ray"/>
    <property type="resolution" value="3.33 A"/>
    <property type="chains" value="A/C=4231-4369, B/D=5903-6429"/>
</dbReference>
<dbReference type="PDB" id="5C8T">
    <property type="method" value="X-ray"/>
    <property type="resolution" value="3.20 A"/>
    <property type="chains" value="A/C=4231-4369, B/D=5903-6429"/>
</dbReference>
<dbReference type="PDB" id="5C8U">
    <property type="method" value="X-ray"/>
    <property type="resolution" value="3.40 A"/>
    <property type="chains" value="A/C=4231-4369, B/D=5903-6429"/>
</dbReference>
<dbReference type="PDB" id="5E6J">
    <property type="method" value="X-ray"/>
    <property type="resolution" value="2.85 A"/>
    <property type="chains" value="A/D=1541-1856"/>
</dbReference>
<dbReference type="PDB" id="5F22">
    <property type="method" value="X-ray"/>
    <property type="resolution" value="2.15 A"/>
    <property type="chains" value="B=3989-4117"/>
</dbReference>
<dbReference type="PDB" id="5N19">
    <property type="method" value="X-ray"/>
    <property type="resolution" value="1.62 A"/>
    <property type="chains" value="A=3241-3546"/>
</dbReference>
<dbReference type="PDB" id="5N5O">
    <property type="method" value="X-ray"/>
    <property type="resolution" value="2.00 A"/>
    <property type="chains" value="A=3241-3546"/>
</dbReference>
<dbReference type="PDB" id="5NFY">
    <property type="method" value="X-ray"/>
    <property type="resolution" value="3.38 A"/>
    <property type="chains" value="M/N/O/P=4231-4361"/>
</dbReference>
<dbReference type="PDB" id="6JYT">
    <property type="method" value="X-ray"/>
    <property type="resolution" value="2.80 A"/>
    <property type="chains" value="A/B=5302-5902"/>
</dbReference>
<dbReference type="PDB" id="6LNQ">
    <property type="method" value="X-ray"/>
    <property type="resolution" value="2.24 A"/>
    <property type="chains" value="A=3241-3546"/>
</dbReference>
<dbReference type="PDB" id="6NUR">
    <property type="method" value="EM"/>
    <property type="resolution" value="3.10 A"/>
    <property type="chains" value="A=4370-5300, C=3837-3919"/>
</dbReference>
<dbReference type="PDB" id="6NUS">
    <property type="method" value="EM"/>
    <property type="resolution" value="3.50 A"/>
    <property type="chains" value="A=4370-5300"/>
</dbReference>
<dbReference type="PDB" id="6W79">
    <property type="method" value="X-ray"/>
    <property type="resolution" value="1.46 A"/>
    <property type="chains" value="A=3241-3546"/>
</dbReference>
<dbReference type="PDB" id="6WCO">
    <property type="method" value="X-ray"/>
    <property type="resolution" value="1.48 A"/>
    <property type="chains" value="A=3241-3546"/>
</dbReference>
<dbReference type="PDB" id="7LCP">
    <property type="method" value="X-ray"/>
    <property type="resolution" value="1.90 A"/>
    <property type="chains" value="A=3241-3546"/>
</dbReference>
<dbReference type="PDB" id="7LCQ">
    <property type="method" value="X-ray"/>
    <property type="resolution" value="2.15 A"/>
    <property type="chains" value="A=3241-3546"/>
</dbReference>
<dbReference type="PDB" id="8C0G">
    <property type="method" value="X-ray"/>
    <property type="resolution" value="1.88 A"/>
    <property type="chains" value="A=6776-7067, B=4240-4361"/>
</dbReference>
<dbReference type="PDB" id="8CB3">
    <property type="method" value="X-ray"/>
    <property type="resolution" value="1.57 A"/>
    <property type="chains" value="A/B/C=1000-1173"/>
</dbReference>
<dbReference type="PDB" id="8YKK">
    <property type="method" value="X-ray"/>
    <property type="resolution" value="2.30 A"/>
    <property type="chains" value="A=3242-3539"/>
</dbReference>
<dbReference type="PDBsum" id="1Q2W"/>
<dbReference type="PDBsum" id="1QZ8"/>
<dbReference type="PDBsum" id="1UJ1"/>
<dbReference type="PDBsum" id="1UK2"/>
<dbReference type="PDBsum" id="1UK3"/>
<dbReference type="PDBsum" id="1UK4"/>
<dbReference type="PDBsum" id="1UW7"/>
<dbReference type="PDBsum" id="1WOF"/>
<dbReference type="PDBsum" id="1YSY"/>
<dbReference type="PDBsum" id="1Z1I"/>
<dbReference type="PDBsum" id="1Z1J"/>
<dbReference type="PDBsum" id="2A5A"/>
<dbReference type="PDBsum" id="2A5I"/>
<dbReference type="PDBsum" id="2A5K"/>
<dbReference type="PDBsum" id="2ACF"/>
<dbReference type="PDBsum" id="2AHM"/>
<dbReference type="PDBsum" id="2ALV"/>
<dbReference type="PDBsum" id="2AMD"/>
<dbReference type="PDBsum" id="2AMQ"/>
<dbReference type="PDBsum" id="2BX3"/>
<dbReference type="PDBsum" id="2BX4"/>
<dbReference type="PDBsum" id="2C3S"/>
<dbReference type="PDBsum" id="2D2D"/>
<dbReference type="PDBsum" id="2DUC"/>
<dbReference type="PDBsum" id="2FAV"/>
<dbReference type="PDBsum" id="2FE8"/>
<dbReference type="PDBsum" id="2FYG"/>
<dbReference type="PDBsum" id="2G9T"/>
<dbReference type="PDBsum" id="2GA6"/>
<dbReference type="PDBsum" id="2GDT"/>
<dbReference type="PDBsum" id="2GRI"/>
<dbReference type="PDBsum" id="2GT7"/>
<dbReference type="PDBsum" id="2GT8"/>
<dbReference type="PDBsum" id="2GTB"/>
<dbReference type="PDBsum" id="2GX4"/>
<dbReference type="PDBsum" id="2GZ7"/>
<dbReference type="PDBsum" id="2GZ8"/>
<dbReference type="PDBsum" id="2GZ9"/>
<dbReference type="PDBsum" id="2H2Z"/>
<dbReference type="PDBsum" id="2H85"/>
<dbReference type="PDBsum" id="2HOB"/>
<dbReference type="PDBsum" id="2HSX"/>
<dbReference type="PDBsum" id="2IDY"/>
<dbReference type="PDBsum" id="2JZD"/>
<dbReference type="PDBsum" id="2JZE"/>
<dbReference type="PDBsum" id="2JZF"/>
<dbReference type="PDBsum" id="2K7X"/>
<dbReference type="PDBsum" id="2K87"/>
<dbReference type="PDBsum" id="2OP9"/>
<dbReference type="PDBsum" id="2OZK"/>
<dbReference type="PDBsum" id="2PWX"/>
<dbReference type="PDBsum" id="2Q6G"/>
<dbReference type="PDBsum" id="2QC2"/>
<dbReference type="PDBsum" id="2QCY"/>
<dbReference type="PDBsum" id="2QIQ"/>
<dbReference type="PDBsum" id="2RHB"/>
<dbReference type="PDBsum" id="2RNK"/>
<dbReference type="PDBsum" id="2V6N"/>
<dbReference type="PDBsum" id="2VJ1"/>
<dbReference type="PDBsum" id="2XYQ"/>
<dbReference type="PDBsum" id="2XYR"/>
<dbReference type="PDBsum" id="2XYV"/>
<dbReference type="PDBsum" id="2Z3C"/>
<dbReference type="PDBsum" id="2Z3D"/>
<dbReference type="PDBsum" id="2Z3E"/>
<dbReference type="PDBsum" id="2Z94"/>
<dbReference type="PDBsum" id="2Z9G"/>
<dbReference type="PDBsum" id="2Z9J"/>
<dbReference type="PDBsum" id="2Z9K"/>
<dbReference type="PDBsum" id="2Z9L"/>
<dbReference type="PDBsum" id="3D62"/>
<dbReference type="PDBsum" id="3E9S"/>
<dbReference type="PDBsum" id="3EBN"/>
<dbReference type="PDBsum" id="3R24"/>
<dbReference type="PDBsum" id="4TWW"/>
<dbReference type="PDBsum" id="4TWY"/>
<dbReference type="PDBsum" id="4WY3"/>
<dbReference type="PDBsum" id="4ZUH"/>
<dbReference type="PDBsum" id="5B6O"/>
<dbReference type="PDBsum" id="5C5N"/>
<dbReference type="PDBsum" id="5C5O"/>
<dbReference type="PDBsum" id="5C8S"/>
<dbReference type="PDBsum" id="5C8T"/>
<dbReference type="PDBsum" id="5C8U"/>
<dbReference type="PDBsum" id="5E6J"/>
<dbReference type="PDBsum" id="5F22"/>
<dbReference type="PDBsum" id="5N19"/>
<dbReference type="PDBsum" id="5N5O"/>
<dbReference type="PDBsum" id="5NFY"/>
<dbReference type="PDBsum" id="6JYT"/>
<dbReference type="PDBsum" id="6LNQ"/>
<dbReference type="PDBsum" id="6NUR"/>
<dbReference type="PDBsum" id="6NUS"/>
<dbReference type="PDBsum" id="6W79"/>
<dbReference type="PDBsum" id="6WCO"/>
<dbReference type="PDBsum" id="7LCP"/>
<dbReference type="PDBsum" id="7LCQ"/>
<dbReference type="PDBsum" id="8C0G"/>
<dbReference type="PDBsum" id="8CB3"/>
<dbReference type="PDBsum" id="8YKK"/>
<dbReference type="BMRB" id="P0C6X7"/>
<dbReference type="EMDB" id="EMD-0520"/>
<dbReference type="EMDB" id="EMD-0521"/>
<dbReference type="SASBDB" id="P0C6X7"/>
<dbReference type="SMR" id="P0C6X7"/>
<dbReference type="BioGRID" id="4383938">
    <property type="interactions" value="1"/>
</dbReference>
<dbReference type="BioGRID" id="4383939">
    <property type="interactions" value="60"/>
</dbReference>
<dbReference type="BioGRID" id="4383940">
    <property type="interactions" value="50"/>
</dbReference>
<dbReference type="BioGRID" id="4383941">
    <property type="interactions" value="172"/>
</dbReference>
<dbReference type="BioGRID" id="4383942">
    <property type="interactions" value="33"/>
</dbReference>
<dbReference type="BioGRID" id="4383943">
    <property type="interactions" value="142"/>
</dbReference>
<dbReference type="BioGRID" id="4383944">
    <property type="interactions" value="17"/>
</dbReference>
<dbReference type="BioGRID" id="4383945">
    <property type="interactions" value="43"/>
</dbReference>
<dbReference type="BioGRID" id="4383946">
    <property type="interactions" value="52"/>
</dbReference>
<dbReference type="BioGRID" id="4383947">
    <property type="interactions" value="36"/>
</dbReference>
<dbReference type="BioGRID" id="4383948">
    <property type="interactions" value="20"/>
</dbReference>
<dbReference type="BioGRID" id="4383949">
    <property type="interactions" value="57"/>
</dbReference>
<dbReference type="BioGRID" id="4383950">
    <property type="interactions" value="99"/>
</dbReference>
<dbReference type="BioGRID" id="4383951">
    <property type="interactions" value="21"/>
</dbReference>
<dbReference type="BioGRID" id="4383952">
    <property type="interactions" value="13"/>
</dbReference>
<dbReference type="BioGRID" id="4383953">
    <property type="interactions" value="33"/>
</dbReference>
<dbReference type="ComplexPortal" id="CPX-5706">
    <property type="entry name" value="SARS-CoV main protease complex"/>
</dbReference>
<dbReference type="ComplexPortal" id="CPX-5707">
    <property type="entry name" value="SARS-CoV 3'-5' exoribonuclease proof-reading complex"/>
</dbReference>
<dbReference type="ComplexPortal" id="CPX-5709">
    <property type="entry name" value="SARS-CoV NSP10-NSP16 2'-O-methyltransferase complex"/>
</dbReference>
<dbReference type="ComplexPortal" id="CPX-5710">
    <property type="entry name" value="SARS-CoV primase complex"/>
</dbReference>
<dbReference type="ComplexPortal" id="CPX-5711">
    <property type="entry name" value="SARS-CoV NSP15 complex"/>
</dbReference>
<dbReference type="ComplexPortal" id="CPX-5717">
    <property type="entry name" value="SARS-CoV polymerase complex"/>
</dbReference>
<dbReference type="ComplexPortal" id="CPX-5719">
    <property type="entry name" value="SARS-CoV NSP9 complex"/>
</dbReference>
<dbReference type="ComplexPortal" id="CPX-5721">
    <property type="entry name" value="SARS-CoV NSP3-NSP4-NSP6 complex"/>
</dbReference>
<dbReference type="ComplexPortal" id="CPX-6462">
    <property type="entry name" value="SARS-CoV replication and transcription complex"/>
</dbReference>
<dbReference type="IntAct" id="P0C6X7">
    <property type="interactions" value="366"/>
</dbReference>
<dbReference type="MINT" id="P0C6X7"/>
<dbReference type="BindingDB" id="P0C6X7"/>
<dbReference type="ChEMBL" id="CHEMBL5118"/>
<dbReference type="DrugBank" id="DB07620">
    <property type="generic name" value="2-[(2,4-DICHLORO-5-METHYLPHENYL)SULFONYL]-1,3-DINITRO-5-(TRIFLUOROMETHYL)BENZENE"/>
</dbReference>
<dbReference type="DrugBank" id="DB08748">
    <property type="generic name" value="4-(Dimethylamino)benzoic acid"/>
</dbReference>
<dbReference type="DrugBank" id="DB08656">
    <property type="generic name" value="5-amino-2-methyl-N-[(1R)-1-naphthalen-1-ylethyl]benzamide"/>
</dbReference>
<dbReference type="DrugBank" id="DB07293">
    <property type="generic name" value="benzyl (2-oxopropyl)carbamate"/>
</dbReference>
<dbReference type="DrugBank" id="DB15686">
    <property type="generic name" value="GS-441524"/>
</dbReference>
<dbReference type="DrugBank" id="DB08732">
    <property type="generic name" value="NALPHA-[(BENZYLOXY)CARBONYL]-N-[(1R)-4-HYDROXY-1-METHYL-2-OXOBUTYL]-L-PHENYLALANINAMIDE"/>
</dbReference>
<dbReference type="DrugBank" id="DB14761">
    <property type="generic name" value="Remdesivir"/>
</dbReference>
<dbReference type="DrugBank" id="DB07743">
    <property type="generic name" value="S-[5-(TRIFLUOROMETHYL)-4H-1,2,4-TRIAZOL-3-YL] 5-(PHENYLETHYNYL)FURAN-2-CARBOTHIOATE"/>
</dbReference>
<dbReference type="DrugCentral" id="P0C6X7"/>
<dbReference type="MEROPS" id="C16.009"/>
<dbReference type="MEROPS" id="C30.005"/>
<dbReference type="GlyGen" id="P0C6X7">
    <property type="glycosylation" value="1 site"/>
</dbReference>
<dbReference type="DNASU" id="1489680"/>
<dbReference type="KEGG" id="vg:1489680"/>
<dbReference type="BRENDA" id="2.1.1.56">
    <property type="organism ID" value="7599"/>
</dbReference>
<dbReference type="BRENDA" id="2.7.7.48">
    <property type="organism ID" value="7599"/>
</dbReference>
<dbReference type="BRENDA" id="3.4.22.69">
    <property type="organism ID" value="7599"/>
</dbReference>
<dbReference type="BRENDA" id="3.4.22.B14">
    <property type="organism ID" value="7599"/>
</dbReference>
<dbReference type="BRENDA" id="3.4.22.B80">
    <property type="organism ID" value="7599"/>
</dbReference>
<dbReference type="BRENDA" id="3.6.4.12">
    <property type="organism ID" value="7599"/>
</dbReference>
<dbReference type="Reactome" id="R-HSA-9679504">
    <property type="pathway name" value="Translation of Replicase and Assembly of the Replication Transcription Complex"/>
</dbReference>
<dbReference type="Reactome" id="R-HSA-9682706">
    <property type="pathway name" value="Replication of the SARS-CoV-1 genome"/>
</dbReference>
<dbReference type="Reactome" id="R-HSA-9682708">
    <property type="pathway name" value="Transcription of SARS-CoV-1 sgRNAs"/>
</dbReference>
<dbReference type="Reactome" id="R-HSA-9683439">
    <property type="pathway name" value="Assembly of the SARS-CoV-1 Replication-Transcription Complex (RTC)"/>
</dbReference>
<dbReference type="Reactome" id="R-HSA-9684325">
    <property type="pathway name" value="Maturation of replicase proteins"/>
</dbReference>
<dbReference type="Reactome" id="R-HSA-9692916">
    <property type="pathway name" value="SARS-CoV-1 activates/modulates innate immune responses"/>
</dbReference>
<dbReference type="Reactome" id="R-HSA-9735869">
    <property type="pathway name" value="SARS-CoV-1 modulates host translation machinery"/>
</dbReference>
<dbReference type="SABIO-RK" id="P0C6X7"/>
<dbReference type="SIGNOR" id="P0C6X7"/>
<dbReference type="EvolutionaryTrace" id="P0C6X7"/>
<dbReference type="Proteomes" id="UP000000354">
    <property type="component" value="Segment"/>
</dbReference>
<dbReference type="Proteomes" id="UP000103670">
    <property type="component" value="Segment"/>
</dbReference>
<dbReference type="Proteomes" id="UP000109640">
    <property type="component" value="Segment"/>
</dbReference>
<dbReference type="Proteomes" id="UP000116947">
    <property type="component" value="Segment"/>
</dbReference>
<dbReference type="Proteomes" id="UP000121636">
    <property type="component" value="Segment"/>
</dbReference>
<dbReference type="Proteomes" id="UP000131569">
    <property type="component" value="Segment"/>
</dbReference>
<dbReference type="Proteomes" id="UP000131955">
    <property type="component" value="Segment"/>
</dbReference>
<dbReference type="Proteomes" id="UP000137377">
    <property type="component" value="Genome"/>
</dbReference>
<dbReference type="Proteomes" id="UP000138690">
    <property type="component" value="Segment"/>
</dbReference>
<dbReference type="Proteomes" id="UP000143093">
    <property type="component" value="Segment"/>
</dbReference>
<dbReference type="Proteomes" id="UP000145651">
    <property type="component" value="Segment"/>
</dbReference>
<dbReference type="Proteomes" id="UP000146108">
    <property type="component" value="Segment"/>
</dbReference>
<dbReference type="Proteomes" id="UP000146181">
    <property type="component" value="Segment"/>
</dbReference>
<dbReference type="Proteomes" id="UP000146296">
    <property type="component" value="Segment"/>
</dbReference>
<dbReference type="Proteomes" id="UP000148194">
    <property type="component" value="Segment"/>
</dbReference>
<dbReference type="Proteomes" id="UP000153467">
    <property type="component" value="Segment"/>
</dbReference>
<dbReference type="Proteomes" id="UP000160648">
    <property type="component" value="Segment"/>
</dbReference>
<dbReference type="Proteomes" id="UP000164441">
    <property type="component" value="Segment"/>
</dbReference>
<dbReference type="Proteomes" id="UP000172416">
    <property type="component" value="Segment"/>
</dbReference>
<dbReference type="Proteomes" id="UP000180358">
    <property type="component" value="Segment"/>
</dbReference>
<dbReference type="GO" id="GO:0062243">
    <property type="term" value="C:double membrane vesicle viral factory outer membrane"/>
    <property type="evidence" value="ECO:0000304"/>
    <property type="project" value="Reactome"/>
</dbReference>
<dbReference type="GO" id="GO:0044165">
    <property type="term" value="C:host cell endoplasmic reticulum"/>
    <property type="evidence" value="ECO:0007669"/>
    <property type="project" value="UniProtKB-SubCell"/>
</dbReference>
<dbReference type="GO" id="GO:0044172">
    <property type="term" value="C:host cell endoplasmic reticulum-Golgi intermediate compartment"/>
    <property type="evidence" value="ECO:0007669"/>
    <property type="project" value="UniProtKB-SubCell"/>
</dbReference>
<dbReference type="GO" id="GO:0044174">
    <property type="term" value="C:host cell endosome"/>
    <property type="evidence" value="ECO:0007669"/>
    <property type="project" value="UniProtKB-SubCell"/>
</dbReference>
<dbReference type="GO" id="GO:0044177">
    <property type="term" value="C:host cell Golgi apparatus"/>
    <property type="evidence" value="ECO:0007669"/>
    <property type="project" value="UniProtKB-SubCell"/>
</dbReference>
<dbReference type="GO" id="GO:0044220">
    <property type="term" value="C:host cell perinuclear region of cytoplasm"/>
    <property type="evidence" value="ECO:0007669"/>
    <property type="project" value="UniProtKB-SubCell"/>
</dbReference>
<dbReference type="GO" id="GO:0016020">
    <property type="term" value="C:membrane"/>
    <property type="evidence" value="ECO:0007669"/>
    <property type="project" value="UniProtKB-KW"/>
</dbReference>
<dbReference type="GO" id="GO:0000175">
    <property type="term" value="F:3'-5'-RNA exonuclease activity"/>
    <property type="evidence" value="ECO:0000314"/>
    <property type="project" value="CACAO"/>
</dbReference>
<dbReference type="GO" id="GO:0043139">
    <property type="term" value="F:5'-3' DNA helicase activity"/>
    <property type="evidence" value="ECO:0007669"/>
    <property type="project" value="TreeGrafter"/>
</dbReference>
<dbReference type="GO" id="GO:0032574">
    <property type="term" value="F:5'-3' RNA helicase activity"/>
    <property type="evidence" value="ECO:0000304"/>
    <property type="project" value="Reactome"/>
</dbReference>
<dbReference type="GO" id="GO:0005524">
    <property type="term" value="F:ATP binding"/>
    <property type="evidence" value="ECO:0007669"/>
    <property type="project" value="UniProtKB-KW"/>
</dbReference>
<dbReference type="GO" id="GO:0016887">
    <property type="term" value="F:ATP hydrolysis activity"/>
    <property type="evidence" value="ECO:0007669"/>
    <property type="project" value="RHEA"/>
</dbReference>
<dbReference type="GO" id="GO:0004843">
    <property type="term" value="F:cysteine-type deubiquitinase activity"/>
    <property type="evidence" value="ECO:0007669"/>
    <property type="project" value="UniProtKB-EC"/>
</dbReference>
<dbReference type="GO" id="GO:0004197">
    <property type="term" value="F:cysteine-type endopeptidase activity"/>
    <property type="evidence" value="ECO:0000304"/>
    <property type="project" value="Reactome"/>
</dbReference>
<dbReference type="GO" id="GO:0004519">
    <property type="term" value="F:endonuclease activity"/>
    <property type="evidence" value="ECO:0007669"/>
    <property type="project" value="UniProtKB-KW"/>
</dbReference>
<dbReference type="GO" id="GO:0002151">
    <property type="term" value="F:G-quadruplex RNA binding"/>
    <property type="evidence" value="ECO:0007669"/>
    <property type="project" value="InterPro"/>
</dbReference>
<dbReference type="GO" id="GO:0042802">
    <property type="term" value="F:identical protein binding"/>
    <property type="evidence" value="ECO:0000353"/>
    <property type="project" value="IntAct"/>
</dbReference>
<dbReference type="GO" id="GO:1990380">
    <property type="term" value="F:K48-linked deubiquitinase activity"/>
    <property type="evidence" value="ECO:0000269"/>
    <property type="project" value="Reactome"/>
</dbReference>
<dbReference type="GO" id="GO:0061578">
    <property type="term" value="F:K63-linked deubiquitinase activity"/>
    <property type="evidence" value="ECO:0000269"/>
    <property type="project" value="Reactome"/>
</dbReference>
<dbReference type="GO" id="GO:0016829">
    <property type="term" value="F:lyase activity"/>
    <property type="evidence" value="ECO:0007669"/>
    <property type="project" value="UniProtKB-KW"/>
</dbReference>
<dbReference type="GO" id="GO:0004483">
    <property type="term" value="F:mRNA (nucleoside-2'-O-)-methyltransferase activity"/>
    <property type="evidence" value="ECO:0000304"/>
    <property type="project" value="Reactome"/>
</dbReference>
<dbReference type="GO" id="GO:0004482">
    <property type="term" value="F:mRNA 5'-cap (guanine-N7-)-methyltransferase activity"/>
    <property type="evidence" value="ECO:0000304"/>
    <property type="project" value="Reactome"/>
</dbReference>
<dbReference type="GO" id="GO:0008242">
    <property type="term" value="F:omega peptidase activity"/>
    <property type="evidence" value="ECO:0007669"/>
    <property type="project" value="InterPro"/>
</dbReference>
<dbReference type="GO" id="GO:0003968">
    <property type="term" value="F:RNA-directed RNA polymerase activity"/>
    <property type="evidence" value="ECO:0000304"/>
    <property type="project" value="Reactome"/>
</dbReference>
<dbReference type="GO" id="GO:0003727">
    <property type="term" value="F:single-stranded RNA binding"/>
    <property type="evidence" value="ECO:0007669"/>
    <property type="project" value="InterPro"/>
</dbReference>
<dbReference type="GO" id="GO:0008270">
    <property type="term" value="F:zinc ion binding"/>
    <property type="evidence" value="ECO:0007669"/>
    <property type="project" value="UniProtKB-KW"/>
</dbReference>
<dbReference type="GO" id="GO:0006351">
    <property type="term" value="P:DNA-templated transcription"/>
    <property type="evidence" value="ECO:0007669"/>
    <property type="project" value="InterPro"/>
</dbReference>
<dbReference type="GO" id="GO:0006508">
    <property type="term" value="P:proteolysis"/>
    <property type="evidence" value="ECO:0007669"/>
    <property type="project" value="UniProtKB-KW"/>
</dbReference>
<dbReference type="GO" id="GO:0010506">
    <property type="term" value="P:regulation of autophagy"/>
    <property type="evidence" value="ECO:0007669"/>
    <property type="project" value="InterPro"/>
</dbReference>
<dbReference type="GO" id="GO:0039520">
    <property type="term" value="P:symbiont-mediated activation of host autophagy"/>
    <property type="evidence" value="ECO:0007669"/>
    <property type="project" value="UniProtKB-KW"/>
</dbReference>
<dbReference type="GO" id="GO:0039595">
    <property type="term" value="P:symbiont-mediated degradation of host mRNA"/>
    <property type="evidence" value="ECO:0007669"/>
    <property type="project" value="UniProtKB-KW"/>
</dbReference>
<dbReference type="GO" id="GO:0039648">
    <property type="term" value="P:symbiont-mediated perturbation of host ubiquitin-like protein modification"/>
    <property type="evidence" value="ECO:0000304"/>
    <property type="project" value="Reactome"/>
</dbReference>
<dbReference type="GO" id="GO:0039657">
    <property type="term" value="P:symbiont-mediated suppression of host gene expression"/>
    <property type="evidence" value="ECO:0007669"/>
    <property type="project" value="UniProtKB-KW"/>
</dbReference>
<dbReference type="GO" id="GO:0039579">
    <property type="term" value="P:symbiont-mediated suppression of host ISG15-protein conjugation"/>
    <property type="evidence" value="ECO:0007669"/>
    <property type="project" value="UniProtKB-KW"/>
</dbReference>
<dbReference type="GO" id="GO:0085034">
    <property type="term" value="P:symbiont-mediated suppression of host NF-kappaB cascade"/>
    <property type="evidence" value="ECO:0007669"/>
    <property type="project" value="UniProtKB-KW"/>
</dbReference>
<dbReference type="GO" id="GO:0039502">
    <property type="term" value="P:symbiont-mediated suppression of host type I interferon-mediated signaling pathway"/>
    <property type="evidence" value="ECO:0007669"/>
    <property type="project" value="UniProtKB-KW"/>
</dbReference>
<dbReference type="GO" id="GO:0019082">
    <property type="term" value="P:viral protein processing"/>
    <property type="evidence" value="ECO:0007669"/>
    <property type="project" value="InterPro"/>
</dbReference>
<dbReference type="GO" id="GO:0039694">
    <property type="term" value="P:viral RNA genome replication"/>
    <property type="evidence" value="ECO:0007669"/>
    <property type="project" value="InterPro"/>
</dbReference>
<dbReference type="GO" id="GO:0019083">
    <property type="term" value="P:viral transcription"/>
    <property type="evidence" value="ECO:0000315"/>
    <property type="project" value="CACAO"/>
</dbReference>
<dbReference type="GO" id="GO:0075523">
    <property type="term" value="P:viral translational frameshifting"/>
    <property type="evidence" value="ECO:0007669"/>
    <property type="project" value="UniProtKB-KW"/>
</dbReference>
<dbReference type="CDD" id="cd21409">
    <property type="entry name" value="1B_cv_Nsp13-like"/>
    <property type="match status" value="1"/>
</dbReference>
<dbReference type="CDD" id="cd21560">
    <property type="entry name" value="betaCoV-Nsp6"/>
    <property type="match status" value="1"/>
</dbReference>
<dbReference type="CDD" id="cd21722">
    <property type="entry name" value="betaCoV_Nsp13-helicase"/>
    <property type="match status" value="1"/>
</dbReference>
<dbReference type="CDD" id="cd21659">
    <property type="entry name" value="betaCoV_Nsp14"/>
    <property type="match status" value="1"/>
</dbReference>
<dbReference type="CDD" id="cd21516">
    <property type="entry name" value="betaCoV_Nsp2_SARS-like"/>
    <property type="match status" value="1"/>
</dbReference>
<dbReference type="CDD" id="cd21666">
    <property type="entry name" value="betaCoV_Nsp5_Mpro"/>
    <property type="match status" value="1"/>
</dbReference>
<dbReference type="CDD" id="cd21827">
    <property type="entry name" value="betaCoV_Nsp7"/>
    <property type="match status" value="1"/>
</dbReference>
<dbReference type="CDD" id="cd21831">
    <property type="entry name" value="betaCoV_Nsp8"/>
    <property type="match status" value="1"/>
</dbReference>
<dbReference type="CDD" id="cd21898">
    <property type="entry name" value="betaCoV_Nsp9"/>
    <property type="match status" value="1"/>
</dbReference>
<dbReference type="CDD" id="cd21732">
    <property type="entry name" value="betaCoV_PLPro"/>
    <property type="match status" value="1"/>
</dbReference>
<dbReference type="CDD" id="cd23528">
    <property type="entry name" value="capping_2-OMTase_betaCoV_Nsp16"/>
    <property type="match status" value="1"/>
</dbReference>
<dbReference type="CDD" id="cd21872">
    <property type="entry name" value="CoV_Nsp10"/>
    <property type="match status" value="1"/>
</dbReference>
<dbReference type="CDD" id="cd21473">
    <property type="entry name" value="cv_Nsp4_TM"/>
    <property type="match status" value="1"/>
</dbReference>
<dbReference type="CDD" id="cd21167">
    <property type="entry name" value="M_alpha_beta_cv_Nsp15-like"/>
    <property type="match status" value="1"/>
</dbReference>
<dbReference type="CDD" id="cd21563">
    <property type="entry name" value="Macro_cv_SUD-M_Nsp3-like"/>
    <property type="match status" value="1"/>
</dbReference>
<dbReference type="CDD" id="cd21562">
    <property type="entry name" value="Macro_cv_SUD-N_Nsp3-like"/>
    <property type="match status" value="1"/>
</dbReference>
<dbReference type="CDD" id="cd21557">
    <property type="entry name" value="Macro_X_Nsp3-like"/>
    <property type="match status" value="1"/>
</dbReference>
<dbReference type="CDD" id="cd21161">
    <property type="entry name" value="NendoU_cv_Nsp15-like"/>
    <property type="match status" value="1"/>
</dbReference>
<dbReference type="CDD" id="cd21171">
    <property type="entry name" value="NTD_alpha_betaCoV_Nsp15-like"/>
    <property type="match status" value="1"/>
</dbReference>
<dbReference type="CDD" id="cd22662">
    <property type="entry name" value="SARS-CoV-like_Nsp1_C"/>
    <property type="match status" value="1"/>
</dbReference>
<dbReference type="CDD" id="cd21796">
    <property type="entry name" value="SARS-CoV-like_Nsp1_N"/>
    <property type="match status" value="1"/>
</dbReference>
<dbReference type="CDD" id="cd21814">
    <property type="entry name" value="SARS-CoV-like_Nsp3_betaSM"/>
    <property type="match status" value="1"/>
</dbReference>
<dbReference type="CDD" id="cd21822">
    <property type="entry name" value="SARS-CoV-like_Nsp3_NAB"/>
    <property type="match status" value="1"/>
</dbReference>
<dbReference type="CDD" id="cd21591">
    <property type="entry name" value="SARS-CoV-like_RdRp"/>
    <property type="match status" value="1"/>
</dbReference>
<dbReference type="CDD" id="cd21689">
    <property type="entry name" value="stalk_CoV_Nsp13-like"/>
    <property type="match status" value="1"/>
</dbReference>
<dbReference type="CDD" id="cd21525">
    <property type="entry name" value="SUD_C_SARS-CoV_Nsp3"/>
    <property type="match status" value="1"/>
</dbReference>
<dbReference type="CDD" id="cd21717">
    <property type="entry name" value="TM_Y_SARS-CoV-like_Nsp3_C"/>
    <property type="match status" value="1"/>
</dbReference>
<dbReference type="CDD" id="cd21467">
    <property type="entry name" value="Ubl1_cv_Nsp3_N-like"/>
    <property type="match status" value="1"/>
</dbReference>
<dbReference type="CDD" id="cd21401">
    <property type="entry name" value="ZBD_cv_Nsp13-like"/>
    <property type="match status" value="1"/>
</dbReference>
<dbReference type="DisProt" id="DP02924"/>
<dbReference type="FunFam" id="1.10.8.370:FF:000001">
    <property type="entry name" value="Orf1a polyprotein"/>
    <property type="match status" value="1"/>
</dbReference>
<dbReference type="FunFam" id="2.40.10.250:FF:000001">
    <property type="entry name" value="Orf1a polyprotein"/>
    <property type="match status" value="1"/>
</dbReference>
<dbReference type="FunFam" id="2.60.120.1680:FF:000001">
    <property type="entry name" value="Orf1a polyprotein"/>
    <property type="match status" value="1"/>
</dbReference>
<dbReference type="FunFam" id="3.40.220.10:FF:000008">
    <property type="entry name" value="Orf1a polyprotein"/>
    <property type="match status" value="1"/>
</dbReference>
<dbReference type="FunFam" id="3.40.220.30:FF:000001">
    <property type="entry name" value="Orf1a polyprotein"/>
    <property type="match status" value="1"/>
</dbReference>
<dbReference type="FunFam" id="3.30.160.820:FF:000001">
    <property type="entry name" value="Orf1ab polyprotein"/>
    <property type="match status" value="1"/>
</dbReference>
<dbReference type="FunFam" id="3.40.50.150:FF:000162">
    <property type="entry name" value="Orf1ab polyprotein"/>
    <property type="match status" value="1"/>
</dbReference>
<dbReference type="FunFam" id="3.40.50.300:FF:001105">
    <property type="entry name" value="Orf1ab polyprotein"/>
    <property type="match status" value="1"/>
</dbReference>
<dbReference type="FunFam" id="3.40.50.300:FF:001139">
    <property type="entry name" value="Orf1ab polyprotein"/>
    <property type="match status" value="1"/>
</dbReference>
<dbReference type="FunFam" id="1.10.150.420:FF:000001">
    <property type="entry name" value="Replicase polyprotein"/>
    <property type="match status" value="1"/>
</dbReference>
<dbReference type="FunFam" id="1.10.1840.10:FF:000001">
    <property type="entry name" value="Replicase polyprotein 1a"/>
    <property type="match status" value="1"/>
</dbReference>
<dbReference type="FunFam" id="1.10.8.1190:FF:000001">
    <property type="entry name" value="Replicase polyprotein 1a"/>
    <property type="match status" value="1"/>
</dbReference>
<dbReference type="FunFam" id="2.40.10.10:FF:000033">
    <property type="entry name" value="Replicase polyprotein 1a"/>
    <property type="match status" value="1"/>
</dbReference>
<dbReference type="FunFam" id="3.40.220.20:FF:000001">
    <property type="entry name" value="Replicase polyprotein 1a"/>
    <property type="match status" value="1"/>
</dbReference>
<dbReference type="FunFam" id="3.40.50.11580:FF:000001">
    <property type="entry name" value="Replicase polyprotein 1ab"/>
    <property type="match status" value="1"/>
</dbReference>
<dbReference type="Gene3D" id="1.10.8.1190">
    <property type="match status" value="1"/>
</dbReference>
<dbReference type="Gene3D" id="2.60.120.1680">
    <property type="match status" value="1"/>
</dbReference>
<dbReference type="Gene3D" id="3.10.20.350">
    <property type="match status" value="1"/>
</dbReference>
<dbReference type="Gene3D" id="3.10.20.540">
    <property type="match status" value="1"/>
</dbReference>
<dbReference type="Gene3D" id="3.40.50.11580">
    <property type="match status" value="1"/>
</dbReference>
<dbReference type="Gene3D" id="6.10.140.2090">
    <property type="match status" value="1"/>
</dbReference>
<dbReference type="Gene3D" id="1.10.150.420">
    <property type="entry name" value="Coronavirus nonstructural protein 4 C-terminus"/>
    <property type="match status" value="1"/>
</dbReference>
<dbReference type="Gene3D" id="3.40.30.150">
    <property type="entry name" value="Coronavirus polyprotein cleavage domain"/>
    <property type="match status" value="1"/>
</dbReference>
<dbReference type="Gene3D" id="3.40.220.10">
    <property type="entry name" value="Leucine Aminopeptidase, subunit E, domain 1"/>
    <property type="match status" value="1"/>
</dbReference>
<dbReference type="Gene3D" id="1.10.1840.10">
    <property type="entry name" value="main proteinase (3clpro) structure, domain 3"/>
    <property type="match status" value="1"/>
</dbReference>
<dbReference type="Gene3D" id="3.30.160.820">
    <property type="entry name" value="Nsp15 N-terminal domain-like"/>
    <property type="match status" value="1"/>
</dbReference>
<dbReference type="Gene3D" id="3.40.220.20">
    <property type="entry name" value="Nsp3, SUD-M subdomain"/>
    <property type="match status" value="1"/>
</dbReference>
<dbReference type="Gene3D" id="3.40.220.30">
    <property type="entry name" value="Nsp3, SUD-N subdomain"/>
    <property type="match status" value="1"/>
</dbReference>
<dbReference type="Gene3D" id="1.10.8.370">
    <property type="entry name" value="nsp7 replicase"/>
    <property type="match status" value="1"/>
</dbReference>
<dbReference type="Gene3D" id="3.30.70.3540">
    <property type="entry name" value="Nsp8 replicase, head domain"/>
    <property type="match status" value="1"/>
</dbReference>
<dbReference type="Gene3D" id="3.40.50.300">
    <property type="entry name" value="P-loop containing nucleotide triphosphate hydrolases"/>
    <property type="match status" value="2"/>
</dbReference>
<dbReference type="Gene3D" id="2.40.10.250">
    <property type="entry name" value="Replicase NSP9"/>
    <property type="match status" value="1"/>
</dbReference>
<dbReference type="Gene3D" id="3.40.50.11020">
    <property type="entry name" value="Replicase polyprotein, nucleic acid-binding domain"/>
    <property type="match status" value="1"/>
</dbReference>
<dbReference type="Gene3D" id="2.40.10.10">
    <property type="entry name" value="Trypsin-like serine proteases"/>
    <property type="match status" value="2"/>
</dbReference>
<dbReference type="Gene3D" id="3.40.50.150">
    <property type="entry name" value="Vaccinia Virus protein VP39"/>
    <property type="match status" value="1"/>
</dbReference>
<dbReference type="InterPro" id="IPR027351">
    <property type="entry name" value="(+)RNA_virus_helicase_core_dom"/>
</dbReference>
<dbReference type="InterPro" id="IPR046443">
    <property type="entry name" value="a/bCoV_NSP1_glob"/>
</dbReference>
<dbReference type="InterPro" id="IPR046440">
    <property type="entry name" value="AV_NSP11N_COV_NSP15M"/>
</dbReference>
<dbReference type="InterPro" id="IPR046442">
    <property type="entry name" value="bCoV_NSP1_C"/>
</dbReference>
<dbReference type="InterPro" id="IPR050534">
    <property type="entry name" value="Coronavir_polyprotein_1ab"/>
</dbReference>
<dbReference type="InterPro" id="IPR043608">
    <property type="entry name" value="CoV_NSP15_M"/>
</dbReference>
<dbReference type="InterPro" id="IPR043606">
    <property type="entry name" value="CoV_NSP15_N"/>
</dbReference>
<dbReference type="InterPro" id="IPR043613">
    <property type="entry name" value="CoV_NSP2_C"/>
</dbReference>
<dbReference type="InterPro" id="IPR047573">
    <property type="entry name" value="CoV_NSP2_M"/>
</dbReference>
<dbReference type="InterPro" id="IPR049894">
    <property type="entry name" value="COV_NSP3_3ECTO"/>
</dbReference>
<dbReference type="InterPro" id="IPR043611">
    <property type="entry name" value="CoV_NSP3_C"/>
</dbReference>
<dbReference type="InterPro" id="IPR047566">
    <property type="entry name" value="CoV_NSP3_Y"/>
</dbReference>
<dbReference type="InterPro" id="IPR032505">
    <property type="entry name" value="CoV_NSP4_C"/>
</dbReference>
<dbReference type="InterPro" id="IPR043612">
    <property type="entry name" value="CoV_NSP4_N"/>
</dbReference>
<dbReference type="InterPro" id="IPR043502">
    <property type="entry name" value="DNA/RNA_pol_sf"/>
</dbReference>
<dbReference type="InterPro" id="IPR041679">
    <property type="entry name" value="DNA2/NAM7-like_C"/>
</dbReference>
<dbReference type="InterPro" id="IPR022733">
    <property type="entry name" value="DPUP_SUD_C_bCoV"/>
</dbReference>
<dbReference type="InterPro" id="IPR037227">
    <property type="entry name" value="EndoU-like"/>
</dbReference>
<dbReference type="InterPro" id="IPR002589">
    <property type="entry name" value="Macro_dom"/>
</dbReference>
<dbReference type="InterPro" id="IPR043472">
    <property type="entry name" value="Macro_dom-like"/>
</dbReference>
<dbReference type="InterPro" id="IPR044371">
    <property type="entry name" value="Macro_X_NSP3-like"/>
</dbReference>
<dbReference type="InterPro" id="IPR046435">
    <property type="entry name" value="N7_MTase_CoV"/>
</dbReference>
<dbReference type="InterPro" id="IPR043609">
    <property type="entry name" value="NendoU_nidovirus"/>
</dbReference>
<dbReference type="InterPro" id="IPR044863">
    <property type="entry name" value="NIRAN"/>
</dbReference>
<dbReference type="InterPro" id="IPR046438">
    <property type="entry name" value="NIV_2_O_MTASE"/>
</dbReference>
<dbReference type="InterPro" id="IPR046436">
    <property type="entry name" value="NIV_EXON"/>
</dbReference>
<dbReference type="InterPro" id="IPR036333">
    <property type="entry name" value="NSP10_sf_CoV"/>
</dbReference>
<dbReference type="InterPro" id="IPR047570">
    <property type="entry name" value="NSP12_IF_CoV"/>
</dbReference>
<dbReference type="InterPro" id="IPR044343">
    <property type="entry name" value="NSP13_1B_dom_CoV"/>
</dbReference>
<dbReference type="InterPro" id="IPR048673">
    <property type="entry name" value="NSP13_stalk_CoV"/>
</dbReference>
<dbReference type="InterPro" id="IPR048672">
    <property type="entry name" value="NSP13_ZBD_CoV"/>
</dbReference>
<dbReference type="InterPro" id="IPR027352">
    <property type="entry name" value="NSP13_ZBD_CoV-like"/>
</dbReference>
<dbReference type="InterPro" id="IPR044315">
    <property type="entry name" value="NSP14_betaCoV"/>
</dbReference>
<dbReference type="InterPro" id="IPR009466">
    <property type="entry name" value="NSP14_CoV"/>
</dbReference>
<dbReference type="InterPro" id="IPR044330">
    <property type="entry name" value="NSP15_alpha_betaCoV_N"/>
</dbReference>
<dbReference type="InterPro" id="IPR044322">
    <property type="entry name" value="NSP15_M_alpha_beta_CoV"/>
</dbReference>
<dbReference type="InterPro" id="IPR043174">
    <property type="entry name" value="NSP15_middle_sf"/>
</dbReference>
<dbReference type="InterPro" id="IPR042515">
    <property type="entry name" value="NSP15_N_CoV"/>
</dbReference>
<dbReference type="InterPro" id="IPR044401">
    <property type="entry name" value="NSP15_NendoU_CoV"/>
</dbReference>
<dbReference type="InterPro" id="IPR009461">
    <property type="entry name" value="NSP16_CoV-like"/>
</dbReference>
<dbReference type="InterPro" id="IPR021590">
    <property type="entry name" value="NSP1_glob_bCoV"/>
</dbReference>
<dbReference type="InterPro" id="IPR038030">
    <property type="entry name" value="NSP1_glob_sf_bCoV"/>
</dbReference>
<dbReference type="InterPro" id="IPR043615">
    <property type="entry name" value="NSP2_N_CoV"/>
</dbReference>
<dbReference type="InterPro" id="IPR044389">
    <property type="entry name" value="NSP2_SARS-CoV-like"/>
</dbReference>
<dbReference type="InterPro" id="IPR024375">
    <property type="entry name" value="NSP3_bCoV"/>
</dbReference>
<dbReference type="InterPro" id="IPR047567">
    <property type="entry name" value="NSP3_G2M_bCoV"/>
</dbReference>
<dbReference type="InterPro" id="IPR024358">
    <property type="entry name" value="NSP3_N_bCoV"/>
</dbReference>
<dbReference type="InterPro" id="IPR032592">
    <property type="entry name" value="NSP3_NAB_bCoV"/>
</dbReference>
<dbReference type="InterPro" id="IPR042570">
    <property type="entry name" value="NSP3_NAB_bCoV_sf"/>
</dbReference>
<dbReference type="InterPro" id="IPR038166">
    <property type="entry name" value="NSP3_PL2pro_sf_bCoV"/>
</dbReference>
<dbReference type="InterPro" id="IPR038400">
    <property type="entry name" value="NSP3_SUD-M_sf_bCoV"/>
</dbReference>
<dbReference type="InterPro" id="IPR044864">
    <property type="entry name" value="NSP3_SUD-N_bCoV"/>
</dbReference>
<dbReference type="InterPro" id="IPR044374">
    <property type="entry name" value="NSP3_SUD-N_SARS-CoV"/>
</dbReference>
<dbReference type="InterPro" id="IPR043478">
    <property type="entry name" value="NSP3_SUD-N_sf_bCoV"/>
</dbReference>
<dbReference type="InterPro" id="IPR044357">
    <property type="entry name" value="NSP3_Ubl1_dom_CoV"/>
</dbReference>
<dbReference type="InterPro" id="IPR044353">
    <property type="entry name" value="Nsp3_Ubl2_dom_CoV"/>
</dbReference>
<dbReference type="InterPro" id="IPR038083">
    <property type="entry name" value="NSP3A-like"/>
</dbReference>
<dbReference type="InterPro" id="IPR038123">
    <property type="entry name" value="NSP4_C_sf_CoV"/>
</dbReference>
<dbReference type="InterPro" id="IPR044367">
    <property type="entry name" value="NSP6_betaCoV"/>
</dbReference>
<dbReference type="InterPro" id="IPR043610">
    <property type="entry name" value="NSP6_CoV"/>
</dbReference>
<dbReference type="InterPro" id="IPR014828">
    <property type="entry name" value="NSP7_CoV"/>
</dbReference>
<dbReference type="InterPro" id="IPR037204">
    <property type="entry name" value="NSP7_sf_CoV"/>
</dbReference>
<dbReference type="InterPro" id="IPR014829">
    <property type="entry name" value="NSP8_CoV"/>
</dbReference>
<dbReference type="InterPro" id="IPR037230">
    <property type="entry name" value="NSP8_sf_CoV"/>
</dbReference>
<dbReference type="InterPro" id="IPR014822">
    <property type="entry name" value="NSP9_CoV"/>
</dbReference>
<dbReference type="InterPro" id="IPR036499">
    <property type="entry name" value="NSP9_sf_CoV"/>
</dbReference>
<dbReference type="InterPro" id="IPR027417">
    <property type="entry name" value="P-loop_NTPase"/>
</dbReference>
<dbReference type="InterPro" id="IPR013016">
    <property type="entry name" value="Peptidase_C16_CoV"/>
</dbReference>
<dbReference type="InterPro" id="IPR008740">
    <property type="entry name" value="Peptidase_C30_CoV"/>
</dbReference>
<dbReference type="InterPro" id="IPR043477">
    <property type="entry name" value="Peptidase_C30_dom3_CoV"/>
</dbReference>
<dbReference type="InterPro" id="IPR009003">
    <property type="entry name" value="Peptidase_S1_PA"/>
</dbReference>
<dbReference type="InterPro" id="IPR043504">
    <property type="entry name" value="Peptidase_S1_PA_chymotrypsin"/>
</dbReference>
<dbReference type="InterPro" id="IPR043177">
    <property type="entry name" value="PLpro_N_sf_CoV"/>
</dbReference>
<dbReference type="InterPro" id="IPR043503">
    <property type="entry name" value="PLpro_palm_finger_dom_CoV"/>
</dbReference>
<dbReference type="InterPro" id="IPR043178">
    <property type="entry name" value="PLpro_thumb_sf_CoV"/>
</dbReference>
<dbReference type="InterPro" id="IPR046441">
    <property type="entry name" value="RdRp_CoV"/>
</dbReference>
<dbReference type="InterPro" id="IPR009469">
    <property type="entry name" value="RdRp_N_CoV"/>
</dbReference>
<dbReference type="InterPro" id="IPR044351">
    <property type="entry name" value="RdRp_SARS-CoV-like"/>
</dbReference>
<dbReference type="InterPro" id="IPR001205">
    <property type="entry name" value="RNA-dir_pol_C"/>
</dbReference>
<dbReference type="InterPro" id="IPR007094">
    <property type="entry name" value="RNA-dir_pol_PSvirus"/>
</dbReference>
<dbReference type="InterPro" id="IPR018995">
    <property type="entry name" value="RNA_synth_NSP10_CoV"/>
</dbReference>
<dbReference type="InterPro" id="IPR029063">
    <property type="entry name" value="SAM-dependent_MTases_sf"/>
</dbReference>
<dbReference type="PANTHER" id="PTHR43788">
    <property type="entry name" value="DNA2/NAM7 HELICASE FAMILY MEMBER"/>
    <property type="match status" value="1"/>
</dbReference>
<dbReference type="PANTHER" id="PTHR43788:SF16">
    <property type="entry name" value="HELICASE WITH ZINC FINGER 2"/>
    <property type="match status" value="1"/>
</dbReference>
<dbReference type="Pfam" id="PF13087">
    <property type="entry name" value="AAA_12"/>
    <property type="match status" value="1"/>
</dbReference>
<dbReference type="Pfam" id="PF16251">
    <property type="entry name" value="bCoV_NAB"/>
    <property type="match status" value="1"/>
</dbReference>
<dbReference type="Pfam" id="PF11501">
    <property type="entry name" value="bCoV_NSP1"/>
    <property type="match status" value="1"/>
</dbReference>
<dbReference type="Pfam" id="PF12379">
    <property type="entry name" value="bCoV_NSP3_N"/>
    <property type="match status" value="1"/>
</dbReference>
<dbReference type="Pfam" id="PF12124">
    <property type="entry name" value="bCoV_SUD_C"/>
    <property type="match status" value="1"/>
</dbReference>
<dbReference type="Pfam" id="PF11633">
    <property type="entry name" value="bCoV_SUD_M"/>
    <property type="match status" value="1"/>
</dbReference>
<dbReference type="Pfam" id="PF06471">
    <property type="entry name" value="CoV_ExoN"/>
    <property type="match status" value="1"/>
</dbReference>
<dbReference type="Pfam" id="PF06460">
    <property type="entry name" value="CoV_Methyltr_2"/>
    <property type="match status" value="1"/>
</dbReference>
<dbReference type="Pfam" id="PF09401">
    <property type="entry name" value="CoV_NSP10"/>
    <property type="match status" value="1"/>
</dbReference>
<dbReference type="Pfam" id="PF20631">
    <property type="entry name" value="CoV_NSP13_1B"/>
    <property type="match status" value="1"/>
</dbReference>
<dbReference type="Pfam" id="PF20633">
    <property type="entry name" value="CoV_NSP13_stalk"/>
    <property type="match status" value="1"/>
</dbReference>
<dbReference type="Pfam" id="PF20632">
    <property type="entry name" value="CoV_NSP13_ZBD"/>
    <property type="match status" value="1"/>
</dbReference>
<dbReference type="Pfam" id="PF19215">
    <property type="entry name" value="CoV_NSP15_C"/>
    <property type="match status" value="1"/>
</dbReference>
<dbReference type="Pfam" id="PF19216">
    <property type="entry name" value="CoV_NSP15_M"/>
    <property type="match status" value="1"/>
</dbReference>
<dbReference type="Pfam" id="PF19219">
    <property type="entry name" value="CoV_NSP15_N"/>
    <property type="match status" value="1"/>
</dbReference>
<dbReference type="Pfam" id="PF19212">
    <property type="entry name" value="CoV_NSP2_C"/>
    <property type="match status" value="1"/>
</dbReference>
<dbReference type="Pfam" id="PF19211">
    <property type="entry name" value="CoV_NSP2_N"/>
    <property type="match status" value="1"/>
</dbReference>
<dbReference type="Pfam" id="PF19218">
    <property type="entry name" value="CoV_NSP3_C"/>
    <property type="match status" value="1"/>
</dbReference>
<dbReference type="Pfam" id="PF16348">
    <property type="entry name" value="CoV_NSP4_C"/>
    <property type="match status" value="1"/>
</dbReference>
<dbReference type="Pfam" id="PF19217">
    <property type="entry name" value="CoV_NSP4_N"/>
    <property type="match status" value="1"/>
</dbReference>
<dbReference type="Pfam" id="PF19213">
    <property type="entry name" value="CoV_NSP6"/>
    <property type="match status" value="1"/>
</dbReference>
<dbReference type="Pfam" id="PF08716">
    <property type="entry name" value="CoV_NSP7"/>
    <property type="match status" value="1"/>
</dbReference>
<dbReference type="Pfam" id="PF08717">
    <property type="entry name" value="CoV_NSP8"/>
    <property type="match status" value="1"/>
</dbReference>
<dbReference type="Pfam" id="PF08710">
    <property type="entry name" value="CoV_NSP9"/>
    <property type="match status" value="1"/>
</dbReference>
<dbReference type="Pfam" id="PF08715">
    <property type="entry name" value="CoV_peptidase"/>
    <property type="match status" value="1"/>
</dbReference>
<dbReference type="Pfam" id="PF06478">
    <property type="entry name" value="CoV_RPol_N"/>
    <property type="match status" value="1"/>
</dbReference>
<dbReference type="Pfam" id="PF01661">
    <property type="entry name" value="Macro"/>
    <property type="match status" value="1"/>
</dbReference>
<dbReference type="Pfam" id="PF05409">
    <property type="entry name" value="Peptidase_C30"/>
    <property type="match status" value="1"/>
</dbReference>
<dbReference type="Pfam" id="PF00680">
    <property type="entry name" value="RdRP_1"/>
    <property type="match status" value="1"/>
</dbReference>
<dbReference type="SMART" id="SM00506">
    <property type="entry name" value="A1pp"/>
    <property type="match status" value="1"/>
</dbReference>
<dbReference type="SUPFAM" id="SSF144246">
    <property type="entry name" value="Coronavirus NSP10-like"/>
    <property type="match status" value="1"/>
</dbReference>
<dbReference type="SUPFAM" id="SSF140367">
    <property type="entry name" value="Coronavirus NSP7-like"/>
    <property type="match status" value="1"/>
</dbReference>
<dbReference type="SUPFAM" id="SSF143076">
    <property type="entry name" value="Coronavirus NSP8-like"/>
    <property type="match status" value="1"/>
</dbReference>
<dbReference type="SUPFAM" id="SSF56672">
    <property type="entry name" value="DNA/RNA polymerases"/>
    <property type="match status" value="1"/>
</dbReference>
<dbReference type="SUPFAM" id="SSF142877">
    <property type="entry name" value="EndoU-like"/>
    <property type="match status" value="1"/>
</dbReference>
<dbReference type="SUPFAM" id="SSF52949">
    <property type="entry name" value="Macro domain-like"/>
    <property type="match status" value="1"/>
</dbReference>
<dbReference type="SUPFAM" id="SSF159936">
    <property type="entry name" value="NSP3A-like"/>
    <property type="match status" value="1"/>
</dbReference>
<dbReference type="SUPFAM" id="SSF52540">
    <property type="entry name" value="P-loop containing nucleoside triphosphate hydrolases"/>
    <property type="match status" value="1"/>
</dbReference>
<dbReference type="SUPFAM" id="SSF101816">
    <property type="entry name" value="Replicase NSP9"/>
    <property type="match status" value="1"/>
</dbReference>
<dbReference type="SUPFAM" id="SSF53335">
    <property type="entry name" value="S-adenosyl-L-methionine-dependent methyltransferases"/>
    <property type="match status" value="1"/>
</dbReference>
<dbReference type="SUPFAM" id="SSF160099">
    <property type="entry name" value="SARS Nsp1-like"/>
    <property type="match status" value="1"/>
</dbReference>
<dbReference type="SUPFAM" id="SSF50494">
    <property type="entry name" value="Trypsin-like serine proteases"/>
    <property type="match status" value="1"/>
</dbReference>
<dbReference type="PROSITE" id="PS51961">
    <property type="entry name" value="AV_NSP11N_COV_NSP15M"/>
    <property type="match status" value="1"/>
</dbReference>
<dbReference type="PROSITE" id="PS51963">
    <property type="entry name" value="BCOV_NSP1_C"/>
    <property type="match status" value="1"/>
</dbReference>
<dbReference type="PROSITE" id="PS51942">
    <property type="entry name" value="BCOV_NSP3C_C"/>
    <property type="match status" value="1"/>
</dbReference>
<dbReference type="PROSITE" id="PS51941">
    <property type="entry name" value="BCOV_NSP3C_M"/>
    <property type="match status" value="1"/>
</dbReference>
<dbReference type="PROSITE" id="PS51994">
    <property type="entry name" value="BCOV_NSP3E_G2M"/>
    <property type="match status" value="1"/>
</dbReference>
<dbReference type="PROSITE" id="PS51945">
    <property type="entry name" value="BCOV_NSP3E_NAB"/>
    <property type="match status" value="1"/>
</dbReference>
<dbReference type="PROSITE" id="PS51993">
    <property type="entry name" value="COV_3ECTO"/>
    <property type="match status" value="1"/>
</dbReference>
<dbReference type="PROSITE" id="PS51952">
    <property type="entry name" value="COV_EXON_MTASE_COACT"/>
    <property type="match status" value="1"/>
</dbReference>
<dbReference type="PROSITE" id="PS51954">
    <property type="entry name" value="COV_N7_MTASE"/>
    <property type="match status" value="1"/>
</dbReference>
<dbReference type="PROSITE" id="PS51962">
    <property type="entry name" value="COV_NSP1"/>
    <property type="match status" value="1"/>
</dbReference>
<dbReference type="PROSITE" id="PS52000">
    <property type="entry name" value="COV_NSP12_IF"/>
    <property type="match status" value="1"/>
</dbReference>
<dbReference type="PROSITE" id="PS51948">
    <property type="entry name" value="COV_NSP12_RDRP"/>
    <property type="match status" value="1"/>
</dbReference>
<dbReference type="PROSITE" id="PS51960">
    <property type="entry name" value="COV_NSP15_NTD"/>
    <property type="match status" value="1"/>
</dbReference>
<dbReference type="PROSITE" id="PS51991">
    <property type="entry name" value="COV_NSP2_C"/>
    <property type="match status" value="1"/>
</dbReference>
<dbReference type="PROSITE" id="PS51990">
    <property type="entry name" value="COV_NSP2_M"/>
    <property type="match status" value="1"/>
</dbReference>
<dbReference type="PROSITE" id="PS51989">
    <property type="entry name" value="COV_NSP2_N"/>
    <property type="match status" value="1"/>
</dbReference>
<dbReference type="PROSITE" id="PS51992">
    <property type="entry name" value="COV_NSP3_Y"/>
    <property type="match status" value="1"/>
</dbReference>
<dbReference type="PROSITE" id="PS51943">
    <property type="entry name" value="COV_NSP3A_UBL"/>
    <property type="match status" value="1"/>
</dbReference>
<dbReference type="PROSITE" id="PS51944">
    <property type="entry name" value="COV_NSP3D_UBL"/>
    <property type="match status" value="1"/>
</dbReference>
<dbReference type="PROSITE" id="PS51946">
    <property type="entry name" value="COV_NSP4C"/>
    <property type="match status" value="1"/>
</dbReference>
<dbReference type="PROSITE" id="PS51949">
    <property type="entry name" value="COV_NSP7"/>
    <property type="match status" value="1"/>
</dbReference>
<dbReference type="PROSITE" id="PS51950">
    <property type="entry name" value="COV_NSP8"/>
    <property type="match status" value="1"/>
</dbReference>
<dbReference type="PROSITE" id="PS51951">
    <property type="entry name" value="COV_NSP9_SSRNA_BD"/>
    <property type="match status" value="1"/>
</dbReference>
<dbReference type="PROSITE" id="PS51653">
    <property type="entry name" value="CV_ZBD"/>
    <property type="match status" value="1"/>
</dbReference>
<dbReference type="PROSITE" id="PS51442">
    <property type="entry name" value="M_PRO"/>
    <property type="match status" value="1"/>
</dbReference>
<dbReference type="PROSITE" id="PS51154">
    <property type="entry name" value="MACRO"/>
    <property type="match status" value="1"/>
</dbReference>
<dbReference type="PROSITE" id="PS51958">
    <property type="entry name" value="NENDOU"/>
    <property type="match status" value="1"/>
</dbReference>
<dbReference type="PROSITE" id="PS51947">
    <property type="entry name" value="NIRAN"/>
    <property type="match status" value="1"/>
</dbReference>
<dbReference type="PROSITE" id="PS51955">
    <property type="entry name" value="NIV_2_O_MTASE"/>
    <property type="match status" value="1"/>
</dbReference>
<dbReference type="PROSITE" id="PS51953">
    <property type="entry name" value="NIV_EXON"/>
    <property type="match status" value="1"/>
</dbReference>
<dbReference type="PROSITE" id="PS51124">
    <property type="entry name" value="PEPTIDASE_C16"/>
    <property type="match status" value="1"/>
</dbReference>
<dbReference type="PROSITE" id="PS51657">
    <property type="entry name" value="PSRV_HELICASE"/>
    <property type="match status" value="1"/>
</dbReference>
<dbReference type="PROSITE" id="PS50507">
    <property type="entry name" value="RDRP_SSRNA_POS"/>
    <property type="match status" value="1"/>
</dbReference>
<dbReference type="PROSITE" id="PS51940">
    <property type="entry name" value="SARS_NSP3C_N"/>
    <property type="match status" value="1"/>
</dbReference>
<organism>
    <name type="scientific">Severe acute respiratory syndrome coronavirus</name>
    <name type="common">SARS-CoV</name>
    <dbReference type="NCBI Taxonomy" id="694009"/>
    <lineage>
        <taxon>Viruses</taxon>
        <taxon>Riboviria</taxon>
        <taxon>Orthornavirae</taxon>
        <taxon>Pisuviricota</taxon>
        <taxon>Pisoniviricetes</taxon>
        <taxon>Nidovirales</taxon>
        <taxon>Cornidovirineae</taxon>
        <taxon>Coronaviridae</taxon>
        <taxon>Orthocoronavirinae</taxon>
        <taxon>Betacoronavirus</taxon>
        <taxon>Sarbecovirus</taxon>
    </lineage>
</organism>
<feature type="chain" id="PRO_0000037309" description="Host translation inhibitor nsp1" evidence="1">
    <location>
        <begin position="1"/>
        <end position="180"/>
    </location>
</feature>
<feature type="chain" id="PRO_0000037310" description="Non-structural protein 2">
    <location>
        <begin position="181"/>
        <end position="818"/>
    </location>
</feature>
<feature type="chain" id="PRO_0000037311" description="Papain-like protease nsp3">
    <location>
        <begin position="819"/>
        <end position="2740"/>
    </location>
</feature>
<feature type="chain" id="PRO_0000283841" description="Non-structural protein 4">
    <location>
        <begin position="2741"/>
        <end position="3240"/>
    </location>
</feature>
<feature type="chain" id="PRO_0000037312" description="3C-like proteinase nsp5">
    <location>
        <begin position="3241"/>
        <end position="3546"/>
    </location>
</feature>
<feature type="chain" id="PRO_0000037313" description="Non-structural protein 6">
    <location>
        <begin position="3547"/>
        <end position="3836"/>
    </location>
</feature>
<feature type="chain" id="PRO_0000037314" description="Non-structural protein 7">
    <location>
        <begin position="3837"/>
        <end position="3919"/>
    </location>
</feature>
<feature type="chain" id="PRO_0000037315" description="Non-structural protein 8">
    <location>
        <begin position="3920"/>
        <end position="4117"/>
    </location>
</feature>
<feature type="chain" id="PRO_0000037316" description="Viral protein genome-linked nsp9">
    <location>
        <begin position="4118"/>
        <end position="4230"/>
    </location>
</feature>
<feature type="chain" id="PRO_0000037317" description="Non-structural protein 10">
    <location>
        <begin position="4231"/>
        <end position="4369"/>
    </location>
</feature>
<feature type="chain" id="PRO_0000037318" description="RNA-directed RNA polymerase nsp12">
    <location>
        <begin position="4370"/>
        <end position="5301"/>
    </location>
</feature>
<feature type="chain" id="PRO_0000037319" description="Helicase nsp13">
    <location>
        <begin position="5302"/>
        <end position="5902"/>
    </location>
</feature>
<feature type="chain" id="PRO_0000037320" description="Guanine-N7 methyltransferase nsp14">
    <location>
        <begin position="5903"/>
        <end position="6429"/>
    </location>
</feature>
<feature type="chain" id="PRO_0000037321" description="Uridylate-specific endoribonuclease nsp15">
    <location>
        <begin position="6430"/>
        <end position="6775"/>
    </location>
</feature>
<feature type="chain" id="PRO_0000037322" description="2'-O-methyltransferase nsp16">
    <location>
        <begin position="6776"/>
        <end position="7073"/>
    </location>
</feature>
<feature type="topological domain" description="Cytoplasmic" evidence="52">
    <location>
        <begin position="1"/>
        <end position="2202"/>
    </location>
</feature>
<feature type="transmembrane region" description="Helical" evidence="82">
    <location>
        <begin position="2203"/>
        <end position="2223"/>
    </location>
</feature>
<feature type="topological domain" description="Lumenal" evidence="52">
    <location>
        <begin position="2224"/>
        <end position="2303"/>
    </location>
</feature>
<feature type="transmembrane region" description="Helical" evidence="82">
    <location>
        <begin position="2304"/>
        <end position="2324"/>
    </location>
</feature>
<feature type="topological domain" description="Cytoplasmic" evidence="52">
    <location>
        <begin position="2325"/>
        <end position="2754"/>
    </location>
</feature>
<feature type="transmembrane region" description="Helical" evidence="82">
    <location>
        <begin position="2755"/>
        <end position="2775"/>
    </location>
</feature>
<feature type="topological domain" description="Lumenal" evidence="52">
    <location>
        <begin position="2776"/>
        <end position="3021"/>
    </location>
</feature>
<feature type="transmembrane region" description="Helical" evidence="82">
    <location>
        <begin position="3022"/>
        <end position="3042"/>
    </location>
</feature>
<feature type="topological domain" description="Cytoplasmic" evidence="52">
    <location>
        <begin position="3043"/>
        <end position="3076"/>
    </location>
</feature>
<feature type="transmembrane region" description="Helical" evidence="82">
    <location>
        <begin position="3077"/>
        <end position="3097"/>
    </location>
</feature>
<feature type="topological domain" description="Lumenal" evidence="52">
    <location>
        <begin position="3098"/>
        <end position="3104"/>
    </location>
</feature>
<feature type="transmembrane region" description="Helical" evidence="82">
    <location>
        <begin position="3105"/>
        <end position="3125"/>
    </location>
</feature>
<feature type="topological domain" description="Cytoplasmic" evidence="52">
    <location>
        <begin position="3126"/>
        <end position="3563"/>
    </location>
</feature>
<feature type="transmembrane region" description="Helical" evidence="82">
    <location>
        <begin position="3564"/>
        <end position="3584"/>
    </location>
</feature>
<feature type="topological domain" description="Lumenal" evidence="52">
    <location>
        <position position="3585"/>
    </location>
</feature>
<feature type="transmembrane region" description="Helical" evidence="82">
    <location>
        <begin position="3586"/>
        <end position="3606"/>
    </location>
</feature>
<feature type="topological domain" description="Cytoplasmic" evidence="52">
    <location>
        <begin position="3607"/>
        <end position="3611"/>
    </location>
</feature>
<feature type="transmembrane region" description="Helical" evidence="82">
    <location>
        <begin position="3612"/>
        <end position="3632"/>
    </location>
</feature>
<feature type="topological domain" description="Lumenal" evidence="52">
    <location>
        <begin position="3633"/>
        <end position="3657"/>
    </location>
</feature>
<feature type="transmembrane region" description="Helical" evidence="82">
    <location>
        <begin position="3658"/>
        <end position="3678"/>
    </location>
</feature>
<feature type="topological domain" description="Cytoplasmic" evidence="52">
    <location>
        <begin position="3679"/>
        <end position="3727"/>
    </location>
</feature>
<feature type="transmembrane region" description="Helical" evidence="82">
    <location>
        <begin position="3728"/>
        <end position="3748"/>
    </location>
</feature>
<feature type="topological domain" description="Lumenal" evidence="52">
    <location>
        <begin position="3749"/>
        <end position="3755"/>
    </location>
</feature>
<feature type="transmembrane region" description="Helical" evidence="82">
    <location>
        <begin position="3756"/>
        <end position="3776"/>
    </location>
</feature>
<feature type="topological domain" description="Cytoplasmic" evidence="52">
    <location>
        <begin position="3777"/>
        <end position="7073"/>
    </location>
</feature>
<feature type="domain" description="CoV Nsp1 globular" evidence="24">
    <location>
        <begin position="12"/>
        <end position="127"/>
    </location>
</feature>
<feature type="domain" description="BetaCoV Nsp1 C-terminal" evidence="25">
    <location>
        <begin position="148"/>
        <end position="179"/>
    </location>
</feature>
<feature type="domain" description="CoV Nsp2 N-terminal" evidence="26">
    <location>
        <begin position="183"/>
        <end position="456"/>
    </location>
</feature>
<feature type="domain" description="CoV Nsp2 middle" evidence="27">
    <location>
        <begin position="458"/>
        <end position="688"/>
    </location>
</feature>
<feature type="domain" description="CoV Nsp2 C-terminal" evidence="28">
    <location>
        <begin position="690"/>
        <end position="818"/>
    </location>
</feature>
<feature type="domain" description="Ubiquitin-like 1" evidence="3">
    <location>
        <begin position="822"/>
        <end position="930"/>
    </location>
</feature>
<feature type="domain" description="Macro 1" evidence="5">
    <location>
        <begin position="1003"/>
        <end position="1169"/>
    </location>
</feature>
<feature type="domain" description="Macro 2" evidence="5">
    <location>
        <begin position="1207"/>
        <end position="1335"/>
    </location>
</feature>
<feature type="domain" description="Macro 3" evidence="5">
    <location>
        <begin position="1343"/>
        <end position="1470"/>
    </location>
</feature>
<feature type="domain" description="DPUP" evidence="9">
    <location>
        <begin position="1472"/>
        <end position="1538"/>
    </location>
</feature>
<feature type="domain" description="Ubiquitin-like 2" evidence="3">
    <location>
        <begin position="1542"/>
        <end position="1597"/>
    </location>
</feature>
<feature type="domain" description="Peptidase C16" evidence="4">
    <location>
        <begin position="1611"/>
        <end position="1875"/>
    </location>
</feature>
<feature type="domain" description="Nucleic acid-binding" evidence="10">
    <location>
        <begin position="1888"/>
        <end position="1998"/>
    </location>
</feature>
<feature type="domain" description="G2M" evidence="31">
    <location>
        <begin position="2023"/>
        <end position="2132"/>
    </location>
</feature>
<feature type="domain" description="3Ecto" evidence="30">
    <location>
        <begin position="2224"/>
        <end position="2294"/>
    </location>
</feature>
<feature type="domain" description="CoV Nsp3 Y" evidence="29">
    <location>
        <begin position="2372"/>
        <end position="2740"/>
    </location>
</feature>
<feature type="domain" description="Nsp4C" evidence="11">
    <location>
        <begin position="3142"/>
        <end position="3240"/>
    </location>
</feature>
<feature type="domain" description="Peptidase C30" evidence="7">
    <location>
        <begin position="3241"/>
        <end position="3546"/>
    </location>
</feature>
<feature type="domain" description="RdRp Nsp7 cofactor" evidence="14">
    <location>
        <begin position="3837"/>
        <end position="3919"/>
    </location>
</feature>
<feature type="domain" description="RdRp Nsp8 cofactor" evidence="15">
    <location>
        <begin position="3920"/>
        <end position="4117"/>
    </location>
</feature>
<feature type="domain" description="Nsp9 ssRNA-binding" evidence="16">
    <location>
        <begin position="4118"/>
        <end position="4230"/>
    </location>
</feature>
<feature type="domain" description="ExoN/MTase coactivator" evidence="17">
    <location>
        <begin position="4231"/>
        <end position="4369"/>
    </location>
</feature>
<feature type="domain" description="NiRAN" evidence="12">
    <location>
        <begin position="4376"/>
        <end position="4630"/>
    </location>
</feature>
<feature type="domain" description="Nsp12 Interface" evidence="32">
    <location>
        <begin position="4635"/>
        <end position="4733"/>
    </location>
</feature>
<feature type="domain" description="Nsp12 RNA-dependent RNA polymerase" evidence="13">
    <location>
        <begin position="4734"/>
        <end position="5301"/>
    </location>
</feature>
<feature type="domain" description="RdRp catalytic" evidence="6">
    <location>
        <begin position="4981"/>
        <end position="5143"/>
    </location>
</feature>
<feature type="domain" description="CV ZBD" evidence="8">
    <location>
        <begin position="5302"/>
        <end position="5414"/>
    </location>
</feature>
<feature type="domain" description="(+)RNA virus helicase ATP-binding">
    <location>
        <begin position="5558"/>
        <end position="5739"/>
    </location>
</feature>
<feature type="domain" description="(+)RNA virus helicase C-terminal">
    <location>
        <begin position="5740"/>
        <end position="5909"/>
    </location>
</feature>
<feature type="domain" description="ExoN" evidence="18">
    <location>
        <begin position="5974"/>
        <end position="6189"/>
    </location>
</feature>
<feature type="domain" description="N7-MTase" evidence="19">
    <location>
        <begin position="6198"/>
        <end position="6429"/>
    </location>
</feature>
<feature type="domain" description="Nsp15 N-terminal oligomerization" evidence="22">
    <location>
        <begin position="6430"/>
        <end position="6490"/>
    </location>
</feature>
<feature type="domain" description="AV-Nsp11N/CoV-Nsp15M" evidence="23">
    <location>
        <begin position="6491"/>
        <end position="6616"/>
    </location>
</feature>
<feature type="domain" description="NendoU" evidence="21">
    <location>
        <begin position="6633"/>
        <end position="6772"/>
    </location>
</feature>
<feature type="domain" description="Nidovirus-type SAM-dependent 2'-O-MTase" evidence="20">
    <location>
        <begin position="6777"/>
        <end position="7071"/>
    </location>
</feature>
<feature type="zinc finger region" description="C4-type" evidence="4 42">
    <location>
        <begin position="1729"/>
        <end position="1766"/>
    </location>
</feature>
<feature type="zinc finger region">
    <location>
        <begin position="4304"/>
        <end position="4320"/>
    </location>
</feature>
<feature type="zinc finger region">
    <location>
        <begin position="4347"/>
        <end position="4360"/>
    </location>
</feature>
<feature type="region of interest" description="C2H2" evidence="26">
    <location>
        <begin position="200"/>
        <end position="236"/>
    </location>
</feature>
<feature type="region of interest" description="C4" evidence="26">
    <location>
        <begin position="323"/>
        <end position="344"/>
    </location>
</feature>
<feature type="region of interest" description="C2HC" evidence="26">
    <location>
        <begin position="370"/>
        <end position="416"/>
    </location>
</feature>
<feature type="region of interest" description="Disordered" evidence="33">
    <location>
        <begin position="972"/>
        <end position="1003"/>
    </location>
</feature>
<feature type="region of interest" description="Disordered" evidence="33">
    <location>
        <begin position="1175"/>
        <end position="1198"/>
    </location>
</feature>
<feature type="region of interest" description="HD1" evidence="82">
    <location>
        <begin position="2203"/>
        <end position="2324"/>
    </location>
</feature>
<feature type="region of interest" description="Y1" evidence="29">
    <location>
        <begin position="2372"/>
        <end position="2462"/>
    </location>
</feature>
<feature type="region of interest" description="ZF1" evidence="29">
    <location>
        <begin position="2376"/>
        <end position="2389"/>
    </location>
</feature>
<feature type="region of interest" description="ZF2" evidence="29">
    <location>
        <begin position="2422"/>
        <end position="2432"/>
    </location>
</feature>
<feature type="region of interest" description="CoV-Y" evidence="29">
    <location>
        <begin position="2463"/>
        <end position="2740"/>
    </location>
</feature>
<feature type="region of interest" description="Y2" evidence="29">
    <location>
        <begin position="2463"/>
        <end position="2557"/>
    </location>
</feature>
<feature type="region of interest" description="Y3" evidence="29">
    <location>
        <begin position="2558"/>
        <end position="2639"/>
    </location>
</feature>
<feature type="region of interest" description="Y4" evidence="29">
    <location>
        <begin position="2640"/>
        <end position="2740"/>
    </location>
</feature>
<feature type="region of interest" description="HD2" evidence="82">
    <location>
        <begin position="2755"/>
        <end position="3125"/>
    </location>
</feature>
<feature type="region of interest" description="HD3" evidence="82">
    <location>
        <begin position="3564"/>
        <end position="3776"/>
    </location>
</feature>
<feature type="region of interest" description="RdRp Fingers N-ter" evidence="13">
    <location>
        <begin position="4736"/>
        <end position="4950"/>
    </location>
</feature>
<feature type="region of interest" description="RdRp Palm N-ter" evidence="13">
    <location>
        <begin position="4951"/>
        <end position="4989"/>
    </location>
</feature>
<feature type="region of interest" description="RdRp Fingers C-ter" evidence="13">
    <location>
        <begin position="4990"/>
        <end position="5048"/>
    </location>
</feature>
<feature type="region of interest" description="RdRp Palm C-ter" evidence="13">
    <location>
        <begin position="5049"/>
        <end position="5184"/>
    </location>
</feature>
<feature type="region of interest" description="RdRp Thumb" evidence="13">
    <location>
        <begin position="5185"/>
        <end position="5301"/>
    </location>
</feature>
<feature type="region of interest" description="GpppA-binding" evidence="19">
    <location>
        <begin position="6316"/>
        <end position="6330"/>
    </location>
</feature>
<feature type="compositionally biased region" description="Acidic residues" evidence="33">
    <location>
        <begin position="974"/>
        <end position="999"/>
    </location>
</feature>
<feature type="active site" description="For PL-PRO activity" evidence="4 42">
    <location>
        <position position="1651"/>
    </location>
</feature>
<feature type="active site" description="For PL-PRO activity" evidence="4 42">
    <location>
        <position position="1812"/>
    </location>
</feature>
<feature type="active site" description="For PL-PRO activity" evidence="4 42">
    <location>
        <position position="1826"/>
    </location>
</feature>
<feature type="active site" description="For 3CL-PRO activity" evidence="7">
    <location>
        <position position="3281"/>
    </location>
</feature>
<feature type="active site" description="For 3CL-PRO activity" evidence="7">
    <location>
        <position position="3385"/>
    </location>
</feature>
<feature type="active site" evidence="13">
    <location>
        <position position="5128"/>
    </location>
</feature>
<feature type="active site" evidence="13">
    <location>
        <position position="5129"/>
    </location>
</feature>
<feature type="active site" evidence="13">
    <location>
        <position position="5130"/>
    </location>
</feature>
<feature type="active site" evidence="18">
    <location>
        <position position="5992"/>
    </location>
</feature>
<feature type="active site" evidence="18">
    <location>
        <position position="5994"/>
    </location>
</feature>
<feature type="active site" evidence="18">
    <location>
        <position position="6093"/>
    </location>
</feature>
<feature type="active site" evidence="18">
    <location>
        <position position="6170"/>
    </location>
</feature>
<feature type="active site" evidence="18">
    <location>
        <position position="6175"/>
    </location>
</feature>
<feature type="active site" evidence="21">
    <location>
        <position position="6663"/>
    </location>
</feature>
<feature type="active site" evidence="21">
    <location>
        <position position="6678"/>
    </location>
</feature>
<feature type="active site" evidence="21">
    <location>
        <position position="6718"/>
    </location>
</feature>
<feature type="active site" evidence="20">
    <location>
        <position position="6821"/>
    </location>
</feature>
<feature type="active site" evidence="20">
    <location>
        <position position="6905"/>
    </location>
</feature>
<feature type="active site" evidence="20">
    <location>
        <position position="6945"/>
    </location>
</feature>
<feature type="active site" evidence="20">
    <location>
        <position position="6978"/>
    </location>
</feature>
<feature type="binding site" evidence="26">
    <location>
        <position position="200"/>
    </location>
    <ligand>
        <name>Zn(2+)</name>
        <dbReference type="ChEBI" id="CHEBI:29105"/>
        <label>1</label>
    </ligand>
</feature>
<feature type="binding site" evidence="26">
    <location>
        <position position="231"/>
    </location>
    <ligand>
        <name>Zn(2+)</name>
        <dbReference type="ChEBI" id="CHEBI:29105"/>
        <label>1</label>
    </ligand>
</feature>
<feature type="binding site" evidence="26">
    <location>
        <position position="234"/>
    </location>
    <ligand>
        <name>Zn(2+)</name>
        <dbReference type="ChEBI" id="CHEBI:29105"/>
        <label>1</label>
    </ligand>
</feature>
<feature type="binding site" evidence="26">
    <location>
        <position position="236"/>
    </location>
    <ligand>
        <name>Zn(2+)</name>
        <dbReference type="ChEBI" id="CHEBI:29105"/>
        <label>1</label>
    </ligand>
</feature>
<feature type="binding site" evidence="26">
    <location>
        <position position="323"/>
    </location>
    <ligand>
        <name>Zn(2+)</name>
        <dbReference type="ChEBI" id="CHEBI:29105"/>
        <label>2</label>
    </ligand>
</feature>
<feature type="binding site" evidence="26">
    <location>
        <position position="326"/>
    </location>
    <ligand>
        <name>Zn(2+)</name>
        <dbReference type="ChEBI" id="CHEBI:29105"/>
        <label>2</label>
    </ligand>
</feature>
<feature type="binding site" evidence="26">
    <location>
        <position position="341"/>
    </location>
    <ligand>
        <name>Zn(2+)</name>
        <dbReference type="ChEBI" id="CHEBI:29105"/>
        <label>2</label>
    </ligand>
</feature>
<feature type="binding site" evidence="26">
    <location>
        <position position="344"/>
    </location>
    <ligand>
        <name>Zn(2+)</name>
        <dbReference type="ChEBI" id="CHEBI:29105"/>
        <label>2</label>
    </ligand>
</feature>
<feature type="binding site" evidence="26">
    <location>
        <position position="370"/>
    </location>
    <ligand>
        <name>Zn(2+)</name>
        <dbReference type="ChEBI" id="CHEBI:29105"/>
        <label>3</label>
    </ligand>
</feature>
<feature type="binding site" evidence="26">
    <location>
        <position position="373"/>
    </location>
    <ligand>
        <name>Zn(2+)</name>
        <dbReference type="ChEBI" id="CHEBI:29105"/>
        <label>3</label>
    </ligand>
</feature>
<feature type="binding site" evidence="26">
    <location>
        <position position="382"/>
    </location>
    <ligand>
        <name>Zn(2+)</name>
        <dbReference type="ChEBI" id="CHEBI:29105"/>
        <label>3</label>
    </ligand>
</feature>
<feature type="binding site" evidence="26">
    <location>
        <position position="416"/>
    </location>
    <ligand>
        <name>Zn(2+)</name>
        <dbReference type="ChEBI" id="CHEBI:29105"/>
        <label>3</label>
    </ligand>
</feature>
<feature type="binding site" evidence="4">
    <location>
        <position position="1729"/>
    </location>
    <ligand>
        <name>Zn(2+)</name>
        <dbReference type="ChEBI" id="CHEBI:29105"/>
        <label>6</label>
    </ligand>
</feature>
<feature type="binding site" evidence="4">
    <location>
        <position position="1732"/>
    </location>
    <ligand>
        <name>Zn(2+)</name>
        <dbReference type="ChEBI" id="CHEBI:29105"/>
        <label>6</label>
    </ligand>
</feature>
<feature type="binding site" evidence="4">
    <location>
        <position position="1764"/>
    </location>
    <ligand>
        <name>Zn(2+)</name>
        <dbReference type="ChEBI" id="CHEBI:29105"/>
        <label>6</label>
    </ligand>
</feature>
<feature type="binding site" evidence="4">
    <location>
        <position position="1766"/>
    </location>
    <ligand>
        <name>Zn(2+)</name>
        <dbReference type="ChEBI" id="CHEBI:29105"/>
        <label>6</label>
    </ligand>
</feature>
<feature type="binding site" evidence="29">
    <location>
        <position position="2376"/>
    </location>
    <ligand>
        <name>Zn(2+)</name>
        <dbReference type="ChEBI" id="CHEBI:29105"/>
        <label>4</label>
    </ligand>
</feature>
<feature type="binding site" evidence="29">
    <location>
        <position position="2381"/>
    </location>
    <ligand>
        <name>Zn(2+)</name>
        <dbReference type="ChEBI" id="CHEBI:29105"/>
        <label>4</label>
    </ligand>
</feature>
<feature type="binding site" evidence="29">
    <location>
        <position position="2386"/>
    </location>
    <ligand>
        <name>Zn(2+)</name>
        <dbReference type="ChEBI" id="CHEBI:29105"/>
        <label>4</label>
    </ligand>
</feature>
<feature type="binding site" evidence="29">
    <location>
        <position position="2389"/>
    </location>
    <ligand>
        <name>Zn(2+)</name>
        <dbReference type="ChEBI" id="CHEBI:29105"/>
        <label>4</label>
    </ligand>
</feature>
<feature type="binding site" evidence="29">
    <location>
        <position position="2422"/>
    </location>
    <ligand>
        <name>Zn(2+)</name>
        <dbReference type="ChEBI" id="CHEBI:29105"/>
        <label>5</label>
    </ligand>
</feature>
<feature type="binding site" evidence="29">
    <location>
        <position position="2425"/>
    </location>
    <ligand>
        <name>Zn(2+)</name>
        <dbReference type="ChEBI" id="CHEBI:29105"/>
        <label>5</label>
    </ligand>
</feature>
<feature type="binding site" evidence="29">
    <location>
        <position position="2429"/>
    </location>
    <ligand>
        <name>Zn(2+)</name>
        <dbReference type="ChEBI" id="CHEBI:29105"/>
        <label>5</label>
    </ligand>
</feature>
<feature type="binding site" evidence="29">
    <location>
        <position position="2432"/>
    </location>
    <ligand>
        <name>Zn(2+)</name>
        <dbReference type="ChEBI" id="CHEBI:29105"/>
        <label>5</label>
    </ligand>
</feature>
<feature type="binding site" evidence="17 60">
    <location>
        <position position="4304"/>
    </location>
    <ligand>
        <name>Zn(2+)</name>
        <dbReference type="ChEBI" id="CHEBI:29105"/>
        <label>7</label>
    </ligand>
</feature>
<feature type="binding site" evidence="17 60">
    <location>
        <position position="4307"/>
    </location>
    <ligand>
        <name>Zn(2+)</name>
        <dbReference type="ChEBI" id="CHEBI:29105"/>
        <label>7</label>
    </ligand>
</feature>
<feature type="binding site" evidence="17 60">
    <location>
        <position position="4313"/>
    </location>
    <ligand>
        <name>Zn(2+)</name>
        <dbReference type="ChEBI" id="CHEBI:29105"/>
        <label>7</label>
    </ligand>
</feature>
<feature type="binding site" evidence="17 60">
    <location>
        <position position="4320"/>
    </location>
    <ligand>
        <name>Zn(2+)</name>
        <dbReference type="ChEBI" id="CHEBI:29105"/>
        <label>7</label>
    </ligand>
</feature>
<feature type="binding site" evidence="17 60">
    <location>
        <position position="4347"/>
    </location>
    <ligand>
        <name>Zn(2+)</name>
        <dbReference type="ChEBI" id="CHEBI:29105"/>
        <label>8</label>
    </ligand>
</feature>
<feature type="binding site" evidence="17 60">
    <location>
        <position position="4350"/>
    </location>
    <ligand>
        <name>Zn(2+)</name>
        <dbReference type="ChEBI" id="CHEBI:29105"/>
        <label>8</label>
    </ligand>
</feature>
<feature type="binding site" evidence="17 60">
    <location>
        <position position="4358"/>
    </location>
    <ligand>
        <name>Zn(2+)</name>
        <dbReference type="ChEBI" id="CHEBI:29105"/>
        <label>8</label>
    </ligand>
</feature>
<feature type="binding site" evidence="17 60">
    <location>
        <position position="4360"/>
    </location>
    <ligand>
        <name>Zn(2+)</name>
        <dbReference type="ChEBI" id="CHEBI:29105"/>
        <label>8</label>
    </ligand>
</feature>
<feature type="binding site" evidence="2">
    <location>
        <position position="4578"/>
    </location>
    <ligand>
        <name>Mn(2+)</name>
        <dbReference type="ChEBI" id="CHEBI:29035"/>
    </ligand>
</feature>
<feature type="binding site" evidence="2">
    <location>
        <position position="4587"/>
    </location>
    <ligand>
        <name>Mn(2+)</name>
        <dbReference type="ChEBI" id="CHEBI:29035"/>
    </ligand>
</feature>
<feature type="binding site" evidence="32">
    <location>
        <position position="4664"/>
    </location>
    <ligand>
        <name>Zn(2+)</name>
        <dbReference type="ChEBI" id="CHEBI:29105"/>
        <label>9</label>
    </ligand>
</feature>
<feature type="binding site" evidence="32">
    <location>
        <position position="4670"/>
    </location>
    <ligand>
        <name>Zn(2+)</name>
        <dbReference type="ChEBI" id="CHEBI:29105"/>
        <label>9</label>
    </ligand>
</feature>
<feature type="binding site" evidence="32">
    <location>
        <position position="4675"/>
    </location>
    <ligand>
        <name>Zn(2+)</name>
        <dbReference type="ChEBI" id="CHEBI:29105"/>
        <label>9</label>
    </ligand>
</feature>
<feature type="binding site" evidence="32">
    <location>
        <position position="4679"/>
    </location>
    <ligand>
        <name>Zn(2+)</name>
        <dbReference type="ChEBI" id="CHEBI:29105"/>
        <label>9</label>
    </ligand>
</feature>
<feature type="binding site" evidence="13">
    <location>
        <position position="4856"/>
    </location>
    <ligand>
        <name>Zn(2+)</name>
        <dbReference type="ChEBI" id="CHEBI:29105"/>
        <label>10</label>
    </ligand>
</feature>
<feature type="binding site" evidence="13">
    <location>
        <position position="5011"/>
    </location>
    <ligand>
        <name>Zn(2+)</name>
        <dbReference type="ChEBI" id="CHEBI:29105"/>
        <label>10</label>
    </ligand>
</feature>
<feature type="binding site" evidence="13">
    <location>
        <position position="5014"/>
    </location>
    <ligand>
        <name>Zn(2+)</name>
        <dbReference type="ChEBI" id="CHEBI:29105"/>
        <label>10</label>
    </ligand>
</feature>
<feature type="binding site" evidence="13">
    <location>
        <position position="5015"/>
    </location>
    <ligand>
        <name>Zn(2+)</name>
        <dbReference type="ChEBI" id="CHEBI:29105"/>
        <label>10</label>
    </ligand>
</feature>
<feature type="binding site" evidence="8">
    <location>
        <position position="5306"/>
    </location>
    <ligand>
        <name>Zn(2+)</name>
        <dbReference type="ChEBI" id="CHEBI:29105"/>
        <label>11</label>
    </ligand>
</feature>
<feature type="binding site" evidence="8">
    <location>
        <position position="5309"/>
    </location>
    <ligand>
        <name>Zn(2+)</name>
        <dbReference type="ChEBI" id="CHEBI:29105"/>
        <label>11</label>
    </ligand>
</feature>
<feature type="binding site" evidence="8">
    <location>
        <position position="5317"/>
    </location>
    <ligand>
        <name>Zn(2+)</name>
        <dbReference type="ChEBI" id="CHEBI:29105"/>
        <label>12</label>
    </ligand>
</feature>
<feature type="binding site" evidence="8">
    <location>
        <position position="5320"/>
    </location>
    <ligand>
        <name>Zn(2+)</name>
        <dbReference type="ChEBI" id="CHEBI:29105"/>
        <label>12</label>
    </ligand>
</feature>
<feature type="binding site" evidence="8">
    <location>
        <position position="5327"/>
    </location>
    <ligand>
        <name>Zn(2+)</name>
        <dbReference type="ChEBI" id="CHEBI:29105"/>
        <label>11</label>
    </ligand>
</feature>
<feature type="binding site" evidence="8">
    <location>
        <position position="5330"/>
    </location>
    <ligand>
        <name>Zn(2+)</name>
        <dbReference type="ChEBI" id="CHEBI:29105"/>
        <label>11</label>
    </ligand>
</feature>
<feature type="binding site" evidence="8">
    <location>
        <position position="5334"/>
    </location>
    <ligand>
        <name>Zn(2+)</name>
        <dbReference type="ChEBI" id="CHEBI:29105"/>
        <label>12</label>
    </ligand>
</feature>
<feature type="binding site" evidence="8">
    <location>
        <position position="5340"/>
    </location>
    <ligand>
        <name>Zn(2+)</name>
        <dbReference type="ChEBI" id="CHEBI:29105"/>
        <label>12</label>
    </ligand>
</feature>
<feature type="binding site" evidence="8">
    <location>
        <position position="5351"/>
    </location>
    <ligand>
        <name>Zn(2+)</name>
        <dbReference type="ChEBI" id="CHEBI:29105"/>
        <label>13</label>
    </ligand>
</feature>
<feature type="binding site" evidence="8">
    <location>
        <position position="5356"/>
    </location>
    <ligand>
        <name>Zn(2+)</name>
        <dbReference type="ChEBI" id="CHEBI:29105"/>
        <label>13</label>
    </ligand>
</feature>
<feature type="binding site" evidence="8">
    <location>
        <position position="5373"/>
    </location>
    <ligand>
        <name>Zn(2+)</name>
        <dbReference type="ChEBI" id="CHEBI:29105"/>
        <label>13</label>
    </ligand>
</feature>
<feature type="binding site" evidence="8">
    <location>
        <position position="5376"/>
    </location>
    <ligand>
        <name>Zn(2+)</name>
        <dbReference type="ChEBI" id="CHEBI:29105"/>
        <label>13</label>
    </ligand>
</feature>
<feature type="binding site" evidence="1">
    <location>
        <begin position="5583"/>
        <end position="5590"/>
    </location>
    <ligand>
        <name>ATP</name>
        <dbReference type="ChEBI" id="CHEBI:30616"/>
    </ligand>
</feature>
<feature type="binding site" evidence="2">
    <location>
        <position position="5994"/>
    </location>
    <ligand>
        <name>Mg(2+)</name>
        <dbReference type="ChEBI" id="CHEBI:18420"/>
        <label>2</label>
    </ligand>
</feature>
<feature type="binding site" evidence="2">
    <location>
        <position position="6093"/>
    </location>
    <ligand>
        <name>Mg(2+)</name>
        <dbReference type="ChEBI" id="CHEBI:18420"/>
        <label>1</label>
    </ligand>
</feature>
<feature type="binding site" evidence="18">
    <location>
        <position position="6109"/>
    </location>
    <ligand>
        <name>Zn(2+)</name>
        <dbReference type="ChEBI" id="CHEBI:29105"/>
        <label>14</label>
    </ligand>
</feature>
<feature type="binding site" evidence="18">
    <location>
        <position position="6112"/>
    </location>
    <ligand>
        <name>Zn(2+)</name>
        <dbReference type="ChEBI" id="CHEBI:29105"/>
        <label>14</label>
    </ligand>
</feature>
<feature type="binding site" evidence="18">
    <location>
        <position position="6128"/>
    </location>
    <ligand>
        <name>Zn(2+)</name>
        <dbReference type="ChEBI" id="CHEBI:29105"/>
        <label>14</label>
    </ligand>
</feature>
<feature type="binding site" evidence="18">
    <location>
        <position position="6131"/>
    </location>
    <ligand>
        <name>Zn(2+)</name>
        <dbReference type="ChEBI" id="CHEBI:29105"/>
        <label>14</label>
    </ligand>
</feature>
<feature type="binding site" evidence="18">
    <location>
        <position position="6159"/>
    </location>
    <ligand>
        <name>Zn(2+)</name>
        <dbReference type="ChEBI" id="CHEBI:29105"/>
        <label>15</label>
    </ligand>
</feature>
<feature type="binding site" evidence="18">
    <location>
        <position position="6163"/>
    </location>
    <ligand>
        <name>Zn(2+)</name>
        <dbReference type="ChEBI" id="CHEBI:29105"/>
        <label>15</label>
    </ligand>
</feature>
<feature type="binding site" evidence="18">
    <location>
        <position position="6166"/>
    </location>
    <ligand>
        <name>Zn(2+)</name>
        <dbReference type="ChEBI" id="CHEBI:29105"/>
        <label>15</label>
    </ligand>
</feature>
<feature type="binding site" evidence="2">
    <location>
        <position position="6170"/>
    </location>
    <ligand>
        <name>Mg(2+)</name>
        <dbReference type="ChEBI" id="CHEBI:18420"/>
        <label>2</label>
    </ligand>
</feature>
<feature type="binding site" evidence="2">
    <location>
        <position position="6175"/>
    </location>
    <ligand>
        <name>Mg(2+)</name>
        <dbReference type="ChEBI" id="CHEBI:18420"/>
        <label>2</label>
    </ligand>
</feature>
<feature type="binding site" evidence="18">
    <location>
        <position position="6181"/>
    </location>
    <ligand>
        <name>Zn(2+)</name>
        <dbReference type="ChEBI" id="CHEBI:29105"/>
        <label>15</label>
    </ligand>
</feature>
<feature type="binding site" evidence="19">
    <location>
        <begin position="6233"/>
        <end position="6239"/>
    </location>
    <ligand>
        <name>S-adenosyl-L-methionine</name>
        <dbReference type="ChEBI" id="CHEBI:59789"/>
    </ligand>
</feature>
<feature type="binding site" evidence="19">
    <location>
        <position position="6354"/>
    </location>
    <ligand>
        <name>Zn(2+)</name>
        <dbReference type="ChEBI" id="CHEBI:29105"/>
        <label>16</label>
    </ligand>
</feature>
<feature type="binding site" evidence="19">
    <location>
        <position position="6375"/>
    </location>
    <ligand>
        <name>Zn(2+)</name>
        <dbReference type="ChEBI" id="CHEBI:29105"/>
        <label>16</label>
    </ligand>
</feature>
<feature type="binding site" evidence="19">
    <location>
        <position position="6386"/>
    </location>
    <ligand>
        <name>Zn(2+)</name>
        <dbReference type="ChEBI" id="CHEBI:29105"/>
        <label>16</label>
    </ligand>
</feature>
<feature type="binding site" evidence="19">
    <location>
        <position position="6389"/>
    </location>
    <ligand>
        <name>Zn(2+)</name>
        <dbReference type="ChEBI" id="CHEBI:29105"/>
        <label>16</label>
    </ligand>
</feature>
<feature type="site" description="Cleavage; by PL-PRO" evidence="42">
    <location>
        <begin position="180"/>
        <end position="181"/>
    </location>
</feature>
<feature type="site" description="Cleavage; by PL-PRO" evidence="42">
    <location>
        <begin position="818"/>
        <end position="819"/>
    </location>
</feature>
<feature type="site" description="Cleavage; by PL-PRO" evidence="42">
    <location>
        <begin position="2740"/>
        <end position="2741"/>
    </location>
</feature>
<feature type="site" description="Cleavage; by 3CL-PRO" evidence="36">
    <location>
        <begin position="3240"/>
        <end position="3241"/>
    </location>
</feature>
<feature type="site" description="Cleavage; by 3CL-PRO" evidence="36">
    <location>
        <begin position="3546"/>
        <end position="3547"/>
    </location>
</feature>
<feature type="site" description="Cleavage; by 3CL-PRO" evidence="36 73">
    <location>
        <begin position="3836"/>
        <end position="3837"/>
    </location>
</feature>
<feature type="site" description="Cleavage; by 3CL-PRO" evidence="36 73">
    <location>
        <begin position="3919"/>
        <end position="3920"/>
    </location>
</feature>
<feature type="site" description="Cleavage; by 3CL-PRO" evidence="36 73">
    <location>
        <begin position="4117"/>
        <end position="4118"/>
    </location>
</feature>
<feature type="site" description="Cleavage; by 3CL-PRO" evidence="36 73">
    <location>
        <begin position="4230"/>
        <end position="4231"/>
    </location>
</feature>
<feature type="site" description="Cleavage; by 3CL-PRO" evidence="36">
    <location>
        <begin position="4369"/>
        <end position="4370"/>
    </location>
</feature>
<feature type="site" description="Cleavage; by 3CL-PRO" evidence="36">
    <location>
        <begin position="5301"/>
        <end position="5302"/>
    </location>
</feature>
<feature type="site" description="Cleavage; by 3CL-PRO" evidence="36">
    <location>
        <begin position="5902"/>
        <end position="5903"/>
    </location>
</feature>
<feature type="site" description="Cleavage; by 3CL-PRO" evidence="36">
    <location>
        <begin position="6429"/>
        <end position="6430"/>
    </location>
</feature>
<feature type="site" description="Cleavage; by 3CL-PRO" evidence="36">
    <location>
        <begin position="6775"/>
        <end position="6776"/>
    </location>
</feature>
<feature type="disulfide bond" evidence="30">
    <location>
        <begin position="2240"/>
        <end position="2268"/>
    </location>
</feature>
<feature type="disulfide bond" evidence="30">
    <location>
        <begin position="2259"/>
        <end position="2265"/>
    </location>
</feature>
<feature type="sequence variant" description="In strain: Isolate GD01.">
    <original>G</original>
    <variation>C</variation>
    <location>
        <position position="82"/>
    </location>
</feature>
<feature type="sequence variant" description="In strain: Isolate GD01.">
    <original>G</original>
    <variation>R</variation>
    <location>
        <position position="130"/>
    </location>
</feature>
<feature type="sequence variant" description="In strain: Isolate SZ16.">
    <original>I</original>
    <variation>T</variation>
    <location>
        <position position="138"/>
    </location>
</feature>
<feature type="sequence variant" description="In strain: Isolate Shanghai LY.">
    <original>A</original>
    <variation>V</variation>
    <location>
        <position position="181"/>
    </location>
</feature>
<feature type="sequence variant" description="In strain: Isolate GD01.">
    <original>K</original>
    <variation>Q</variation>
    <location>
        <position position="225"/>
    </location>
</feature>
<feature type="sequence variant" description="In strain: Isolate Shanghai LY.">
    <original>Y</original>
    <variation>C</variation>
    <location>
        <position position="249"/>
    </location>
</feature>
<feature type="sequence variant" description="In strain: Isolate BJ04.">
    <original>V</original>
    <variation>F</variation>
    <location>
        <position position="306"/>
    </location>
</feature>
<feature type="sequence variant" description="In strain: Isolate SZ3.">
    <original>A</original>
    <variation>S</variation>
    <location>
        <position position="549"/>
    </location>
</feature>
<feature type="sequence variant" description="In strain: Isolate FRA and Isolate Frankfurt-1.">
    <original>A</original>
    <variation>T</variation>
    <location>
        <position position="765"/>
    </location>
</feature>
<feature type="sequence variant" description="In strain: Isolate SZ16.">
    <original>K</original>
    <variation>R</variation>
    <location>
        <position position="852"/>
    </location>
</feature>
<feature type="sequence variant" description="In strain: Isolate BJ03.">
    <original>N</original>
    <variation>H</variation>
    <location>
        <position position="1004"/>
    </location>
</feature>
<feature type="sequence variant" description="In strain: Isolate SZ3 and Isolate SZ16.">
    <original>V</original>
    <variation>A</variation>
    <location>
        <position position="1021"/>
    </location>
</feature>
<feature type="sequence variant" description="In strain: Isolate Shanghai QXC1.">
    <original>I</original>
    <variation>T</variation>
    <location>
        <position position="1023"/>
    </location>
</feature>
<feature type="sequence variant" description="In strain: Isolate GD01, Isolate SZ3 and Isolate SZ16.">
    <original>I</original>
    <variation>T</variation>
    <location>
        <position position="1121"/>
    </location>
</feature>
<feature type="sequence variant" description="In strain: Isolate SZ3 and Isolate SZ16.">
    <original>P</original>
    <variation>L</variation>
    <location>
        <position position="1136"/>
    </location>
</feature>
<feature type="sequence variant" description="In strain: Isolate Shanghai QXC1.">
    <original>K</original>
    <variation>E</variation>
    <location>
        <position position="1257"/>
    </location>
</feature>
<feature type="sequence variant" description="In strain: Isolate GD01.">
    <original>K</original>
    <variation>R</variation>
    <location>
        <position position="1319"/>
    </location>
</feature>
<feature type="sequence variant" description="In strain: Isolate GD01.">
    <original>F</original>
    <variation>S</variation>
    <location>
        <position position="1329"/>
    </location>
</feature>
<feature type="sequence variant" description="In strain: Isolate Shanghai QXC1.">
    <original>T</original>
    <variation>A</variation>
    <location>
        <position position="1361"/>
    </location>
</feature>
<feature type="sequence variant" description="In strain: Isolate Shanghai QXC1.">
    <original>I</original>
    <variation>V</variation>
    <location>
        <position position="1385"/>
    </location>
</feature>
<feature type="sequence variant" description="In strain: Isolate GD01.">
    <original>S</original>
    <variation>T</variation>
    <location>
        <position position="1538"/>
    </location>
</feature>
<feature type="sequence variant" description="In strain: Isolate BJ02.">
    <original>M</original>
    <variation>K</variation>
    <location>
        <position position="1563"/>
    </location>
</feature>
<feature type="sequence variant" description="In strain: Isolate SZ3 and Isolate SZ16.">
    <original>L</original>
    <variation>I</variation>
    <location>
        <position position="1663"/>
    </location>
</feature>
<feature type="sequence variant" description="In strain: Isolate BJ03.">
    <original>I</original>
    <variation>L</variation>
    <location>
        <position position="1762"/>
    </location>
</feature>
<feature type="sequence variant" description="In strain: Isolate BJ03.">
    <original>QQ</original>
    <variation>PP</variation>
    <location>
        <begin position="1776"/>
        <end position="1777"/>
    </location>
</feature>
<feature type="sequence variant" description="In strain: Isolate Shanghai QXC1.">
    <original>E</original>
    <variation>G</variation>
    <location>
        <position position="1790"/>
    </location>
</feature>
<feature type="sequence variant" description="In strain: Isolate BJ02.">
    <original>G</original>
    <variation>V</variation>
    <location>
        <position position="1806"/>
    </location>
</feature>
<feature type="sequence variant" description="In strain: Isolate BJ04.">
    <original>L</original>
    <variation>I</variation>
    <location>
        <position position="1962"/>
    </location>
</feature>
<feature type="sequence variant" description="In strain: Isolate GD01, Isolate SZ3 and Isolate SZ16.">
    <original>L</original>
    <variation>F</variation>
    <location>
        <position position="2116"/>
    </location>
</feature>
<feature type="sequence variant" description="In strain: Isolate GD01, Isolate SZ3 and Isolate SZ16.">
    <original>C</original>
    <variation>Y</variation>
    <location>
        <position position="2222"/>
    </location>
</feature>
<feature type="sequence variant" description="In strain: Isolate SZ3 and Isolate SZ16.">
    <original>L</original>
    <variation>S</variation>
    <location>
        <position position="2269"/>
    </location>
</feature>
<feature type="sequence variant" description="In strain: Isolate Shanghai QXC1.">
    <original>V</original>
    <variation>A</variation>
    <location>
        <position position="2326"/>
    </location>
</feature>
<feature type="sequence variant" description="In strain: Isolate Shanghai QXC1.">
    <original>RNR</original>
    <variation>CNH</variation>
    <location>
        <begin position="2392"/>
        <end position="2394"/>
    </location>
</feature>
<feature type="sequence variant" description="In strain: Isolate Shanghai QXC1.">
    <original>L</original>
    <variation>P</variation>
    <location>
        <position position="2480"/>
    </location>
</feature>
<feature type="sequence variant" description="In strain: Isolate Urbani and Isolate Taiwan TC2.">
    <original>A</original>
    <variation>V</variation>
    <location>
        <position position="2552"/>
    </location>
</feature>
<feature type="sequence variant" description="In strain: Isolate HKU-39849.">
    <original>D</original>
    <variation>N</variation>
    <location>
        <position position="2556"/>
    </location>
</feature>
<feature type="sequence variant" description="In strain: Isolate GD01.">
    <original>S</original>
    <variation>P</variation>
    <location>
        <position position="2564"/>
    </location>
</feature>
<feature type="sequence variant" description="In strain: Isolate Shanghai QXC1.">
    <original>N</original>
    <variation>Y</variation>
    <location>
        <position position="2648"/>
    </location>
</feature>
<feature type="sequence variant" description="In strain: Isolate HKU-39849.">
    <original>S</original>
    <variation>T</variation>
    <location>
        <position position="2708"/>
    </location>
</feature>
<feature type="sequence variant" description="In strain: Isolate HKU-39849.">
    <original>R</original>
    <variation>T</variation>
    <location>
        <position position="2718"/>
    </location>
</feature>
<feature type="sequence variant" description="In strain: Isolate SZ3 and Isolate SZ16.">
    <original>C</original>
    <variation>W</variation>
    <location>
        <position position="2746"/>
    </location>
</feature>
<feature type="sequence variant" description="In strain: Isolate BJ01 and Isolate BJ02.">
    <original>V</original>
    <variation>L</variation>
    <location>
        <position position="2770"/>
    </location>
</feature>
<feature type="sequence variant" description="In strain: Isolate SIN2500, Isolate GD01 and Isolate GZ50.">
    <original>T</original>
    <variation>I</variation>
    <location>
        <position position="2944"/>
    </location>
</feature>
<feature type="sequence variant" description="In strain: Isolate GD01 and Isolate SZ16.">
    <original>V</original>
    <variation>A</variation>
    <location>
        <position position="2971"/>
    </location>
</feature>
<feature type="sequence variant" description="In strain: Isolate Shanghai QXC1.">
    <original>V</original>
    <variation>A</variation>
    <location>
        <position position="3020"/>
    </location>
</feature>
<feature type="sequence variant" description="In strain: Isolate CUHK-W1, Isolate GD01, Isolate SZ3, Isolate SZ16, Isolate BJ01, Isolate BJ02, Isolate BJ03 and Isolate Shanghai QXC1.">
    <original>V</original>
    <variation>A</variation>
    <location>
        <position position="3047"/>
    </location>
</feature>
<feature type="sequence variant" description="In strain: Isolate CUHK-W1, Isolate SZ3, Isolate SZ16 and Isolate GD01.">
    <original>V</original>
    <variation>A</variation>
    <location>
        <position position="3072"/>
    </location>
</feature>
<feature type="sequence variant" description="In strain: Isolate BJ01, Isolate BJ02, Isolate BJ03, Isolate BJ04 and Isolate Shanghai QXC1.">
    <original>A</original>
    <variation>V</variation>
    <location>
        <position position="3197"/>
    </location>
</feature>
<feature type="sequence variant" description="In strain: Isolate BJ02.">
    <original>Q</original>
    <variation>P</variation>
    <location>
        <position position="3429"/>
    </location>
</feature>
<feature type="sequence variant" description="In strain: Isolate BJ04.">
    <original>D</original>
    <variation>E</variation>
    <location>
        <position position="3488"/>
    </location>
</feature>
<feature type="sequence variant" description="In strain: Isolate Shanghai QXC1.">
    <original>V</original>
    <variation>A</variation>
    <location>
        <position position="3717"/>
    </location>
</feature>
<feature type="sequence variant" description="In strain: Isolate BJ04.">
    <original>N</original>
    <variation>T</variation>
    <location>
        <position position="3818"/>
    </location>
</feature>
<feature type="sequence variant" description="In strain: Isolate BJ03.">
    <original>D</original>
    <variation>N</variation>
    <location>
        <position position="3903"/>
    </location>
</feature>
<feature type="sequence variant" description="In strain: Isolate BJ02.">
    <original>I</original>
    <variation>F</variation>
    <location>
        <position position="3904"/>
    </location>
</feature>
<feature type="sequence variant" description="In strain: Isolate Shanghai QXC1.">
    <original>M</original>
    <variation>V</variation>
    <location>
        <position position="3911"/>
    </location>
</feature>
<feature type="sequence variant" description="In strain: Isolate Shanghai LY.">
    <original>K</original>
    <variation>Q</variation>
    <location>
        <position position="4001"/>
    </location>
</feature>
<feature type="sequence variant" description="In strain: Isolate Shanghai LY.">
    <original>T</original>
    <variation>A</variation>
    <location>
        <position position="4003"/>
    </location>
</feature>
<feature type="sequence variant" description="In strain: Isolate ZJ01.">
    <original>I</original>
    <variation>H</variation>
    <location>
        <position position="4085"/>
    </location>
</feature>
<feature type="sequence variant" description="In strain: Isolate Shanghai QXC1.">
    <original>V</original>
    <variation>A</variation>
    <location>
        <position position="4114"/>
    </location>
</feature>
<feature type="sequence variant" description="In strain: Isolate Shanghai QXC1.">
    <original>V</original>
    <variation>M</variation>
    <location>
        <position position="4202"/>
    </location>
</feature>
<feature type="sequence variant" description="In strain: Isolate ZJ01.">
    <original>N</original>
    <variation>H</variation>
    <location>
        <position position="4240"/>
    </location>
</feature>
<feature type="sequence variant" description="In strain: Isolate Shanghai QXC1.">
    <original>E</original>
    <variation>G</variation>
    <location>
        <position position="4296"/>
    </location>
</feature>
<feature type="sequence variant" description="In strain: Isolate Shanghai QXC1.">
    <original>LN</original>
    <variation>FK</variation>
    <location>
        <begin position="4377"/>
        <end position="4378"/>
    </location>
</feature>
<feature type="sequence variant" description="In strain: Isolate HKU-39849.">
    <original>V</original>
    <variation>S</variation>
    <location>
        <position position="4411"/>
    </location>
</feature>
<feature type="sequence variant" description="In strain: Isolate Shanghai QXC1.">
    <original>V</original>
    <variation>I</variation>
    <location>
        <position position="4459"/>
    </location>
</feature>
<feature type="sequence variant" description="In strain: Isolate ZJ01.">
    <original>V</original>
    <variation>E</variation>
    <location>
        <position position="4592"/>
    </location>
</feature>
<feature type="sequence variant" description="In strain: Isolate ZJ01.">
    <original>Q</original>
    <variation>L</variation>
    <location>
        <position position="4910"/>
    </location>
</feature>
<feature type="sequence variant" description="In strain: Isolate SZ3.">
    <original>D</original>
    <variation>G</variation>
    <location>
        <position position="5112"/>
    </location>
</feature>
<feature type="sequence variant" description="In strain: Isolate Taiwan.">
    <original>A</original>
    <variation>G</variation>
    <location>
        <position position="5131"/>
    </location>
</feature>
<feature type="sequence variant" description="In strain: Isolate Taiwan.">
    <original>CY</original>
    <variation>VL</variation>
    <location>
        <begin position="5134"/>
        <end position="5135"/>
    </location>
</feature>
<feature type="sequence variant" description="In strain: Isolate GD01.">
    <original>L</original>
    <variation>S</variation>
    <location>
        <position position="5623"/>
    </location>
</feature>
<feature type="sequence variant" description="In strain: Isolate GZ50 and Isolate SIN2500.">
    <original>P</original>
    <variation>S</variation>
    <location>
        <position position="5720"/>
    </location>
</feature>
<feature type="sequence variant" description="In strain: Isolate ZJ01.">
    <original>R</original>
    <variation>C</variation>
    <location>
        <position position="5744"/>
    </location>
</feature>
<feature type="sequence variant" description="In strain: Isolate CUHK-W1, Isolate BJ01, Isolate BJ02, Isolate BJ03, Isolate BJ04, Isolate SIN2500, Isolate GD01, Isolate GZ50, Isolate SZ3, Isolate SZ16 and Isolate Shanghai QXC1.">
    <original>D</original>
    <variation>E</variation>
    <location>
        <position position="5767"/>
    </location>
</feature>
<feature type="sequence variant" description="In strain: Isolate FRA, Isolate Frankfurt-1 Isolate SIN2677, Isolate SIN2679 and Isolate SIN2748.">
    <original>T</original>
    <variation>I</variation>
    <location>
        <position position="6274"/>
    </location>
</feature>
<feature type="sequence variant" description="In strain: Isolate Shanghai QXC1.">
    <original>N</original>
    <variation>S</variation>
    <location>
        <position position="6474"/>
    </location>
</feature>
<feature type="sequence variant" description="In strain: Isolate BJ03.">
    <original>M</original>
    <variation>I</variation>
    <location>
        <position position="6700"/>
    </location>
</feature>
<feature type="sequence variant" description="In strain: Isolate Shanghai QXC1.">
    <original>C</original>
    <variation>R</variation>
    <location>
        <position position="6721"/>
    </location>
</feature>
<feature type="sequence variant" description="In strain: Isolate GD01.">
    <original>D</original>
    <variation>N</variation>
    <location>
        <position position="6729"/>
    </location>
</feature>
<feature type="sequence variant" description="In strain: Isolate BJ02.">
    <original>M</original>
    <variation>L</variation>
    <location>
        <position position="6840"/>
    </location>
</feature>
<feature type="sequence variant" description="In strain: Isolate BJ04.">
    <original>Q</original>
    <variation>P</variation>
    <location>
        <position position="6862"/>
    </location>
</feature>
<feature type="sequence variant" description="In strain: Isolate GD01.">
    <original>D</original>
    <variation>E</variation>
    <location>
        <position position="6877"/>
    </location>
</feature>
<feature type="sequence variant" description="In strain: Isolate SZ3 and Isolate SZ16.">
    <original>R</original>
    <variation>K</variation>
    <location>
        <position position="6910"/>
    </location>
</feature>
<feature type="sequence variant" description="In strain: Isolate BJ03.">
    <original>A</original>
    <variation>P</variation>
    <location>
        <position position="6937"/>
    </location>
</feature>
<feature type="sequence variant" description="In strain: Isolate BJ04.">
    <original>E</original>
    <variation>D</variation>
    <location>
        <position position="6992"/>
    </location>
</feature>
<feature type="sequence variant" description="In strain: Isolate GD01.">
    <original>N</original>
    <variation>K</variation>
    <location>
        <position position="7008"/>
    </location>
</feature>
<feature type="sequence variant" description="In strain: Isolate BJ04.">
    <original>K</original>
    <variation>Q</variation>
    <location>
        <position position="7024"/>
    </location>
</feature>
<feature type="mutagenesis site" description="Complete loss of PL-PRO activity." evidence="42">
    <original>C</original>
    <variation>A</variation>
    <location>
        <position position="1651"/>
    </location>
</feature>
<feature type="mutagenesis site" description="No effect on PL-PRO activity." evidence="42">
    <original>C</original>
    <variation>A</variation>
    <location>
        <position position="1688"/>
    </location>
</feature>
<feature type="mutagenesis site" description="Complete loss of PL-PRO activity." evidence="42">
    <original>C</original>
    <variation>A</variation>
    <location>
        <position position="1729"/>
    </location>
</feature>
<feature type="mutagenesis site" description="Complete loss of PL-PRO activity." evidence="42">
    <original>C</original>
    <variation>A</variation>
    <location>
        <position position="1732"/>
    </location>
</feature>
<feature type="mutagenesis site" description="Complete loss of PL-PRO activity." evidence="42">
    <original>C</original>
    <variation>A</variation>
    <location>
        <position position="1764"/>
    </location>
</feature>
<feature type="mutagenesis site" description="Complete loss of PL-PRO activity." evidence="42">
    <original>C</original>
    <variation>A</variation>
    <location>
        <position position="1766"/>
    </location>
</feature>
<feature type="mutagenesis site" description="Complete loss of PL-PRO activity." evidence="42">
    <original>D</original>
    <variation>A</variation>
    <location>
        <position position="1826"/>
    </location>
</feature>
<feature type="mutagenesis site" description="Complete loss of nsp9 dimerization." evidence="53">
    <original>G</original>
    <variation>E</variation>
    <location>
        <position position="4217"/>
    </location>
</feature>
<feature type="mutagenesis site" description="Complete loss of nsp9 dimerization." evidence="53">
    <original>G</original>
    <variation>E</variation>
    <location>
        <position position="4221"/>
    </location>
</feature>
<feature type="mutagenesis site" description="Complete loss of NSP16 binding to SAM and NSP16 MTase activity." evidence="60">
    <original>YCR</original>
    <variation>AAA</variation>
    <location>
        <begin position="4306"/>
        <end position="4308"/>
    </location>
</feature>
<feature type="mutagenesis site" description="Complete loss of NSP16 binding to SAM and NSP16 MTase activity." evidence="60">
    <original>HP</original>
    <variation>AA</variation>
    <location>
        <begin position="4313"/>
        <end position="4314"/>
    </location>
</feature>
<feature type="mutagenesis site" description="Complete loss of NSP14 guanine-N7 methyltransferase activity ex vivo. No effect on ExoN activity ex vivo. Partial loss of virus infectivity in vivo." evidence="74">
    <original>W</original>
    <variation>A</variation>
    <location>
        <position position="6194"/>
    </location>
</feature>
<feature type="mutagenesis site" description="Partial loss of NSP14 guanine-N7 methyltransferase activity ex vivo. No effect on ExoN activity ex vivo. No effect on virus infectivity in vivo." evidence="74">
    <original>N</original>
    <variation>A</variation>
    <location>
        <position position="6208"/>
    </location>
</feature>
<feature type="mutagenesis site" description="Complete loss of NSP14 guanine-N7 methyltransferase activity ex vivo. Partial loss of ExoN activity ex vivo. Complete loss of virus infectivity in vivo." evidence="74">
    <original>R</original>
    <variation>A</variation>
    <location>
        <position position="6212"/>
    </location>
</feature>
<feature type="mutagenesis site" description="Complete loss of NSP14 guanine-N7 methyltransferase activity ex vivo. No effect on ExoN activity ex vivo. Complete loss of virus infectivity in vivo." evidence="74">
    <original>D</original>
    <variation>A</variation>
    <location>
        <position position="6233"/>
    </location>
</feature>
<feature type="mutagenesis site" description="Complete loss of NSP14 guanine-N7 methyltransferase activity ex vivo. No effect on ExoN activity ex vivo. No effect on virus infectivity in vivo." evidence="74">
    <original>K</original>
    <variation>A</variation>
    <location>
        <position position="6238"/>
    </location>
</feature>
<feature type="mutagenesis site" description="Complete loss of NSP14 guanine-N7 methyltransferase activity ex vivo. No effect on ExoN activity ex vivo. Partial loss of virus infectivity in vivo." evidence="74">
    <original>D</original>
    <variation>A</variation>
    <location>
        <position position="6254"/>
    </location>
</feature>
<feature type="mutagenesis site" description="Complete loss of NSP14 guanine-N7 methyltransferase activity ex vivo. No effect on ExoN activity ex vivo. Complete loss of virus infectivity in vivo." evidence="74">
    <original>N</original>
    <variation>A</variation>
    <location>
        <position position="6288"/>
    </location>
</feature>
<feature type="mutagenesis site" description="Complete loss of NSP14 guanine-N7 methyltransferase activity ex vivo. Partial loss of ExoN activity ex vivo. Complete loss of virus infectivity in vivo." evidence="74">
    <original>Y</original>
    <variation>A</variation>
    <location>
        <position position="6322"/>
    </location>
</feature>
<feature type="mutagenesis site" description="No effect NSP14 guanine-N7 methyltransferase activity ex vivo. No effect on ExoN activity ex vivo. No effect on virus infectivity in vivo." evidence="74">
    <original>N</original>
    <variation>A</variation>
    <location>
        <position position="6324"/>
    </location>
</feature>
<feature type="mutagenesis site" description="Partial loss of NSP14 guanine-N7 methyltransferase activity ex vivo. Partial loss of ExoN activity ex vivo. Partial loss of virus infectivity in vivo." evidence="74">
    <original>H</original>
    <variation>A</variation>
    <location>
        <position position="6326"/>
    </location>
</feature>
<feature type="mutagenesis site" description="Complete loss of NSP14 guanine-N7 methyltransferase activity ex vivo. No effect on ExoN activity ex vivo. Complete loss of virus infectivity in vivo." evidence="74">
    <original>F</original>
    <variation>A</variation>
    <location>
        <position position="6328"/>
    </location>
</feature>
<feature type="mutagenesis site" description="Complete loss of NSP15 endonuclease activity." evidence="44 49">
    <original>H</original>
    <variation>A</variation>
    <location>
        <position position="6663"/>
    </location>
</feature>
<feature type="strand" evidence="93">
    <location>
        <begin position="14"/>
        <end position="20"/>
    </location>
</feature>
<feature type="turn" evidence="93">
    <location>
        <begin position="23"/>
        <end position="25"/>
    </location>
</feature>
<feature type="helix" evidence="93">
    <location>
        <begin position="35"/>
        <end position="48"/>
    </location>
</feature>
<feature type="strand" evidence="93">
    <location>
        <begin position="51"/>
        <end position="54"/>
    </location>
</feature>
<feature type="helix" evidence="93">
    <location>
        <begin position="61"/>
        <end position="63"/>
    </location>
</feature>
<feature type="strand" evidence="93">
    <location>
        <begin position="68"/>
        <end position="72"/>
    </location>
</feature>
<feature type="strand" evidence="93">
    <location>
        <begin position="87"/>
        <end position="93"/>
    </location>
</feature>
<feature type="turn" evidence="93">
    <location>
        <begin position="95"/>
        <end position="98"/>
    </location>
</feature>
<feature type="strand" evidence="93">
    <location>
        <begin position="99"/>
        <end position="102"/>
    </location>
</feature>
<feature type="strand" evidence="93">
    <location>
        <begin position="105"/>
        <end position="109"/>
    </location>
</feature>
<feature type="strand" evidence="93">
    <location>
        <begin position="116"/>
        <end position="123"/>
    </location>
</feature>
<feature type="strand" evidence="94">
    <location>
        <begin position="827"/>
        <end position="829"/>
    </location>
</feature>
<feature type="turn" evidence="94">
    <location>
        <begin position="831"/>
        <end position="833"/>
    </location>
</feature>
<feature type="strand" evidence="94">
    <location>
        <begin position="839"/>
        <end position="841"/>
    </location>
</feature>
<feature type="strand" evidence="94">
    <location>
        <begin position="848"/>
        <end position="851"/>
    </location>
</feature>
<feature type="turn" evidence="94">
    <location>
        <begin position="852"/>
        <end position="856"/>
    </location>
</feature>
<feature type="strand" evidence="94">
    <location>
        <begin position="860"/>
        <end position="862"/>
    </location>
</feature>
<feature type="turn" evidence="94">
    <location>
        <begin position="869"/>
        <end position="871"/>
    </location>
</feature>
<feature type="helix" evidence="94">
    <location>
        <begin position="872"/>
        <end position="882"/>
    </location>
</feature>
<feature type="helix" evidence="94">
    <location>
        <begin position="888"/>
        <end position="894"/>
    </location>
</feature>
<feature type="helix" evidence="94">
    <location>
        <begin position="898"/>
        <end position="901"/>
    </location>
</feature>
<feature type="strand" evidence="94">
    <location>
        <begin position="907"/>
        <end position="909"/>
    </location>
</feature>
<feature type="strand" evidence="94">
    <location>
        <begin position="911"/>
        <end position="915"/>
    </location>
</feature>
<feature type="strand" evidence="94">
    <location>
        <begin position="918"/>
        <end position="920"/>
    </location>
</feature>
<feature type="strand" evidence="94">
    <location>
        <begin position="922"/>
        <end position="926"/>
    </location>
</feature>
<feature type="strand" evidence="89">
    <location>
        <begin position="1013"/>
        <end position="1021"/>
    </location>
</feature>
<feature type="helix" evidence="89">
    <location>
        <begin position="1023"/>
        <end position="1030"/>
    </location>
</feature>
<feature type="strand" evidence="89">
    <location>
        <begin position="1033"/>
        <end position="1038"/>
    </location>
</feature>
<feature type="helix" evidence="89">
    <location>
        <begin position="1048"/>
        <end position="1056"/>
    </location>
</feature>
<feature type="turn" evidence="89">
    <location>
        <begin position="1057"/>
        <end position="1059"/>
    </location>
</feature>
<feature type="helix" evidence="89">
    <location>
        <begin position="1060"/>
        <end position="1072"/>
    </location>
</feature>
<feature type="strand" evidence="89">
    <location>
        <begin position="1080"/>
        <end position="1084"/>
    </location>
</feature>
<feature type="turn" evidence="89">
    <location>
        <begin position="1086"/>
        <end position="1088"/>
    </location>
</feature>
<feature type="strand" evidence="89">
    <location>
        <begin position="1090"/>
        <end position="1095"/>
    </location>
</feature>
<feature type="helix" evidence="89">
    <location>
        <begin position="1100"/>
        <end position="1102"/>
    </location>
</feature>
<feature type="helix" evidence="89">
    <location>
        <begin position="1108"/>
        <end position="1114"/>
    </location>
</feature>
<feature type="helix" evidence="89">
    <location>
        <begin position="1115"/>
        <end position="1118"/>
    </location>
</feature>
<feature type="strand" evidence="89">
    <location>
        <begin position="1119"/>
        <end position="1124"/>
    </location>
</feature>
<feature type="helix" evidence="89">
    <location>
        <begin position="1130"/>
        <end position="1132"/>
    </location>
</feature>
<feature type="helix" evidence="89">
    <location>
        <begin position="1136"/>
        <end position="1146"/>
    </location>
</feature>
<feature type="strand" evidence="89">
    <location>
        <begin position="1149"/>
        <end position="1156"/>
    </location>
</feature>
<feature type="helix" evidence="89">
    <location>
        <begin position="1158"/>
        <end position="1168"/>
    </location>
</feature>
<feature type="strand" evidence="97">
    <location>
        <begin position="1345"/>
        <end position="1347"/>
    </location>
</feature>
<feature type="helix" evidence="96">
    <location>
        <begin position="1351"/>
        <end position="1361"/>
    </location>
</feature>
<feature type="strand" evidence="96">
    <location>
        <begin position="1364"/>
        <end position="1368"/>
    </location>
</feature>
<feature type="helix" evidence="96">
    <location>
        <begin position="1372"/>
        <end position="1381"/>
    </location>
</feature>
<feature type="strand" evidence="96">
    <location>
        <begin position="1389"/>
        <end position="1401"/>
    </location>
</feature>
<feature type="helix" evidence="96">
    <location>
        <begin position="1407"/>
        <end position="1417"/>
    </location>
</feature>
<feature type="strand" evidence="97">
    <location>
        <begin position="1421"/>
        <end position="1424"/>
    </location>
</feature>
<feature type="strand" evidence="96">
    <location>
        <begin position="1426"/>
        <end position="1428"/>
    </location>
</feature>
<feature type="helix" evidence="96">
    <location>
        <begin position="1429"/>
        <end position="1431"/>
    </location>
</feature>
<feature type="helix" evidence="96">
    <location>
        <begin position="1435"/>
        <end position="1442"/>
    </location>
</feature>
<feature type="strand" evidence="97">
    <location>
        <begin position="1449"/>
        <end position="1452"/>
    </location>
</feature>
<feature type="helix" evidence="96">
    <location>
        <begin position="1457"/>
        <end position="1467"/>
    </location>
</feature>
<feature type="strand" evidence="92">
    <location>
        <begin position="1544"/>
        <end position="1555"/>
    </location>
</feature>
<feature type="strand" evidence="92">
    <location>
        <begin position="1557"/>
        <end position="1562"/>
    </location>
</feature>
<feature type="helix" evidence="92">
    <location>
        <begin position="1567"/>
        <end position="1571"/>
    </location>
</feature>
<feature type="strand" evidence="92">
    <location>
        <begin position="1572"/>
        <end position="1576"/>
    </location>
</feature>
<feature type="strand" evidence="109">
    <location>
        <begin position="1582"/>
        <end position="1584"/>
    </location>
</feature>
<feature type="helix" evidence="92">
    <location>
        <begin position="1588"/>
        <end position="1590"/>
    </location>
</feature>
<feature type="strand" evidence="92">
    <location>
        <begin position="1594"/>
        <end position="1597"/>
    </location>
</feature>
<feature type="helix" evidence="92">
    <location>
        <begin position="1602"/>
        <end position="1612"/>
    </location>
</feature>
<feature type="helix" evidence="92">
    <location>
        <begin position="1619"/>
        <end position="1630"/>
    </location>
</feature>
<feature type="strand" evidence="109">
    <location>
        <begin position="1639"/>
        <end position="1642"/>
    </location>
</feature>
<feature type="turn" evidence="92">
    <location>
        <begin position="1648"/>
        <end position="1650"/>
    </location>
</feature>
<feature type="helix" evidence="92">
    <location>
        <begin position="1651"/>
        <end position="1661"/>
    </location>
</feature>
<feature type="strand" evidence="92">
    <location>
        <begin position="1667"/>
        <end position="1669"/>
    </location>
</feature>
<feature type="helix" evidence="92">
    <location>
        <begin position="1670"/>
        <end position="1681"/>
    </location>
</feature>
<feature type="helix" evidence="92">
    <location>
        <begin position="1685"/>
        <end position="1694"/>
    </location>
</feature>
<feature type="helix" evidence="92">
    <location>
        <begin position="1705"/>
        <end position="1713"/>
    </location>
</feature>
<feature type="strand" evidence="92">
    <location>
        <begin position="1722"/>
        <end position="1729"/>
    </location>
</feature>
<feature type="turn" evidence="92">
    <location>
        <begin position="1730"/>
        <end position="1732"/>
    </location>
</feature>
<feature type="strand" evidence="92">
    <location>
        <begin position="1733"/>
        <end position="1740"/>
    </location>
</feature>
<feature type="helix" evidence="92">
    <location>
        <begin position="1742"/>
        <end position="1745"/>
    </location>
</feature>
<feature type="strand" evidence="92">
    <location>
        <begin position="1746"/>
        <end position="1749"/>
    </location>
</feature>
<feature type="helix" evidence="92">
    <location>
        <begin position="1753"/>
        <end position="1758"/>
    </location>
</feature>
<feature type="strand" evidence="92">
    <location>
        <begin position="1760"/>
        <end position="1763"/>
    </location>
</feature>
<feature type="strand" evidence="92">
    <location>
        <begin position="1767"/>
        <end position="1794"/>
    </location>
</feature>
<feature type="helix" evidence="109">
    <location>
        <begin position="1795"/>
        <end position="1797"/>
    </location>
</feature>
<feature type="strand" evidence="92">
    <location>
        <begin position="1799"/>
        <end position="1806"/>
    </location>
</feature>
<feature type="helix" evidence="92">
    <location>
        <begin position="1808"/>
        <end position="1810"/>
    </location>
</feature>
<feature type="strand" evidence="92">
    <location>
        <begin position="1812"/>
        <end position="1826"/>
    </location>
</feature>
<feature type="strand" evidence="92">
    <location>
        <begin position="1829"/>
        <end position="1846"/>
    </location>
</feature>
<feature type="strand" evidence="92">
    <location>
        <begin position="1848"/>
        <end position="1851"/>
    </location>
</feature>
<feature type="helix" evidence="115">
    <location>
        <begin position="3251"/>
        <end position="3254"/>
    </location>
</feature>
<feature type="strand" evidence="115">
    <location>
        <begin position="3257"/>
        <end position="3262"/>
    </location>
</feature>
<feature type="strand" evidence="115">
    <location>
        <begin position="3265"/>
        <end position="3272"/>
    </location>
</feature>
<feature type="strand" evidence="115">
    <location>
        <begin position="3275"/>
        <end position="3279"/>
    </location>
</feature>
<feature type="helix" evidence="115">
    <location>
        <begin position="3280"/>
        <end position="3283"/>
    </location>
</feature>
<feature type="helix" evidence="116">
    <location>
        <begin position="3286"/>
        <end position="3288"/>
    </location>
</feature>
<feature type="strand" evidence="115">
    <location>
        <begin position="3289"/>
        <end position="3291"/>
    </location>
</feature>
<feature type="helix" evidence="115">
    <location>
        <begin position="3294"/>
        <end position="3299"/>
    </location>
</feature>
<feature type="helix" evidence="115">
    <location>
        <begin position="3303"/>
        <end position="3305"/>
    </location>
</feature>
<feature type="strand" evidence="115">
    <location>
        <begin position="3306"/>
        <end position="3310"/>
    </location>
</feature>
<feature type="strand" evidence="115">
    <location>
        <begin position="3313"/>
        <end position="3315"/>
    </location>
</feature>
<feature type="strand" evidence="115">
    <location>
        <begin position="3317"/>
        <end position="3323"/>
    </location>
</feature>
<feature type="strand" evidence="115">
    <location>
        <begin position="3326"/>
        <end position="3333"/>
    </location>
</feature>
<feature type="strand" evidence="115">
    <location>
        <begin position="3340"/>
        <end position="3343"/>
    </location>
</feature>
<feature type="strand" evidence="115">
    <location>
        <begin position="3351"/>
        <end position="3358"/>
    </location>
</feature>
<feature type="strand" evidence="115">
    <location>
        <begin position="3361"/>
        <end position="3369"/>
    </location>
</feature>
<feature type="helix" evidence="100">
    <location>
        <begin position="3379"/>
        <end position="3381"/>
    </location>
</feature>
<feature type="strand" evidence="115">
    <location>
        <begin position="3388"/>
        <end position="3393"/>
    </location>
</feature>
<feature type="strand" evidence="115">
    <location>
        <begin position="3396"/>
        <end position="3406"/>
    </location>
</feature>
<feature type="turn" evidence="84">
    <location>
        <begin position="3408"/>
        <end position="3410"/>
    </location>
</feature>
<feature type="strand" evidence="115">
    <location>
        <begin position="3412"/>
        <end position="3415"/>
    </location>
</feature>
<feature type="strand" evidence="115">
    <location>
        <begin position="3421"/>
        <end position="3424"/>
    </location>
</feature>
<feature type="strand" evidence="105">
    <location>
        <begin position="3427"/>
        <end position="3430"/>
    </location>
</feature>
<feature type="helix" evidence="115">
    <location>
        <begin position="3441"/>
        <end position="3453"/>
    </location>
</feature>
<feature type="turn" evidence="103">
    <location>
        <begin position="3458"/>
        <end position="3460"/>
    </location>
</feature>
<feature type="helix" evidence="115">
    <location>
        <begin position="3467"/>
        <end position="3476"/>
    </location>
</feature>
<feature type="strand" evidence="88">
    <location>
        <begin position="3477"/>
        <end position="3479"/>
    </location>
</feature>
<feature type="helix" evidence="115">
    <location>
        <begin position="3484"/>
        <end position="3489"/>
    </location>
</feature>
<feature type="helix" evidence="115">
    <location>
        <begin position="3491"/>
        <end position="3497"/>
    </location>
</feature>
<feature type="helix" evidence="115">
    <location>
        <begin position="3501"/>
        <end position="3514"/>
    </location>
</feature>
<feature type="strand" evidence="91">
    <location>
        <begin position="3516"/>
        <end position="3518"/>
    </location>
</feature>
<feature type="strand" evidence="85">
    <location>
        <begin position="3521"/>
        <end position="3523"/>
    </location>
</feature>
<feature type="strand" evidence="115">
    <location>
        <begin position="3524"/>
        <end position="3526"/>
    </location>
</feature>
<feature type="helix" evidence="115">
    <location>
        <begin position="3533"/>
        <end position="3539"/>
    </location>
</feature>
<feature type="turn" evidence="99">
    <location>
        <begin position="3540"/>
        <end position="3542"/>
    </location>
</feature>
<feature type="helix" evidence="90">
    <location>
        <begin position="3837"/>
        <end position="3855"/>
    </location>
</feature>
<feature type="helix" evidence="113">
    <location>
        <begin position="3858"/>
        <end position="3860"/>
    </location>
</feature>
<feature type="helix" evidence="90">
    <location>
        <begin position="3862"/>
        <end position="3876"/>
    </location>
</feature>
<feature type="strand" evidence="87">
    <location>
        <begin position="3878"/>
        <end position="3880"/>
    </location>
</feature>
<feature type="helix" evidence="90">
    <location>
        <begin position="3881"/>
        <end position="3905"/>
    </location>
</feature>
<feature type="helix" evidence="87">
    <location>
        <begin position="3906"/>
        <end position="3909"/>
    </location>
</feature>
<feature type="turn" evidence="87">
    <location>
        <begin position="3910"/>
        <end position="3912"/>
    </location>
</feature>
<feature type="helix" evidence="87">
    <location>
        <begin position="3913"/>
        <end position="3916"/>
    </location>
</feature>
<feature type="helix" evidence="90">
    <location>
        <begin position="3922"/>
        <end position="3924"/>
    </location>
</feature>
<feature type="helix" evidence="90">
    <location>
        <begin position="3929"/>
        <end position="3946"/>
    </location>
</feature>
<feature type="helix" evidence="90">
    <location>
        <begin position="3951"/>
        <end position="3956"/>
    </location>
</feature>
<feature type="turn" evidence="90">
    <location>
        <begin position="3959"/>
        <end position="3963"/>
    </location>
</feature>
<feature type="turn" evidence="90">
    <location>
        <begin position="3970"/>
        <end position="3972"/>
    </location>
</feature>
<feature type="helix" evidence="90">
    <location>
        <begin position="3973"/>
        <end position="3987"/>
    </location>
</feature>
<feature type="helix" evidence="110">
    <location>
        <begin position="3997"/>
        <end position="4017"/>
    </location>
</feature>
<feature type="helix" evidence="110">
    <location>
        <begin position="4020"/>
        <end position="4030"/>
    </location>
</feature>
<feature type="strand" evidence="110">
    <location>
        <begin position="4035"/>
        <end position="4037"/>
    </location>
</feature>
<feature type="strand" evidence="110">
    <location>
        <begin position="4046"/>
        <end position="4051"/>
    </location>
</feature>
<feature type="helix" evidence="110">
    <location>
        <begin position="4054"/>
        <end position="4060"/>
    </location>
</feature>
<feature type="strand" evidence="110">
    <location>
        <begin position="4065"/>
        <end position="4068"/>
    </location>
</feature>
<feature type="strand" evidence="110">
    <location>
        <begin position="4071"/>
        <end position="4079"/>
    </location>
</feature>
<feature type="helix" evidence="110">
    <location>
        <begin position="4088"/>
        <end position="4090"/>
    </location>
</feature>
<feature type="turn" evidence="110">
    <location>
        <begin position="4093"/>
        <end position="4095"/>
    </location>
</feature>
<feature type="helix" evidence="110">
    <location>
        <begin position="4096"/>
        <end position="4098"/>
    </location>
</feature>
<feature type="strand" evidence="110">
    <location>
        <begin position="4103"/>
        <end position="4109"/>
    </location>
</feature>
<feature type="strand" evidence="86">
    <location>
        <begin position="4120"/>
        <end position="4125"/>
    </location>
</feature>
<feature type="strand" evidence="83">
    <location>
        <begin position="4127"/>
        <end position="4137"/>
    </location>
</feature>
<feature type="strand" evidence="83">
    <location>
        <begin position="4141"/>
        <end position="4150"/>
    </location>
</feature>
<feature type="turn" evidence="83">
    <location>
        <begin position="4152"/>
        <end position="4154"/>
    </location>
</feature>
<feature type="strand" evidence="83">
    <location>
        <begin position="4157"/>
        <end position="4164"/>
    </location>
</feature>
<feature type="strand" evidence="83">
    <location>
        <begin position="4170"/>
        <end position="4174"/>
    </location>
</feature>
<feature type="strand" evidence="83">
    <location>
        <begin position="4176"/>
        <end position="4179"/>
    </location>
</feature>
<feature type="strand" evidence="83">
    <location>
        <begin position="4181"/>
        <end position="4186"/>
    </location>
</feature>
<feature type="strand" evidence="83">
    <location>
        <begin position="4190"/>
        <end position="4194"/>
    </location>
</feature>
<feature type="strand" evidence="83">
    <location>
        <begin position="4201"/>
        <end position="4208"/>
    </location>
</feature>
<feature type="helix" evidence="83">
    <location>
        <begin position="4213"/>
        <end position="4226"/>
    </location>
</feature>
<feature type="helix" evidence="107">
    <location>
        <begin position="4238"/>
        <end position="4240"/>
    </location>
</feature>
<feature type="helix" evidence="102">
    <location>
        <begin position="4243"/>
        <end position="4248"/>
    </location>
</feature>
<feature type="strand" evidence="102">
    <location>
        <begin position="4250"/>
        <end position="4252"/>
    </location>
</feature>
<feature type="helix" evidence="102">
    <location>
        <begin position="4253"/>
        <end position="4262"/>
    </location>
</feature>
<feature type="strand" evidence="102">
    <location>
        <begin position="4284"/>
        <end position="4288"/>
    </location>
</feature>
<feature type="strand" evidence="102">
    <location>
        <begin position="4295"/>
        <end position="4300"/>
    </location>
</feature>
<feature type="helix" evidence="102">
    <location>
        <begin position="4301"/>
        <end position="4303"/>
    </location>
</feature>
<feature type="helix" evidence="102">
    <location>
        <begin position="4305"/>
        <end position="4308"/>
    </location>
</feature>
<feature type="strand" evidence="102">
    <location>
        <begin position="4314"/>
        <end position="4318"/>
    </location>
</feature>
<feature type="strand" evidence="102">
    <location>
        <begin position="4325"/>
        <end position="4330"/>
    </location>
</feature>
<feature type="helix" evidence="102">
    <location>
        <begin position="4331"/>
        <end position="4333"/>
    </location>
</feature>
<feature type="helix" evidence="102">
    <location>
        <begin position="4337"/>
        <end position="4343"/>
    </location>
</feature>
<feature type="turn" evidence="102">
    <location>
        <begin position="4348"/>
        <end position="4350"/>
    </location>
</feature>
<feature type="strand" evidence="111">
    <location>
        <begin position="4351"/>
        <end position="4353"/>
    </location>
</feature>
<feature type="turn" evidence="102">
    <location>
        <begin position="4354"/>
        <end position="4357"/>
    </location>
</feature>
<feature type="strand" evidence="113">
    <location>
        <begin position="4490"/>
        <end position="4492"/>
    </location>
</feature>
<feature type="helix" evidence="113">
    <location>
        <begin position="4493"/>
        <end position="4501"/>
    </location>
</feature>
<feature type="strand" evidence="114">
    <location>
        <begin position="4505"/>
        <end position="4507"/>
    </location>
</feature>
<feature type="helix" evidence="113">
    <location>
        <begin position="4509"/>
        <end position="4517"/>
    </location>
</feature>
<feature type="helix" evidence="113">
    <location>
        <begin position="4523"/>
        <end position="4527"/>
    </location>
</feature>
<feature type="turn" evidence="113">
    <location>
        <begin position="4529"/>
        <end position="4532"/>
    </location>
</feature>
<feature type="strand" evidence="113">
    <location>
        <begin position="4534"/>
        <end position="4537"/>
    </location>
</feature>
<feature type="helix" evidence="113">
    <location>
        <begin position="4540"/>
        <end position="4544"/>
    </location>
</feature>
<feature type="helix" evidence="113">
    <location>
        <begin position="4545"/>
        <end position="4547"/>
    </location>
</feature>
<feature type="helix" evidence="113">
    <location>
        <begin position="4548"/>
        <end position="4567"/>
    </location>
</feature>
<feature type="strand" evidence="113">
    <location>
        <begin position="4570"/>
        <end position="4573"/>
    </location>
</feature>
<feature type="helix" evidence="113">
    <location>
        <begin position="4576"/>
        <end position="4578"/>
    </location>
</feature>
<feature type="strand" evidence="113">
    <location>
        <begin position="4600"/>
        <end position="4602"/>
    </location>
</feature>
<feature type="helix" evidence="113">
    <location>
        <begin position="4604"/>
        <end position="4616"/>
    </location>
</feature>
<feature type="turn" evidence="113">
    <location>
        <begin position="4617"/>
        <end position="4620"/>
    </location>
</feature>
<feature type="helix" evidence="113">
    <location>
        <begin position="4621"/>
        <end position="4624"/>
    </location>
</feature>
<feature type="helix" evidence="113">
    <location>
        <begin position="4645"/>
        <end position="4655"/>
    </location>
</feature>
<feature type="helix" evidence="113">
    <location>
        <begin position="4667"/>
        <end position="4669"/>
    </location>
</feature>
<feature type="strand" evidence="113">
    <location>
        <begin position="4671"/>
        <end position="4673"/>
    </location>
</feature>
<feature type="helix" evidence="113">
    <location>
        <begin position="4674"/>
        <end position="4686"/>
    </location>
</feature>
<feature type="helix" evidence="113">
    <location>
        <begin position="4687"/>
        <end position="4689"/>
    </location>
</feature>
<feature type="helix" evidence="113">
    <location>
        <begin position="4692"/>
        <end position="4694"/>
    </location>
</feature>
<feature type="strand" evidence="113">
    <location>
        <begin position="4695"/>
        <end position="4704"/>
    </location>
</feature>
<feature type="strand" evidence="113">
    <location>
        <begin position="4707"/>
        <end position="4717"/>
    </location>
</feature>
<feature type="turn" evidence="113">
    <location>
        <begin position="4718"/>
        <end position="4720"/>
    </location>
</feature>
<feature type="strand" evidence="113">
    <location>
        <begin position="4721"/>
        <end position="4724"/>
    </location>
</feature>
<feature type="strand" evidence="113">
    <location>
        <begin position="4731"/>
        <end position="4734"/>
    </location>
</feature>
<feature type="helix" evidence="113">
    <location>
        <begin position="4737"/>
        <end position="4744"/>
    </location>
</feature>
<feature type="helix" evidence="113">
    <location>
        <begin position="4748"/>
        <end position="4751"/>
    </location>
</feature>
<feature type="strand" evidence="113">
    <location>
        <begin position="4754"/>
        <end position="4759"/>
    </location>
</feature>
<feature type="strand" evidence="113">
    <location>
        <begin position="4766"/>
        <end position="4770"/>
    </location>
</feature>
<feature type="helix" evidence="113">
    <location>
        <begin position="4786"/>
        <end position="4793"/>
    </location>
</feature>
<feature type="turn" evidence="113">
    <location>
        <begin position="4794"/>
        <end position="4798"/>
    </location>
</feature>
<feature type="helix" evidence="113">
    <location>
        <begin position="4818"/>
        <end position="4822"/>
    </location>
</feature>
<feature type="helix" evidence="113">
    <location>
        <begin position="4823"/>
        <end position="4827"/>
    </location>
</feature>
<feature type="helix" evidence="113">
    <location>
        <begin position="4835"/>
        <end position="4847"/>
    </location>
</feature>
<feature type="turn" evidence="113">
    <location>
        <begin position="4848"/>
        <end position="4851"/>
    </location>
</feature>
<feature type="helix" evidence="113">
    <location>
        <begin position="4859"/>
        <end position="4861"/>
    </location>
</feature>
<feature type="helix" evidence="113">
    <location>
        <begin position="4875"/>
        <end position="4877"/>
    </location>
</feature>
<feature type="helix" evidence="113">
    <location>
        <begin position="4881"/>
        <end position="4885"/>
    </location>
</feature>
<feature type="helix" evidence="113">
    <location>
        <begin position="4890"/>
        <end position="4899"/>
    </location>
</feature>
<feature type="turn" evidence="113">
    <location>
        <begin position="4900"/>
        <end position="4902"/>
    </location>
</feature>
<feature type="strand" evidence="113">
    <location>
        <begin position="4908"/>
        <end position="4913"/>
    </location>
</feature>
<feature type="strand" evidence="113">
    <location>
        <begin position="4918"/>
        <end position="4920"/>
    </location>
</feature>
<feature type="strand" evidence="113">
    <location>
        <begin position="4925"/>
        <end position="4928"/>
    </location>
</feature>
<feature type="helix" evidence="113">
    <location>
        <begin position="4931"/>
        <end position="4949"/>
    </location>
</feature>
<feature type="strand" evidence="113">
    <location>
        <begin position="4953"/>
        <end position="4956"/>
    </location>
</feature>
<feature type="turn" evidence="113">
    <location>
        <begin position="4963"/>
        <end position="4965"/>
    </location>
</feature>
<feature type="helix" evidence="113">
    <location>
        <begin position="4966"/>
        <end position="4975"/>
    </location>
</feature>
<feature type="strand" evidence="113">
    <location>
        <begin position="4979"/>
        <end position="4985"/>
    </location>
</feature>
<feature type="helix" evidence="113">
    <location>
        <begin position="4991"/>
        <end position="4994"/>
    </location>
</feature>
<feature type="helix" evidence="113">
    <location>
        <begin position="4997"/>
        <end position="5007"/>
    </location>
</feature>
<feature type="helix" evidence="113">
    <location>
        <begin position="5008"/>
        <end position="5010"/>
    </location>
</feature>
<feature type="strand" evidence="113">
    <location>
        <begin position="5012"/>
        <end position="5014"/>
    </location>
</feature>
<feature type="helix" evidence="113">
    <location>
        <begin position="5017"/>
        <end position="5031"/>
    </location>
</feature>
<feature type="strand" evidence="113">
    <location>
        <begin position="5035"/>
        <end position="5038"/>
    </location>
</feature>
<feature type="strand" evidence="113">
    <location>
        <begin position="5041"/>
        <end position="5044"/>
    </location>
</feature>
<feature type="strand" evidence="113">
    <location>
        <begin position="5053"/>
        <end position="5055"/>
    </location>
</feature>
<feature type="helix" evidence="113">
    <location>
        <begin position="5056"/>
        <end position="5077"/>
    </location>
</feature>
<feature type="helix" evidence="113">
    <location>
        <begin position="5081"/>
        <end position="5083"/>
    </location>
</feature>
<feature type="helix" evidence="113">
    <location>
        <begin position="5087"/>
        <end position="5097"/>
    </location>
</feature>
<feature type="turn" evidence="113">
    <location>
        <begin position="5098"/>
        <end position="5100"/>
    </location>
</feature>
<feature type="helix" evidence="113">
    <location>
        <begin position="5108"/>
        <end position="5121"/>
    </location>
</feature>
<feature type="strand" evidence="113">
    <location>
        <begin position="5122"/>
        <end position="5127"/>
    </location>
</feature>
<feature type="strand" evidence="113">
    <location>
        <begin position="5130"/>
        <end position="5136"/>
    </location>
</feature>
<feature type="helix" evidence="113">
    <location>
        <begin position="5137"/>
        <end position="5140"/>
    </location>
</feature>
<feature type="turn" evidence="113">
    <location>
        <begin position="5141"/>
        <end position="5143"/>
    </location>
</feature>
<feature type="helix" evidence="113">
    <location>
        <begin position="5148"/>
        <end position="5158"/>
    </location>
</feature>
<feature type="helix" evidence="113">
    <location>
        <begin position="5165"/>
        <end position="5167"/>
    </location>
</feature>
<feature type="strand" evidence="114">
    <location>
        <begin position="5169"/>
        <end position="5171"/>
    </location>
</feature>
<feature type="strand" evidence="113">
    <location>
        <begin position="5184"/>
        <end position="5190"/>
    </location>
</feature>
<feature type="strand" evidence="113">
    <location>
        <begin position="5192"/>
        <end position="5200"/>
    </location>
</feature>
<feature type="helix" evidence="113">
    <location>
        <begin position="5203"/>
        <end position="5211"/>
    </location>
</feature>
<feature type="strand" evidence="113">
    <location>
        <begin position="5217"/>
        <end position="5219"/>
    </location>
</feature>
<feature type="helix" evidence="113">
    <location>
        <begin position="5221"/>
        <end position="5234"/>
    </location>
</feature>
<feature type="helix" evidence="113">
    <location>
        <begin position="5236"/>
        <end position="5240"/>
    </location>
</feature>
<feature type="helix" evidence="113">
    <location>
        <begin position="5244"/>
        <end position="5263"/>
    </location>
</feature>
<feature type="helix" evidence="113">
    <location>
        <begin position="5278"/>
        <end position="5282"/>
    </location>
</feature>
<feature type="helix" evidence="113">
    <location>
        <begin position="5283"/>
        <end position="5285"/>
    </location>
</feature>
<feature type="turn" evidence="112">
    <location>
        <begin position="5307"/>
        <end position="5309"/>
    </location>
</feature>
<feature type="strand" evidence="112">
    <location>
        <begin position="5312"/>
        <end position="5314"/>
    </location>
</feature>
<feature type="strand" evidence="112">
    <location>
        <begin position="5316"/>
        <end position="5320"/>
    </location>
</feature>
<feature type="helix" evidence="112">
    <location>
        <begin position="5328"/>
        <end position="5335"/>
    </location>
</feature>
<feature type="strand" evidence="112">
    <location>
        <begin position="5343"/>
        <end position="5349"/>
    </location>
</feature>
<feature type="helix" evidence="112">
    <location>
        <begin position="5361"/>
        <end position="5363"/>
    </location>
</feature>
<feature type="strand" evidence="112">
    <location>
        <begin position="5368"/>
        <end position="5372"/>
    </location>
</feature>
<feature type="turn" evidence="112">
    <location>
        <begin position="5374"/>
        <end position="5376"/>
    </location>
</feature>
<feature type="strand" evidence="112">
    <location>
        <begin position="5382"/>
        <end position="5386"/>
    </location>
</feature>
<feature type="turn" evidence="112">
    <location>
        <begin position="5393"/>
        <end position="5397"/>
    </location>
</feature>
<feature type="helix" evidence="112">
    <location>
        <begin position="5404"/>
        <end position="5412"/>
    </location>
</feature>
<feature type="helix" evidence="112">
    <location>
        <begin position="5418"/>
        <end position="5426"/>
    </location>
</feature>
<feature type="helix" evidence="112">
    <location>
        <begin position="5429"/>
        <end position="5446"/>
    </location>
</feature>
<feature type="helix" evidence="112">
    <location>
        <begin position="5447"/>
        <end position="5449"/>
    </location>
</feature>
<feature type="strand" evidence="112">
    <location>
        <begin position="5453"/>
        <end position="5457"/>
    </location>
</feature>
<feature type="strand" evidence="112">
    <location>
        <begin position="5461"/>
        <end position="5468"/>
    </location>
</feature>
<feature type="strand" evidence="112">
    <location>
        <begin position="5483"/>
        <end position="5488"/>
    </location>
</feature>
<feature type="strand" evidence="112">
    <location>
        <begin position="5493"/>
        <end position="5503"/>
    </location>
</feature>
<feature type="strand" evidence="112">
    <location>
        <begin position="5509"/>
        <end position="5516"/>
    </location>
</feature>
<feature type="strand" evidence="112">
    <location>
        <begin position="5525"/>
        <end position="5528"/>
    </location>
</feature>
<feature type="helix" evidence="112">
    <location>
        <begin position="5561"/>
        <end position="5566"/>
    </location>
</feature>
<feature type="helix" evidence="112">
    <location>
        <begin position="5567"/>
        <end position="5570"/>
    </location>
</feature>
<feature type="helix" evidence="112">
    <location>
        <begin position="5572"/>
        <end position="5575"/>
    </location>
</feature>
<feature type="strand" evidence="112">
    <location>
        <begin position="5576"/>
        <end position="5581"/>
    </location>
</feature>
<feature type="helix" evidence="112">
    <location>
        <begin position="5589"/>
        <end position="5599"/>
    </location>
</feature>
<feature type="strand" evidence="112">
    <location>
        <begin position="5605"/>
        <end position="5610"/>
    </location>
</feature>
<feature type="helix" evidence="112">
    <location>
        <begin position="5612"/>
        <end position="5616"/>
    </location>
</feature>
<feature type="turn" evidence="112">
    <location>
        <begin position="5617"/>
        <end position="5622"/>
    </location>
</feature>
<feature type="strand" evidence="112">
    <location>
        <begin position="5623"/>
        <end position="5626"/>
    </location>
</feature>
<feature type="strand" evidence="112">
    <location>
        <begin position="5630"/>
        <end position="5633"/>
    </location>
</feature>
<feature type="strand" evidence="112">
    <location>
        <begin position="5640"/>
        <end position="5642"/>
    </location>
</feature>
<feature type="strand" evidence="112">
    <location>
        <begin position="5647"/>
        <end position="5649"/>
    </location>
</feature>
<feature type="strand" evidence="112">
    <location>
        <begin position="5655"/>
        <end position="5660"/>
    </location>
</feature>
<feature type="turn" evidence="112">
    <location>
        <begin position="5661"/>
        <end position="5663"/>
    </location>
</feature>
<feature type="strand" evidence="112">
    <location>
        <begin position="5666"/>
        <end position="5668"/>
    </location>
</feature>
<feature type="strand" evidence="112">
    <location>
        <begin position="5670"/>
        <end position="5674"/>
    </location>
</feature>
<feature type="helix" evidence="112">
    <location>
        <begin position="5677"/>
        <end position="5679"/>
    </location>
</feature>
<feature type="helix" evidence="112">
    <location>
        <begin position="5682"/>
        <end position="5691"/>
    </location>
</feature>
<feature type="strand" evidence="112">
    <location>
        <begin position="5695"/>
        <end position="5700"/>
    </location>
</feature>
<feature type="helix" evidence="112">
    <location>
        <begin position="5720"/>
        <end position="5722"/>
    </location>
</feature>
<feature type="helix" evidence="112">
    <location>
        <begin position="5725"/>
        <end position="5730"/>
    </location>
</feature>
<feature type="strand" evidence="112">
    <location>
        <begin position="5743"/>
        <end position="5745"/>
    </location>
</feature>
<feature type="helix" evidence="112">
    <location>
        <begin position="5747"/>
        <end position="5750"/>
    </location>
</feature>
<feature type="turn" evidence="112">
    <location>
        <begin position="5751"/>
        <end position="5754"/>
    </location>
</feature>
<feature type="turn" evidence="112">
    <location>
        <begin position="5756"/>
        <end position="5759"/>
    </location>
</feature>
<feature type="turn" evidence="112">
    <location>
        <begin position="5791"/>
        <end position="5793"/>
    </location>
</feature>
<feature type="helix" evidence="112">
    <location>
        <begin position="5794"/>
        <end position="5796"/>
    </location>
</feature>
<feature type="turn" evidence="112">
    <location>
        <begin position="5797"/>
        <end position="5800"/>
    </location>
</feature>
<feature type="strand" evidence="112">
    <location>
        <begin position="5815"/>
        <end position="5818"/>
    </location>
</feature>
<feature type="turn" evidence="112">
    <location>
        <begin position="5819"/>
        <end position="5827"/>
    </location>
</feature>
<feature type="turn" evidence="112">
    <location>
        <begin position="5834"/>
        <end position="5836"/>
    </location>
</feature>
<feature type="strand" evidence="112">
    <location>
        <begin position="5843"/>
        <end position="5848"/>
    </location>
</feature>
<feature type="turn" evidence="112">
    <location>
        <begin position="5854"/>
        <end position="5856"/>
    </location>
</feature>
<feature type="helix" evidence="112">
    <location>
        <begin position="5859"/>
        <end position="5866"/>
    </location>
</feature>
<feature type="strand" evidence="112">
    <location>
        <begin position="5873"/>
        <end position="5876"/>
    </location>
</feature>
<feature type="helix" evidence="112">
    <location>
        <begin position="5882"/>
        <end position="5884"/>
    </location>
</feature>
<feature type="strand" evidence="112">
    <location>
        <begin position="5893"/>
        <end position="5895"/>
    </location>
</feature>
<feature type="strand" evidence="107">
    <location>
        <begin position="5922"/>
        <end position="5924"/>
    </location>
</feature>
<feature type="strand" evidence="107">
    <location>
        <begin position="5928"/>
        <end position="5931"/>
    </location>
</feature>
<feature type="helix" evidence="107">
    <location>
        <begin position="5933"/>
        <end position="5935"/>
    </location>
</feature>
<feature type="strand" evidence="107">
    <location>
        <begin position="5955"/>
        <end position="5957"/>
    </location>
</feature>
<feature type="helix" evidence="107">
    <location>
        <begin position="5978"/>
        <end position="5983"/>
    </location>
</feature>
<feature type="strand" evidence="107">
    <location>
        <begin position="5986"/>
        <end position="5997"/>
    </location>
</feature>
<feature type="strand" evidence="107">
    <location>
        <begin position="6000"/>
        <end position="6002"/>
    </location>
</feature>
<feature type="strand" evidence="107">
    <location>
        <begin position="6006"/>
        <end position="6016"/>
    </location>
</feature>
<feature type="strand" evidence="107">
    <location>
        <begin position="6018"/>
        <end position="6020"/>
    </location>
</feature>
<feature type="strand" evidence="107">
    <location>
        <begin position="6024"/>
        <end position="6028"/>
    </location>
</feature>
<feature type="strand" evidence="107">
    <location>
        <begin position="6033"/>
        <end position="6037"/>
    </location>
</feature>
<feature type="helix" evidence="107">
    <location>
        <begin position="6046"/>
        <end position="6053"/>
    </location>
</feature>
<feature type="helix" evidence="107">
    <location>
        <begin position="6054"/>
        <end position="6057"/>
    </location>
</feature>
<feature type="helix" evidence="107">
    <location>
        <begin position="6061"/>
        <end position="6076"/>
    </location>
</feature>
<feature type="turn" evidence="107">
    <location>
        <begin position="6077"/>
        <end position="6079"/>
    </location>
</feature>
<feature type="strand" evidence="107">
    <location>
        <begin position="6084"/>
        <end position="6089"/>
    </location>
</feature>
<feature type="helix" evidence="107">
    <location>
        <begin position="6091"/>
        <end position="6100"/>
    </location>
</feature>
<feature type="strand" evidence="107">
    <location>
        <begin position="6112"/>
        <end position="6115"/>
    </location>
</feature>
<feature type="strand" evidence="107">
    <location>
        <begin position="6118"/>
        <end position="6120"/>
    </location>
</feature>
<feature type="turn" evidence="107">
    <location>
        <begin position="6121"/>
        <end position="6124"/>
    </location>
</feature>
<feature type="strand" evidence="107">
    <location>
        <begin position="6125"/>
        <end position="6127"/>
    </location>
</feature>
<feature type="turn" evidence="107">
    <location>
        <begin position="6129"/>
        <end position="6131"/>
    </location>
</feature>
<feature type="strand" evidence="107">
    <location>
        <begin position="6137"/>
        <end position="6140"/>
    </location>
</feature>
<feature type="strand" evidence="107">
    <location>
        <begin position="6142"/>
        <end position="6145"/>
    </location>
</feature>
<feature type="helix" evidence="107">
    <location>
        <begin position="6146"/>
        <end position="6149"/>
    </location>
</feature>
<feature type="helix" evidence="107">
    <location>
        <begin position="6155"/>
        <end position="6162"/>
    </location>
</feature>
<feature type="strand" evidence="108">
    <location>
        <begin position="6164"/>
        <end position="6166"/>
    </location>
</feature>
<feature type="helix" evidence="107">
    <location>
        <begin position="6172"/>
        <end position="6188"/>
    </location>
</feature>
<feature type="helix" evidence="107">
    <location>
        <begin position="6204"/>
        <end position="6226"/>
    </location>
</feature>
<feature type="strand" evidence="107">
    <location>
        <begin position="6229"/>
        <end position="6235"/>
    </location>
</feature>
<feature type="strand" evidence="107">
    <location>
        <begin position="6242"/>
        <end position="6245"/>
    </location>
</feature>
<feature type="strand" evidence="107">
    <location>
        <begin position="6247"/>
        <end position="6256"/>
    </location>
</feature>
<feature type="strand" evidence="106">
    <location>
        <begin position="6263"/>
        <end position="6267"/>
    </location>
</feature>
<feature type="helix" evidence="107">
    <location>
        <begin position="6272"/>
        <end position="6275"/>
    </location>
</feature>
<feature type="turn" evidence="107">
    <location>
        <begin position="6276"/>
        <end position="6278"/>
    </location>
</feature>
<feature type="strand" evidence="107">
    <location>
        <begin position="6281"/>
        <end position="6288"/>
    </location>
</feature>
<feature type="strand" evidence="107">
    <location>
        <begin position="6296"/>
        <end position="6303"/>
    </location>
</feature>
<feature type="strand" evidence="107">
    <location>
        <begin position="6312"/>
        <end position="6314"/>
    </location>
</feature>
<feature type="strand" evidence="107">
    <location>
        <begin position="6320"/>
        <end position="6322"/>
    </location>
</feature>
<feature type="strand" evidence="107">
    <location>
        <begin position="6324"/>
        <end position="6326"/>
    </location>
</feature>
<feature type="strand" evidence="107">
    <location>
        <begin position="6328"/>
        <end position="6330"/>
    </location>
</feature>
<feature type="helix" evidence="107">
    <location>
        <begin position="6335"/>
        <end position="6338"/>
    </location>
</feature>
<feature type="strand" evidence="107">
    <location>
        <begin position="6341"/>
        <end position="6343"/>
    </location>
</feature>
<feature type="strand" evidence="107">
    <location>
        <begin position="6373"/>
        <end position="6376"/>
    </location>
</feature>
<feature type="strand" evidence="107">
    <location>
        <begin position="6381"/>
        <end position="6383"/>
    </location>
</feature>
<feature type="helix" evidence="107">
    <location>
        <begin position="6387"/>
        <end position="6405"/>
    </location>
</feature>
<feature type="strand" evidence="107">
    <location>
        <begin position="6408"/>
        <end position="6412"/>
    </location>
</feature>
<feature type="helix" evidence="107">
    <location>
        <begin position="6419"/>
        <end position="6425"/>
    </location>
</feature>
<feature type="helix" evidence="95">
    <location>
        <begin position="6431"/>
        <end position="6441"/>
    </location>
</feature>
<feature type="strand" evidence="95">
    <location>
        <begin position="6453"/>
        <end position="6456"/>
    </location>
</feature>
<feature type="strand" evidence="95">
    <location>
        <begin position="6459"/>
        <end position="6464"/>
    </location>
</feature>
<feature type="strand" evidence="95">
    <location>
        <begin position="6467"/>
        <end position="6473"/>
    </location>
</feature>
<feature type="strand" evidence="95">
    <location>
        <begin position="6476"/>
        <end position="6478"/>
    </location>
</feature>
<feature type="helix" evidence="95">
    <location>
        <begin position="6480"/>
        <end position="6488"/>
    </location>
</feature>
<feature type="strand" evidence="98">
    <location>
        <begin position="6493"/>
        <end position="6495"/>
    </location>
</feature>
<feature type="helix" evidence="95">
    <location>
        <begin position="6498"/>
        <end position="6503"/>
    </location>
</feature>
<feature type="strand" evidence="95">
    <location>
        <begin position="6508"/>
        <end position="6513"/>
    </location>
</feature>
<feature type="turn" evidence="95">
    <location>
        <begin position="6517"/>
        <end position="6520"/>
    </location>
</feature>
<feature type="strand" evidence="95">
    <location>
        <begin position="6521"/>
        <end position="6530"/>
    </location>
</feature>
<feature type="turn" evidence="95">
    <location>
        <begin position="6532"/>
        <end position="6534"/>
    </location>
</feature>
<feature type="strand" evidence="95">
    <location>
        <begin position="6535"/>
        <end position="6539"/>
    </location>
</feature>
<feature type="helix" evidence="95">
    <location>
        <begin position="6543"/>
        <end position="6545"/>
    </location>
</feature>
<feature type="strand" evidence="95">
    <location>
        <begin position="6550"/>
        <end position="6553"/>
    </location>
</feature>
<feature type="helix" evidence="95">
    <location>
        <begin position="6559"/>
        <end position="6565"/>
    </location>
</feature>
<feature type="strand" evidence="95">
    <location>
        <begin position="6567"/>
        <end position="6575"/>
    </location>
</feature>
<feature type="strand" evidence="95">
    <location>
        <begin position="6589"/>
        <end position="6591"/>
    </location>
</feature>
<feature type="strand" evidence="95">
    <location>
        <begin position="6594"/>
        <end position="6596"/>
    </location>
</feature>
<feature type="strand" evidence="95">
    <location>
        <begin position="6599"/>
        <end position="6601"/>
    </location>
</feature>
<feature type="strand" evidence="95">
    <location>
        <begin position="6606"/>
        <end position="6611"/>
    </location>
</feature>
<feature type="strand" evidence="101">
    <location>
        <begin position="6614"/>
        <end position="6616"/>
    </location>
</feature>
<feature type="helix" evidence="95">
    <location>
        <begin position="6629"/>
        <end position="6631"/>
    </location>
</feature>
<feature type="helix" evidence="95">
    <location>
        <begin position="6637"/>
        <end position="6644"/>
    </location>
</feature>
<feature type="helix" evidence="95">
    <location>
        <begin position="6647"/>
        <end position="6653"/>
    </location>
</feature>
<feature type="helix" evidence="95">
    <location>
        <begin position="6661"/>
        <end position="6664"/>
    </location>
</feature>
<feature type="strand" evidence="95">
    <location>
        <begin position="6670"/>
        <end position="6673"/>
    </location>
</feature>
<feature type="strand" evidence="98">
    <location>
        <begin position="6677"/>
        <end position="6679"/>
    </location>
</feature>
<feature type="helix" evidence="95">
    <location>
        <begin position="6680"/>
        <end position="6689"/>
    </location>
</feature>
<feature type="strand" evidence="95">
    <location>
        <begin position="6692"/>
        <end position="6698"/>
    </location>
</feature>
<feature type="strand" evidence="95">
    <location>
        <begin position="6703"/>
        <end position="6711"/>
    </location>
</feature>
<feature type="turn" evidence="95">
    <location>
        <begin position="6712"/>
        <end position="6714"/>
    </location>
</feature>
<feature type="strand" evidence="95">
    <location>
        <begin position="6717"/>
        <end position="6724"/>
    </location>
</feature>
<feature type="helix" evidence="95">
    <location>
        <begin position="6728"/>
        <end position="6736"/>
    </location>
</feature>
<feature type="strand" evidence="95">
    <location>
        <begin position="6741"/>
        <end position="6751"/>
    </location>
</feature>
<feature type="strand" evidence="95">
    <location>
        <begin position="6754"/>
        <end position="6763"/>
    </location>
</feature>
<feature type="strand" evidence="95">
    <location>
        <begin position="6766"/>
        <end position="6772"/>
    </location>
</feature>
<feature type="helix" evidence="102">
    <location>
        <begin position="6777"/>
        <end position="6780"/>
    </location>
</feature>
<feature type="strand" evidence="102">
    <location>
        <begin position="6781"/>
        <end position="6785"/>
    </location>
</feature>
<feature type="helix" evidence="102">
    <location>
        <begin position="6788"/>
        <end position="6791"/>
    </location>
</feature>
<feature type="helix" evidence="102">
    <location>
        <begin position="6817"/>
        <end position="6829"/>
    </location>
</feature>
<feature type="strand" evidence="102">
    <location>
        <begin position="6841"/>
        <end position="6846"/>
    </location>
</feature>
<feature type="helix" evidence="102">
    <location>
        <begin position="6855"/>
        <end position="6863"/>
    </location>
</feature>
<feature type="strand" evidence="102">
    <location>
        <begin position="6869"/>
        <end position="6876"/>
    </location>
</feature>
<feature type="strand" evidence="102">
    <location>
        <begin position="6881"/>
        <end position="6888"/>
    </location>
</feature>
<feature type="helix" evidence="102">
    <location>
        <begin position="6890"/>
        <end position="6892"/>
    </location>
</feature>
<feature type="strand" evidence="104">
    <location>
        <begin position="6893"/>
        <end position="6897"/>
    </location>
</feature>
<feature type="strand" evidence="102">
    <location>
        <begin position="6899"/>
        <end position="6904"/>
    </location>
</feature>
<feature type="helix" evidence="102">
    <location>
        <begin position="6924"/>
        <end position="6935"/>
    </location>
</feature>
<feature type="strand" evidence="102">
    <location>
        <begin position="6936"/>
        <end position="6946"/>
    </location>
</feature>
<feature type="strand" evidence="102">
    <location>
        <begin position="6948"/>
        <end position="6950"/>
    </location>
</feature>
<feature type="helix" evidence="102">
    <location>
        <begin position="6953"/>
        <end position="6959"/>
    </location>
</feature>
<feature type="strand" evidence="102">
    <location>
        <begin position="6962"/>
        <end position="6970"/>
    </location>
</feature>
<feature type="helix" evidence="102">
    <location>
        <begin position="6971"/>
        <end position="6973"/>
    </location>
</feature>
<feature type="strand" evidence="102">
    <location>
        <begin position="6979"/>
        <end position="6986"/>
    </location>
</feature>
<feature type="helix" evidence="102">
    <location>
        <begin position="6996"/>
        <end position="7009"/>
    </location>
</feature>
<feature type="helix" evidence="102">
    <location>
        <begin position="7017"/>
        <end position="7020"/>
    </location>
</feature>
<feature type="strand" evidence="102">
    <location>
        <begin position="7033"/>
        <end position="7035"/>
    </location>
</feature>
<feature type="helix" evidence="102">
    <location>
        <begin position="7039"/>
        <end position="7041"/>
    </location>
</feature>
<feature type="helix" evidence="102">
    <location>
        <begin position="7044"/>
        <end position="7051"/>
    </location>
</feature>
<feature type="strand" evidence="102">
    <location>
        <begin position="7055"/>
        <end position="7057"/>
    </location>
</feature>
<feature type="strand" evidence="104">
    <location>
        <begin position="7065"/>
        <end position="7067"/>
    </location>
</feature>
<accession>P0C6X7</accession>
<accession>P59641</accession>
<accession>Q6WGN0</accession>
<accession>Q7T697</accession>
<accession>Q808C0</accession>
<accession>Q80BV7</accession>
<accession>Q80BV8</accession>
<accession>Q80E51</accession>
<name>R1AB_SARS</name>
<evidence type="ECO:0000250" key="1"/>
<evidence type="ECO:0000250" key="2">
    <source>
        <dbReference type="UniProtKB" id="P0DTD1"/>
    </source>
</evidence>
<evidence type="ECO:0000255" key="3">
    <source>
        <dbReference type="PROSITE-ProRule" id="PRU00214"/>
    </source>
</evidence>
<evidence type="ECO:0000255" key="4">
    <source>
        <dbReference type="PROSITE-ProRule" id="PRU00444"/>
    </source>
</evidence>
<evidence type="ECO:0000255" key="5">
    <source>
        <dbReference type="PROSITE-ProRule" id="PRU00490"/>
    </source>
</evidence>
<evidence type="ECO:0000255" key="6">
    <source>
        <dbReference type="PROSITE-ProRule" id="PRU00539"/>
    </source>
</evidence>
<evidence type="ECO:0000255" key="7">
    <source>
        <dbReference type="PROSITE-ProRule" id="PRU00772"/>
    </source>
</evidence>
<evidence type="ECO:0000255" key="8">
    <source>
        <dbReference type="PROSITE-ProRule" id="PRU00986"/>
    </source>
</evidence>
<evidence type="ECO:0000255" key="9">
    <source>
        <dbReference type="PROSITE-ProRule" id="PRU01289"/>
    </source>
</evidence>
<evidence type="ECO:0000255" key="10">
    <source>
        <dbReference type="PROSITE-ProRule" id="PRU01290"/>
    </source>
</evidence>
<evidence type="ECO:0000255" key="11">
    <source>
        <dbReference type="PROSITE-ProRule" id="PRU01291"/>
    </source>
</evidence>
<evidence type="ECO:0000255" key="12">
    <source>
        <dbReference type="PROSITE-ProRule" id="PRU01292"/>
    </source>
</evidence>
<evidence type="ECO:0000255" key="13">
    <source>
        <dbReference type="PROSITE-ProRule" id="PRU01293"/>
    </source>
</evidence>
<evidence type="ECO:0000255" key="14">
    <source>
        <dbReference type="PROSITE-ProRule" id="PRU01294"/>
    </source>
</evidence>
<evidence type="ECO:0000255" key="15">
    <source>
        <dbReference type="PROSITE-ProRule" id="PRU01295"/>
    </source>
</evidence>
<evidence type="ECO:0000255" key="16">
    <source>
        <dbReference type="PROSITE-ProRule" id="PRU01296"/>
    </source>
</evidence>
<evidence type="ECO:0000255" key="17">
    <source>
        <dbReference type="PROSITE-ProRule" id="PRU01297"/>
    </source>
</evidence>
<evidence type="ECO:0000255" key="18">
    <source>
        <dbReference type="PROSITE-ProRule" id="PRU01298"/>
    </source>
</evidence>
<evidence type="ECO:0000255" key="19">
    <source>
        <dbReference type="PROSITE-ProRule" id="PRU01299"/>
    </source>
</evidence>
<evidence type="ECO:0000255" key="20">
    <source>
        <dbReference type="PROSITE-ProRule" id="PRU01300"/>
    </source>
</evidence>
<evidence type="ECO:0000255" key="21">
    <source>
        <dbReference type="PROSITE-ProRule" id="PRU01303"/>
    </source>
</evidence>
<evidence type="ECO:0000255" key="22">
    <source>
        <dbReference type="PROSITE-ProRule" id="PRU01305"/>
    </source>
</evidence>
<evidence type="ECO:0000255" key="23">
    <source>
        <dbReference type="PROSITE-ProRule" id="PRU01306"/>
    </source>
</evidence>
<evidence type="ECO:0000255" key="24">
    <source>
        <dbReference type="PROSITE-ProRule" id="PRU01307"/>
    </source>
</evidence>
<evidence type="ECO:0000255" key="25">
    <source>
        <dbReference type="PROSITE-ProRule" id="PRU01308"/>
    </source>
</evidence>
<evidence type="ECO:0000255" key="26">
    <source>
        <dbReference type="PROSITE-ProRule" id="PRU01333"/>
    </source>
</evidence>
<evidence type="ECO:0000255" key="27">
    <source>
        <dbReference type="PROSITE-ProRule" id="PRU01334"/>
    </source>
</evidence>
<evidence type="ECO:0000255" key="28">
    <source>
        <dbReference type="PROSITE-ProRule" id="PRU01335"/>
    </source>
</evidence>
<evidence type="ECO:0000255" key="29">
    <source>
        <dbReference type="PROSITE-ProRule" id="PRU01336"/>
    </source>
</evidence>
<evidence type="ECO:0000255" key="30">
    <source>
        <dbReference type="PROSITE-ProRule" id="PRU01337"/>
    </source>
</evidence>
<evidence type="ECO:0000255" key="31">
    <source>
        <dbReference type="PROSITE-ProRule" id="PRU01338"/>
    </source>
</evidence>
<evidence type="ECO:0000255" key="32">
    <source>
        <dbReference type="PROSITE-ProRule" id="PRU01344"/>
    </source>
</evidence>
<evidence type="ECO:0000256" key="33">
    <source>
        <dbReference type="SAM" id="MobiDB-lite"/>
    </source>
</evidence>
<evidence type="ECO:0000269" key="34">
    <source>
    </source>
</evidence>
<evidence type="ECO:0000269" key="35">
    <source>
    </source>
</evidence>
<evidence type="ECO:0000269" key="36">
    <source>
    </source>
</evidence>
<evidence type="ECO:0000269" key="37">
    <source>
    </source>
</evidence>
<evidence type="ECO:0000269" key="38">
    <source>
    </source>
</evidence>
<evidence type="ECO:0000269" key="39">
    <source>
    </source>
</evidence>
<evidence type="ECO:0000269" key="40">
    <source>
    </source>
</evidence>
<evidence type="ECO:0000269" key="41">
    <source>
    </source>
</evidence>
<evidence type="ECO:0000269" key="42">
    <source>
    </source>
</evidence>
<evidence type="ECO:0000269" key="43">
    <source>
    </source>
</evidence>
<evidence type="ECO:0000269" key="44">
    <source>
    </source>
</evidence>
<evidence type="ECO:0000269" key="45">
    <source>
    </source>
</evidence>
<evidence type="ECO:0000269" key="46">
    <source>
    </source>
</evidence>
<evidence type="ECO:0000269" key="47">
    <source>
    </source>
</evidence>
<evidence type="ECO:0000269" key="48">
    <source>
    </source>
</evidence>
<evidence type="ECO:0000269" key="49">
    <source>
    </source>
</evidence>
<evidence type="ECO:0000269" key="50">
    <source>
    </source>
</evidence>
<evidence type="ECO:0000269" key="51">
    <source>
    </source>
</evidence>
<evidence type="ECO:0000269" key="52">
    <source>
    </source>
</evidence>
<evidence type="ECO:0000269" key="53">
    <source>
    </source>
</evidence>
<evidence type="ECO:0000269" key="54">
    <source>
    </source>
</evidence>
<evidence type="ECO:0000269" key="55">
    <source>
    </source>
</evidence>
<evidence type="ECO:0000269" key="56">
    <source>
    </source>
</evidence>
<evidence type="ECO:0000269" key="57">
    <source>
    </source>
</evidence>
<evidence type="ECO:0000269" key="58">
    <source>
    </source>
</evidence>
<evidence type="ECO:0000269" key="59">
    <source>
    </source>
</evidence>
<evidence type="ECO:0000269" key="60">
    <source>
    </source>
</evidence>
<evidence type="ECO:0000269" key="61">
    <source>
    </source>
</evidence>
<evidence type="ECO:0000269" key="62">
    <source>
    </source>
</evidence>
<evidence type="ECO:0000269" key="63">
    <source>
    </source>
</evidence>
<evidence type="ECO:0000269" key="64">
    <source>
    </source>
</evidence>
<evidence type="ECO:0000269" key="65">
    <source>
    </source>
</evidence>
<evidence type="ECO:0000269" key="66">
    <source>
    </source>
</evidence>
<evidence type="ECO:0000269" key="67">
    <source>
    </source>
</evidence>
<evidence type="ECO:0000269" key="68">
    <source>
    </source>
</evidence>
<evidence type="ECO:0000269" key="69">
    <source>
    </source>
</evidence>
<evidence type="ECO:0000269" key="70">
    <source>
    </source>
</evidence>
<evidence type="ECO:0000269" key="71">
    <source>
    </source>
</evidence>
<evidence type="ECO:0000269" key="72">
    <source>
    </source>
</evidence>
<evidence type="ECO:0000269" key="73">
    <source>
    </source>
</evidence>
<evidence type="ECO:0000269" key="74">
    <source>
    </source>
</evidence>
<evidence type="ECO:0000269" key="75">
    <source>
    </source>
</evidence>
<evidence type="ECO:0000303" key="76">
    <source>
    </source>
</evidence>
<evidence type="ECO:0000303" key="77">
    <source>
    </source>
</evidence>
<evidence type="ECO:0000303" key="78">
    <source>
    </source>
</evidence>
<evidence type="ECO:0000303" key="79">
    <source>
    </source>
</evidence>
<evidence type="ECO:0000303" key="80">
    <source>
    </source>
</evidence>
<evidence type="ECO:0000305" key="81"/>
<evidence type="ECO:0000305" key="82">
    <source>
    </source>
</evidence>
<evidence type="ECO:0007829" key="83">
    <source>
        <dbReference type="PDB" id="1QZ8"/>
    </source>
</evidence>
<evidence type="ECO:0007829" key="84">
    <source>
        <dbReference type="PDB" id="1UJ1"/>
    </source>
</evidence>
<evidence type="ECO:0007829" key="85">
    <source>
        <dbReference type="PDB" id="1UK4"/>
    </source>
</evidence>
<evidence type="ECO:0007829" key="86">
    <source>
        <dbReference type="PDB" id="1UW7"/>
    </source>
</evidence>
<evidence type="ECO:0007829" key="87">
    <source>
        <dbReference type="PDB" id="1YSY"/>
    </source>
</evidence>
<evidence type="ECO:0007829" key="88">
    <source>
        <dbReference type="PDB" id="1Z1J"/>
    </source>
</evidence>
<evidence type="ECO:0007829" key="89">
    <source>
        <dbReference type="PDB" id="2ACF"/>
    </source>
</evidence>
<evidence type="ECO:0007829" key="90">
    <source>
        <dbReference type="PDB" id="2AHM"/>
    </source>
</evidence>
<evidence type="ECO:0007829" key="91">
    <source>
        <dbReference type="PDB" id="2BX3"/>
    </source>
</evidence>
<evidence type="ECO:0007829" key="92">
    <source>
        <dbReference type="PDB" id="2FE8"/>
    </source>
</evidence>
<evidence type="ECO:0007829" key="93">
    <source>
        <dbReference type="PDB" id="2GDT"/>
    </source>
</evidence>
<evidence type="ECO:0007829" key="94">
    <source>
        <dbReference type="PDB" id="2GRI"/>
    </source>
</evidence>
<evidence type="ECO:0007829" key="95">
    <source>
        <dbReference type="PDB" id="2H85"/>
    </source>
</evidence>
<evidence type="ECO:0007829" key="96">
    <source>
        <dbReference type="PDB" id="2JZD"/>
    </source>
</evidence>
<evidence type="ECO:0007829" key="97">
    <source>
        <dbReference type="PDB" id="2JZF"/>
    </source>
</evidence>
<evidence type="ECO:0007829" key="98">
    <source>
        <dbReference type="PDB" id="2OZK"/>
    </source>
</evidence>
<evidence type="ECO:0007829" key="99">
    <source>
        <dbReference type="PDB" id="2QC2"/>
    </source>
</evidence>
<evidence type="ECO:0007829" key="100">
    <source>
        <dbReference type="PDB" id="2QCY"/>
    </source>
</evidence>
<evidence type="ECO:0007829" key="101">
    <source>
        <dbReference type="PDB" id="2RHB"/>
    </source>
</evidence>
<evidence type="ECO:0007829" key="102">
    <source>
        <dbReference type="PDB" id="2XYQ"/>
    </source>
</evidence>
<evidence type="ECO:0007829" key="103">
    <source>
        <dbReference type="PDB" id="3EBN"/>
    </source>
</evidence>
<evidence type="ECO:0007829" key="104">
    <source>
        <dbReference type="PDB" id="3R24"/>
    </source>
</evidence>
<evidence type="ECO:0007829" key="105">
    <source>
        <dbReference type="PDB" id="5C5O"/>
    </source>
</evidence>
<evidence type="ECO:0007829" key="106">
    <source>
        <dbReference type="PDB" id="5C8S"/>
    </source>
</evidence>
<evidence type="ECO:0007829" key="107">
    <source>
        <dbReference type="PDB" id="5C8T"/>
    </source>
</evidence>
<evidence type="ECO:0007829" key="108">
    <source>
        <dbReference type="PDB" id="5C8U"/>
    </source>
</evidence>
<evidence type="ECO:0007829" key="109">
    <source>
        <dbReference type="PDB" id="5E6J"/>
    </source>
</evidence>
<evidence type="ECO:0007829" key="110">
    <source>
        <dbReference type="PDB" id="5F22"/>
    </source>
</evidence>
<evidence type="ECO:0007829" key="111">
    <source>
        <dbReference type="PDB" id="5NFY"/>
    </source>
</evidence>
<evidence type="ECO:0007829" key="112">
    <source>
        <dbReference type="PDB" id="6JYT"/>
    </source>
</evidence>
<evidence type="ECO:0007829" key="113">
    <source>
        <dbReference type="PDB" id="6NUR"/>
    </source>
</evidence>
<evidence type="ECO:0007829" key="114">
    <source>
        <dbReference type="PDB" id="6NUS"/>
    </source>
</evidence>
<evidence type="ECO:0007829" key="115">
    <source>
        <dbReference type="PDB" id="6W79"/>
    </source>
</evidence>
<evidence type="ECO:0007829" key="116">
    <source>
        <dbReference type="PDB" id="6WCO"/>
    </source>
</evidence>
<protein>
    <recommendedName>
        <fullName>Replicase polyprotein 1ab</fullName>
        <shortName>pp1ab</shortName>
    </recommendedName>
    <alternativeName>
        <fullName>ORF1ab polyprotein</fullName>
    </alternativeName>
    <component>
        <recommendedName>
            <fullName>Host translation inhibitor nsp1</fullName>
        </recommendedName>
        <alternativeName>
            <fullName>Leader protein</fullName>
        </alternativeName>
        <alternativeName>
            <fullName>Non-structural protein 1</fullName>
            <shortName>nsp1</shortName>
        </alternativeName>
    </component>
    <component>
        <recommendedName>
            <fullName>Non-structural protein 2</fullName>
            <shortName>nsp2</shortName>
        </recommendedName>
        <alternativeName>
            <fullName>p65 homolog</fullName>
        </alternativeName>
    </component>
    <component>
        <recommendedName>
            <fullName>Papain-like protease nsp3</fullName>
            <shortName>PL-PRO</shortName>
            <ecNumber evidence="35 47">3.4.19.12</ecNumber>
            <ecNumber evidence="35 42">3.4.22.-</ecNumber>
        </recommendedName>
        <alternativeName>
            <fullName>Non-structural protein 3</fullName>
            <shortName>nsp3</shortName>
        </alternativeName>
        <alternativeName>
            <fullName>PL2-PRO</fullName>
        </alternativeName>
    </component>
    <component>
        <recommendedName>
            <fullName>Non-structural protein 4</fullName>
            <shortName>nsp4</shortName>
        </recommendedName>
    </component>
    <component>
        <recommendedName>
            <fullName>3C-like proteinase nsp5</fullName>
            <shortName>3CL-PRO</shortName>
            <shortName>3CLp</shortName>
            <ecNumber evidence="35">3.4.22.69</ecNumber>
        </recommendedName>
        <alternativeName>
            <fullName>Main protease</fullName>
            <shortName>Mpro</shortName>
        </alternativeName>
        <alternativeName>
            <fullName>Non-structural protein 5</fullName>
            <shortName>nsp5</shortName>
        </alternativeName>
        <alternativeName>
            <fullName>SARS coronavirus main proteinase</fullName>
        </alternativeName>
    </component>
    <component>
        <recommendedName>
            <fullName>Non-structural protein 6</fullName>
            <shortName>nsp6</shortName>
        </recommendedName>
    </component>
    <component>
        <recommendedName>
            <fullName>Non-structural protein 7</fullName>
            <shortName>nsp7</shortName>
        </recommendedName>
    </component>
    <component>
        <recommendedName>
            <fullName>Non-structural protein 8</fullName>
            <shortName>nsp8</shortName>
        </recommendedName>
    </component>
    <component>
        <recommendedName>
            <fullName>Viral protein genome-linked nsp9</fullName>
        </recommendedName>
        <alternativeName>
            <fullName>Non-structural protein 9</fullName>
            <shortName>nsp9</shortName>
        </alternativeName>
        <alternativeName>
            <fullName>RNA-capping enzyme subunit nsp9</fullName>
        </alternativeName>
    </component>
    <component>
        <recommendedName>
            <fullName>Non-structural protein 10</fullName>
            <shortName>nsp10</shortName>
        </recommendedName>
        <alternativeName>
            <fullName>Growth factor-like peptide</fullName>
            <shortName>GFL</shortName>
        </alternativeName>
    </component>
    <component>
        <recommendedName>
            <fullName>RNA-directed RNA polymerase nsp12</fullName>
            <shortName>Pol</shortName>
            <shortName>RdRp</shortName>
            <ecNumber>2.7.7.48</ecNumber>
            <ecNumber>2.7.7.50</ecNumber>
        </recommendedName>
        <alternativeName>
            <fullName>Non-structural protein 12</fullName>
            <shortName>nsp12</shortName>
        </alternativeName>
    </component>
    <component>
        <recommendedName>
            <fullName>Helicase nsp13</fullName>
            <shortName>Hel</shortName>
            <ecNumber evidence="62">3.6.4.12</ecNumber>
            <ecNumber evidence="62">3.6.4.13</ecNumber>
        </recommendedName>
        <alternativeName>
            <fullName>Non-structural protein 13</fullName>
            <shortName>nsp13</shortName>
        </alternativeName>
    </component>
    <component>
        <recommendedName>
            <fullName evidence="76 80">Guanine-N7 methyltransferase nsp14</fullName>
            <ecNumber>2.1.1.-</ecNumber>
            <ecNumber evidence="74">2.1.1.56</ecNumber>
            <ecNumber>3.1.13.-</ecNumber>
        </recommendedName>
        <alternativeName>
            <fullName>Non-structural protein 14</fullName>
            <shortName>nsp14</shortName>
        </alternativeName>
        <alternativeName>
            <fullName evidence="77 79">Proofreading exoribonuclease nsp14</fullName>
            <shortName>ExoN</shortName>
        </alternativeName>
    </component>
    <component>
        <recommendedName>
            <fullName>Uridylate-specific endoribonuclease nsp15</fullName>
            <ecNumber evidence="44">4.6.1.-</ecNumber>
        </recommendedName>
        <alternativeName>
            <fullName>NendoU</fullName>
        </alternativeName>
        <alternativeName>
            <fullName>Non-structural protein 15</fullName>
            <shortName>nsp15</shortName>
        </alternativeName>
    </component>
    <component>
        <recommendedName>
            <fullName>2'-O-methyltransferase nsp16</fullName>
            <ecNumber evidence="60">2.1.1.57</ecNumber>
        </recommendedName>
        <alternativeName>
            <fullName>Non-structural protein 16</fullName>
            <shortName>nsp16</shortName>
        </alternativeName>
    </component>
</protein>
<gene>
    <name type="primary">rep</name>
    <name type="ORF">1a-1b</name>
</gene>
<organismHost>
    <name type="scientific">Homo sapiens</name>
    <name type="common">Human</name>
    <dbReference type="NCBI Taxonomy" id="9606"/>
</organismHost>
<organismHost>
    <name type="scientific">Paguma larvata</name>
    <name type="common">Masked palm civet</name>
    <dbReference type="NCBI Taxonomy" id="9675"/>
</organismHost>
<keyword id="KW-0002">3D-structure</keyword>
<keyword id="KW-1072">Activation of host autophagy by virus</keyword>
<keyword id="KW-0067">ATP-binding</keyword>
<keyword id="KW-1132">Decay of host mRNAs by virus</keyword>
<keyword id="KW-1015">Disulfide bond</keyword>
<keyword id="KW-0255">Endonuclease</keyword>
<keyword id="KW-1262">Eukaryotic host gene expression shutoff by virus</keyword>
<keyword id="KW-1193">Eukaryotic host translation shutoff by virus</keyword>
<keyword id="KW-0269">Exonuclease</keyword>
<keyword id="KW-0347">Helicase</keyword>
<keyword id="KW-1035">Host cytoplasm</keyword>
<keyword id="KW-1038">Host endoplasmic reticulum</keyword>
<keyword id="KW-1039">Host endosome</keyword>
<keyword id="KW-1190">Host gene expression shutoff by virus</keyword>
<keyword id="KW-1040">Host Golgi apparatus</keyword>
<keyword id="KW-1043">Host membrane</keyword>
<keyword id="KW-1192">Host mRNA suppression by virus</keyword>
<keyword id="KW-0945">Host-virus interaction</keyword>
<keyword id="KW-0378">Hydrolase</keyword>
<keyword id="KW-1090">Inhibition of host innate immune response by virus</keyword>
<keyword id="KW-1114">Inhibition of host interferon signaling pathway by virus</keyword>
<keyword id="KW-1095">Inhibition of host ISG15 by virus</keyword>
<keyword id="KW-1100">Inhibition of host NF-kappa-B by virus</keyword>
<keyword id="KW-0922">Interferon antiviral system evasion</keyword>
<keyword id="KW-0456">Lyase</keyword>
<keyword id="KW-0460">Magnesium</keyword>
<keyword id="KW-0464">Manganese</keyword>
<keyword id="KW-0472">Membrane</keyword>
<keyword id="KW-0479">Metal-binding</keyword>
<keyword id="KW-0489">Methyltransferase</keyword>
<keyword id="KW-1127">Modulation of host ubiquitin pathway by viral deubiquitinase</keyword>
<keyword id="KW-1130">Modulation of host ubiquitin pathway by virus</keyword>
<keyword id="KW-0540">Nuclease</keyword>
<keyword id="KW-0547">Nucleotide-binding</keyword>
<keyword id="KW-0548">Nucleotidyltransferase</keyword>
<keyword id="KW-0645">Protease</keyword>
<keyword id="KW-1185">Reference proteome</keyword>
<keyword id="KW-0677">Repeat</keyword>
<keyword id="KW-0688">Ribosomal frameshifting</keyword>
<keyword id="KW-0694">RNA-binding</keyword>
<keyword id="KW-0696">RNA-directed RNA polymerase</keyword>
<keyword id="KW-0788">Thiol protease</keyword>
<keyword id="KW-0808">Transferase</keyword>
<keyword id="KW-0812">Transmembrane</keyword>
<keyword id="KW-1133">Transmembrane helix</keyword>
<keyword id="KW-0833">Ubl conjugation pathway</keyword>
<keyword id="KW-0899">Viral immunoevasion</keyword>
<keyword id="KW-0693">Viral RNA replication</keyword>
<keyword id="KW-0862">Zinc</keyword>
<keyword id="KW-0863">Zinc-finger</keyword>
<reference key="1">
    <citation type="journal article" date="2003" name="Science">
        <title>Characterization of a novel coronavirus associated with severe acute respiratory syndrome.</title>
        <authorList>
            <person name="Rota P.A."/>
            <person name="Oberste M.S."/>
            <person name="Monroe S.S."/>
            <person name="Nix W.A."/>
            <person name="Campagnoli R."/>
            <person name="Icenogle J.P."/>
            <person name="Penaranda S."/>
            <person name="Bankamp B."/>
            <person name="Maher K."/>
            <person name="Chen M.-H."/>
            <person name="Tong S."/>
            <person name="Tamin A."/>
            <person name="Lowe L."/>
            <person name="Frace M."/>
            <person name="DeRisi J.L."/>
            <person name="Chen Q."/>
            <person name="Wang D."/>
            <person name="Erdman D.D."/>
            <person name="Peret T.C.T."/>
            <person name="Burns C."/>
            <person name="Ksiazek T.G."/>
            <person name="Rollin P.E."/>
            <person name="Sanchez A."/>
            <person name="Liffick S."/>
            <person name="Holloway B."/>
            <person name="Limor J."/>
            <person name="McCaustland K."/>
            <person name="Olsen-Rasmussen M."/>
            <person name="Fouchier R."/>
            <person name="Guenther S."/>
            <person name="Osterhaus A.D.M.E."/>
            <person name="Drosten C."/>
            <person name="Pallansch M.A."/>
            <person name="Anderson L.J."/>
            <person name="Bellini W.J."/>
        </authorList>
    </citation>
    <scope>NUCLEOTIDE SEQUENCE [GENOMIC RNA]</scope>
    <source>
        <strain>Isolate Urbani</strain>
    </source>
</reference>
<reference key="2">
    <citation type="journal article" date="2003" name="Science">
        <title>The genome sequence of the SARS-associated coronavirus.</title>
        <authorList>
            <person name="Marra M.A."/>
            <person name="Jones S.J.M."/>
            <person name="Astell C.R."/>
            <person name="Holt R.A."/>
            <person name="Brooks-Wilson A."/>
            <person name="Butterfield Y.S.N."/>
            <person name="Khattra J."/>
            <person name="Asano J.K."/>
            <person name="Barber S.A."/>
            <person name="Chan S.Y."/>
            <person name="Cloutier A."/>
            <person name="Coughlin S.M."/>
            <person name="Freeman D."/>
            <person name="Girn N."/>
            <person name="Griffith O.L."/>
            <person name="Leach S.R."/>
            <person name="Mayo M."/>
            <person name="McDonald H."/>
            <person name="Montgomery S.B."/>
            <person name="Pandoh P.K."/>
            <person name="Petrescu A.S."/>
            <person name="Robertson A.G."/>
            <person name="Schein J.E."/>
            <person name="Siddiqui A."/>
            <person name="Smailus D.E."/>
            <person name="Stott J.M."/>
            <person name="Yang G.S."/>
            <person name="Plummer F."/>
            <person name="Andonov A."/>
            <person name="Artsob H."/>
            <person name="Bastien N."/>
            <person name="Bernard K."/>
            <person name="Booth T.F."/>
            <person name="Bowness D."/>
            <person name="Czub M."/>
            <person name="Drebot M."/>
            <person name="Fernando L."/>
            <person name="Flick R."/>
            <person name="Garbutt M."/>
            <person name="Gray M."/>
            <person name="Grolla A."/>
            <person name="Jones S."/>
            <person name="Feldmann H."/>
            <person name="Meyers A."/>
            <person name="Kabani A."/>
            <person name="Li Y."/>
            <person name="Normand S."/>
            <person name="Stroher U."/>
            <person name="Tipples G.A."/>
            <person name="Tyler S."/>
            <person name="Vogrig R."/>
            <person name="Ward D."/>
            <person name="Watson B."/>
            <person name="Brunham R.C."/>
            <person name="Krajden M."/>
            <person name="Petric M."/>
            <person name="Skowronski D.M."/>
            <person name="Upton C."/>
            <person name="Roper R.L."/>
        </authorList>
    </citation>
    <scope>NUCLEOTIDE SEQUENCE [GENOMIC RNA]</scope>
    <source>
        <strain>Isolate Tor2</strain>
    </source>
</reference>
<reference key="3">
    <citation type="journal article" date="2003" name="N. Engl. J. Med.">
        <title>Coronavirus genomic-sequence variations and the epidemiology of the severe acute respiratory syndrome.</title>
        <authorList>
            <person name="Tsui S.K.W."/>
            <person name="Chim S.S.C."/>
            <person name="Lo Y.M.D."/>
        </authorList>
    </citation>
    <scope>NUCLEOTIDE SEQUENCE [GENOMIC RNA]</scope>
    <source>
        <strain>Isolate CUHK-Su10</strain>
        <strain>Isolate CUHK-W1</strain>
    </source>
</reference>
<reference key="4">
    <citation type="journal article" date="2003" name="Science">
        <title>Isolation and characterization of viruses related to the SARS coronavirus from animals in southern China.</title>
        <authorList>
            <person name="Guan Y."/>
            <person name="Zheng B.J."/>
            <person name="He Y.Q."/>
            <person name="Liu X.L."/>
            <person name="Zhuang Z.X."/>
            <person name="Cheung C.L."/>
            <person name="Luo S.W."/>
            <person name="Li P.H."/>
            <person name="Zhang L.J."/>
            <person name="Guan Y.J."/>
            <person name="Butt K.M."/>
            <person name="Wong K.L."/>
            <person name="Chan K.W."/>
            <person name="Lim W."/>
            <person name="Shortridge K.F."/>
            <person name="Yuen K.Y."/>
            <person name="Peiris J.S.M."/>
            <person name="Poon L.L.M."/>
        </authorList>
    </citation>
    <scope>NUCLEOTIDE SEQUENCE [GENOMIC RNA]</scope>
    <source>
        <strain>Isolate GZ50</strain>
        <strain>Isolate SZ16</strain>
        <strain>Isolate SZ3</strain>
    </source>
</reference>
<reference key="5">
    <citation type="journal article" date="2003" name="Exp. Biol. Med.">
        <title>The complete genome sequence of severe acute respiratory syndrome coronavirus strain HKU-39849 (HK-39).</title>
        <authorList>
            <person name="Zeng F.Y."/>
            <person name="Chan C.W."/>
            <person name="Chan M.N."/>
            <person name="Chen J.D."/>
            <person name="Chow K.Y.C."/>
            <person name="Hon C.C.C."/>
            <person name="Hui R.K.H."/>
            <person name="Li J."/>
            <person name="Li V.Y.Y."/>
            <person name="Wang C.Y."/>
            <person name="Wang P.Y."/>
            <person name="Guan Y."/>
            <person name="Zheng B."/>
            <person name="Poon L.L.M."/>
            <person name="Chan K.H."/>
            <person name="Yuen K.Y."/>
            <person name="Peiris J.S.M."/>
            <person name="Leung F.C."/>
        </authorList>
    </citation>
    <scope>NUCLEOTIDE SEQUENCE [GENOMIC RNA]</scope>
    <source>
        <strain>Isolate HKU-39849</strain>
    </source>
</reference>
<reference key="6">
    <citation type="journal article" date="2003" name="Lancet">
        <title>Comparative full-length genome sequence analysis of 14 SARS coronavirus isolates and common mutations associated with putative origins of infection.</title>
        <authorList>
            <person name="Ruan Y."/>
            <person name="Wei C.L."/>
            <person name="Ling A.E."/>
            <person name="Vega V.B."/>
            <person name="Thoreau H."/>
            <person name="Se Thoe S.Y."/>
            <person name="Chia J.-M."/>
            <person name="Ng P."/>
            <person name="Chiu K.P."/>
            <person name="Lim L."/>
            <person name="Zhang T."/>
            <person name="Chan K.P."/>
            <person name="Oon L.E.L."/>
            <person name="Ng M.L."/>
            <person name="Leo S.Y."/>
            <person name="Ng L.F.P."/>
            <person name="Ren E.C."/>
            <person name="Stanton L.W."/>
            <person name="Long P.M."/>
            <person name="Liu E.T."/>
        </authorList>
    </citation>
    <scope>NUCLEOTIDE SEQUENCE [GENOMIC RNA]</scope>
    <source>
        <strain>Isolate Sin2500</strain>
        <strain>Isolate Sin2677</strain>
        <strain>Isolate Sin2679</strain>
        <strain>Isolate Sin2748</strain>
        <strain>Isolate sin2774</strain>
    </source>
</reference>
<reference key="7">
    <citation type="journal article" date="2003" name="Lancet">
        <authorList>
            <person name="Ruan Y."/>
            <person name="Wei C.L."/>
            <person name="Ling A.E."/>
            <person name="Vega V.B."/>
            <person name="Thoreau H."/>
            <person name="Se Thoe S.Y."/>
            <person name="Chia J.-M."/>
            <person name="Ng P."/>
            <person name="Chiu K.P."/>
            <person name="Lim L."/>
            <person name="Zhang T."/>
            <person name="Chan K.P."/>
            <person name="Oon L.E.L."/>
            <person name="Ng M.L."/>
            <person name="Leo S.Y."/>
            <person name="Ng L.F.P."/>
            <person name="Ren E.C."/>
            <person name="Stanton L.W."/>
            <person name="Long P.M."/>
            <person name="Liu E.T."/>
        </authorList>
    </citation>
    <scope>ERRATUM OF PUBMED:12781537</scope>
</reference>
<reference key="8">
    <citation type="journal article" date="2003" name="Chin. Med. J.">
        <title>Severe acute respiratory syndrome-associated coronavirus genotype and its characterization.</title>
        <authorList>
            <person name="Li L."/>
            <person name="Wang Z."/>
            <person name="Lu Y."/>
            <person name="Bao Q."/>
            <person name="Chen S."/>
            <person name="Wu N."/>
            <person name="Cheng S."/>
            <person name="Weng J."/>
            <person name="Zhang Y."/>
            <person name="Yan J."/>
            <person name="Mei L."/>
            <person name="Wang X."/>
            <person name="Zhu H."/>
            <person name="Yu Y."/>
            <person name="Zhang M."/>
            <person name="Li M."/>
            <person name="Yao J."/>
            <person name="Lu Q."/>
            <person name="Yao P."/>
            <person name="Bo X."/>
            <person name="Wo J."/>
            <person name="Wang S."/>
            <person name="Hu S."/>
        </authorList>
    </citation>
    <scope>NUCLEOTIDE SEQUENCE [GENOMIC RNA]</scope>
    <source>
        <strain>Isolate ZJ01</strain>
    </source>
</reference>
<reference key="9">
    <citation type="submission" date="2003-04" db="EMBL/GenBank/DDBJ databases">
        <authorList>
            <person name="Qin E."/>
            <person name="Zhu Q."/>
            <person name="Yu M."/>
            <person name="Fan B."/>
            <person name="Chang G."/>
            <person name="Si B."/>
            <person name="Yang B."/>
            <person name="Peng W."/>
            <person name="Jiang T."/>
            <person name="Liu B."/>
            <person name="Deng Y."/>
            <person name="Liu H."/>
            <person name="Zhang Y."/>
            <person name="Wang C."/>
            <person name="Li Y."/>
            <person name="Gan Y."/>
            <person name="Li X."/>
            <person name="Lu F."/>
            <person name="Tan G."/>
            <person name="Yang R."/>
            <person name="Cao W.S."/>
            <person name="Wang J."/>
            <person name="Chen W."/>
            <person name="Cong L."/>
            <person name="Deng Y."/>
            <person name="Dong W."/>
            <person name="Han Y."/>
            <person name="Hu W."/>
            <person name="Lei M."/>
            <person name="Li C."/>
            <person name="Li G."/>
            <person name="Li G."/>
            <person name="Li H."/>
            <person name="Li S."/>
            <person name="Li S."/>
            <person name="Li W."/>
            <person name="Li W."/>
            <person name="Lin W."/>
            <person name="Liu J."/>
            <person name="Liu Z."/>
            <person name="Lu H."/>
            <person name="Ni P."/>
            <person name="Qi Q."/>
            <person name="Sun Y."/>
            <person name="Tang L."/>
            <person name="Tong Z."/>
            <person name="Wang J."/>
            <person name="Wang X."/>
            <person name="Wu Q."/>
            <person name="Xi Y."/>
            <person name="Xu Z."/>
            <person name="Yang L."/>
            <person name="Ye C."/>
            <person name="Ye J."/>
            <person name="Zhang B."/>
            <person name="Zhang F."/>
            <person name="Zhang J."/>
            <person name="Zhang X."/>
            <person name="Zhou J."/>
            <person name="Yang H."/>
        </authorList>
    </citation>
    <scope>NUCLEOTIDE SEQUENCE [GENOMIC RNA]</scope>
    <source>
        <strain>Isolate BJ01</strain>
        <strain>Isolate BJ02</strain>
        <strain>Isolate BJ03</strain>
        <strain>Isolate BJ04</strain>
        <strain>Isolate GD01</strain>
    </source>
</reference>
<reference key="10">
    <citation type="submission" date="2003-05" db="EMBL/GenBank/DDBJ databases">
        <title>The complete genome of SARS coronavirus clone TW1.</title>
        <authorList>
            <person name="Yeh S.-H."/>
            <person name="Kao C.-L."/>
            <person name="Tsai C.-Y."/>
            <person name="Liu C.-J."/>
            <person name="Chen D.-S."/>
            <person name="Chen P.-J."/>
        </authorList>
    </citation>
    <scope>NUCLEOTIDE SEQUENCE [GENOMIC RNA]</scope>
    <source>
        <strain>Isolate TW1</strain>
    </source>
</reference>
<reference key="11">
    <citation type="journal article" date="2003" name="Science">
        <title>Phylogeny of the SARS coronavirus.</title>
        <authorList>
            <person name="Eickmann M."/>
            <person name="Becker S."/>
            <person name="Klenk H.-D."/>
            <person name="Doerr H.W."/>
            <person name="Stadler K."/>
            <person name="Censini S."/>
            <person name="Guidotti S."/>
            <person name="Masignani V."/>
            <person name="Scarselli M."/>
            <person name="Mora M."/>
            <person name="Donati C."/>
            <person name="Han J.H."/>
            <person name="Song H.C."/>
            <person name="Abrignani S."/>
            <person name="Covacci A."/>
            <person name="Rappuoli R."/>
        </authorList>
    </citation>
    <scope>NUCLEOTIDE SEQUENCE [GENOMIC RNA]</scope>
    <source>
        <strain>Isolate FRA</strain>
    </source>
</reference>
<reference key="12">
    <citation type="submission" date="2003-05" db="EMBL/GenBank/DDBJ databases">
        <authorList>
            <person name="Thiel V."/>
            <person name="Hertzig T."/>
            <person name="Putics A."/>
            <person name="Ivanov K.A."/>
            <person name="Schelle B."/>
            <person name="Bayer S."/>
            <person name="Scheiner B."/>
            <person name="Weinand H."/>
            <person name="Weissbrich B."/>
            <person name="Ziebuhr J."/>
        </authorList>
    </citation>
    <scope>NUCLEOTIDE SEQUENCE [GENOMIC RNA]</scope>
    <source>
        <strain>Isolate Frankfurt-1</strain>
    </source>
</reference>
<reference key="13">
    <citation type="submission" date="2003-06" db="EMBL/GenBank/DDBJ databases">
        <title>Genomic sequence of SARS isolate from the first fatal case in Taiwan.</title>
        <authorList>
            <person name="Yang J.-Y."/>
            <person name="Lin J.-H."/>
            <person name="Chiu S.-C."/>
            <person name="Wang S.-F."/>
            <person name="Lee S.C."/>
            <person name="Lin Y.-C."/>
            <person name="Hsu C.-K."/>
            <person name="Chen H.-Y."/>
            <person name="Chang J.G."/>
            <person name="Chen P.-J."/>
            <person name="Su I.-J."/>
        </authorList>
    </citation>
    <scope>NUCLEOTIDE SEQUENCE [GENOMIC RNA]</scope>
    <source>
        <strain>Isolate TWC</strain>
    </source>
</reference>
<reference key="14">
    <citation type="submission" date="2003-06" db="EMBL/GenBank/DDBJ databases">
        <title>Analysis of SARS coronavirus genome in Shanghai isolates.</title>
        <authorList>
            <person name="Yuan Z."/>
            <person name="Zhang X."/>
            <person name="Hu Y."/>
            <person name="Lan S."/>
            <person name="Wang H."/>
            <person name="Zhou Z."/>
            <person name="Wen Y."/>
        </authorList>
    </citation>
    <scope>NUCLEOTIDE SEQUENCE [GENOMIC RNA]</scope>
    <source>
        <strain>Isolate Shanghai QXC1</strain>
    </source>
</reference>
<reference key="15">
    <citation type="submission" date="2003-07" db="EMBL/GenBank/DDBJ databases">
        <authorList>
            <person name="Canducci F."/>
            <person name="Clementi M."/>
            <person name="Poli G."/>
            <person name="Vicenzi E."/>
        </authorList>
    </citation>
    <scope>NUCLEOTIDE SEQUENCE [GENOMIC RNA]</scope>
    <source>
        <strain>Isolate HSR 1</strain>
    </source>
</reference>
<reference key="16">
    <citation type="submission" date="2003-07" db="EMBL/GenBank/DDBJ databases">
        <authorList>
            <person name="Chang J.-G.C."/>
            <person name="Lin T.-H."/>
            <person name="Chen C.-M."/>
            <person name="Lin C.-S."/>
            <person name="Chan W.-L."/>
            <person name="Shih M.-C."/>
        </authorList>
    </citation>
    <scope>NUCLEOTIDE SEQUENCE [GENOMIC RNA]</scope>
    <source>
        <strain>Isolate Taiwan TC1</strain>
        <strain>Isolate Taiwan TC2</strain>
        <strain>Isolate Taiwan TC3</strain>
    </source>
</reference>
<reference key="17">
    <citation type="submission" date="2003-07" db="EMBL/GenBank/DDBJ databases">
        <authorList>
            <person name="Shu H.Y."/>
            <person name="Wu K.M."/>
            <person name="Tsai S.F."/>
        </authorList>
    </citation>
    <scope>NUCLEOTIDE SEQUENCE [GENOMIC RNA]</scope>
    <source>
        <strain>Isolate TWH</strain>
        <strain>Isolate TWJ</strain>
        <strain>Isolate TWK</strain>
        <strain>Isolate TWS</strain>
        <strain>Isolate TWY</strain>
    </source>
</reference>
<reference key="18">
    <citation type="submission" date="2003-10" db="EMBL/GenBank/DDBJ databases">
        <authorList>
            <person name="Balotta C."/>
            <person name="Corvasce S."/>
            <person name="Violin M."/>
            <person name="Galli M."/>
            <person name="Moroni M."/>
            <person name="Vigevani G.M."/>
            <person name="Ruan Y.J."/>
            <person name="Salemi M."/>
        </authorList>
    </citation>
    <scope>NUCLEOTIDE SEQUENCE [GENOMIC RNA]</scope>
    <source>
        <strain>Isolate AS</strain>
    </source>
</reference>
<reference key="19">
    <citation type="submission" date="2003-11" db="EMBL/GenBank/DDBJ databases">
        <authorList>
            <person name="Wang Z."/>
            <person name="Cheng S."/>
            <person name="Zhang Y."/>
        </authorList>
    </citation>
    <scope>NUCLEOTIDE SEQUENCE [GENOMIC RNA]</scope>
    <source>
        <strain>Isolate ZJ01</strain>
    </source>
</reference>
<reference key="20">
    <citation type="submission" date="2003-06" db="EMBL/GenBank/DDBJ databases">
        <authorList>
            <person name="Yuan Z."/>
            <person name="Zhang X."/>
            <person name="Hu Y."/>
            <person name="Lan S."/>
            <person name="Wang H."/>
            <person name="Zhou Z."/>
            <person name="Wen Y."/>
        </authorList>
    </citation>
    <scope>NUCLEOTIDE SEQUENCE [GENOMIC RNA] OF 1-507; 1655-5170 AND 6903-7073</scope>
    <source>
        <strain>Isolate Shanghai LY</strain>
    </source>
</reference>
<reference key="21">
    <citation type="submission" date="2003-04" db="EMBL/GenBank/DDBJ databases">
        <authorList>
            <person name="Emery S."/>
            <person name="Erdman D.D."/>
            <person name="Peret T.C.T."/>
            <person name="Ksiazek T.G."/>
        </authorList>
    </citation>
    <scope>NUCLEOTIDE SEQUENCE [GENOMIC RNA] OF 4993-5127</scope>
    <source>
        <strain>Isolate Vietnam</strain>
    </source>
</reference>
<reference key="22">
    <citation type="submission" date="2003-04" db="EMBL/GenBank/DDBJ databases">
        <title>Detection of a novel human coronavirus in a severe acute respiratory syndrome patient in Taiwan.</title>
        <authorList>
            <person name="Lin J.-H."/>
            <person name="Chiu S.-C."/>
            <person name="Yang J.-Y."/>
            <person name="Wang S.-F."/>
            <person name="Chen H.-Y."/>
        </authorList>
    </citation>
    <scope>NUCLEOTIDE SEQUENCE [GENOMIC RNA] OF 4993-5136</scope>
    <source>
        <strain>Isolate Taiwan</strain>
    </source>
</reference>
<reference key="23">
    <citation type="journal article" date="2003" name="J. Biol. Chem.">
        <title>The severe acute respiratory syndrome (SARS) coronavirus NTPase/helicase belongs to a distinct class of 5' to 3' viral helicases.</title>
        <authorList>
            <person name="Tanner J.A."/>
            <person name="Watt R.M."/>
            <person name="Chai Y.-B."/>
            <person name="Lu L.-Y."/>
            <person name="Lin M.C."/>
            <person name="Peiris J.S."/>
            <person name="Poon L.L.M."/>
            <person name="Kung H.-F."/>
            <person name="Huang J.-D."/>
        </authorList>
    </citation>
    <scope>FUNCTION (HELICASE NSP13)</scope>
</reference>
<reference key="24">
    <citation type="journal article" date="2003" name="J. Gen. Virol.">
        <title>Mechanisms and enzymes involved in SARS coronavirus genome expression.</title>
        <authorList>
            <person name="Thiel V."/>
            <person name="Ivanov K.A."/>
            <person name="Putics A."/>
            <person name="Hertzig T."/>
            <person name="Schelle B."/>
            <person name="Bayer S."/>
            <person name="Weissbrich B."/>
            <person name="Snijder E.J."/>
            <person name="Rabenau H."/>
            <person name="Doerr H.W."/>
            <person name="Gorbalenya A.E."/>
            <person name="Ziebuhr J."/>
        </authorList>
    </citation>
    <scope>PROTEOLYTIC CLEAVAGE (ISOFORM REPLICASE POLYPROTEIN 1AB)</scope>
    <scope>CATALYTIC ACTIVITY (3C-LIKE PROTEINASE NSP5)</scope>
    <scope>CATALYTIC ACTIVITY (PAPAIN-LIKE PROTEASE NSP3)</scope>
</reference>
<reference key="25">
    <citation type="journal article" date="2004" name="J. Biol. Chem.">
        <title>Biosynthesis, purification, and substrate specificity of severe acute respiratory syndrome coronavirus 3C-like proteinase.</title>
        <authorList>
            <person name="Fan K."/>
            <person name="Wei P."/>
            <person name="Feng Q."/>
            <person name="Chen S."/>
            <person name="Huang C."/>
            <person name="Ma L."/>
            <person name="Lai B."/>
            <person name="Pei J."/>
            <person name="Liu Y."/>
            <person name="Chen J."/>
            <person name="Lai L."/>
        </authorList>
    </citation>
    <scope>CATALYTIC ACTIVITY (3C-LIKE PROTEINASE NSP5)</scope>
    <scope>SUBUNIT (3C-LIKE PROTEINASE NSP5)</scope>
    <scope>BIOPHYSICOCHEMICAL PROPERTIES (3C-LIKE PROTEINASE NSP5)</scope>
</reference>
<reference key="26">
    <citation type="journal article" date="2004" name="J. Virol.">
        <title>Identification and characterization of severe acute respiratory syndrome coronavirus replicase proteins.</title>
        <authorList>
            <person name="Prentice E."/>
            <person name="McAuliffe J."/>
            <person name="Lu X."/>
            <person name="Subbarao K."/>
            <person name="Denison M.R."/>
        </authorList>
    </citation>
    <scope>PROTEOLYTIC CLEAVAGE (ISOFORM REPLICASE POLYPROTEIN 1AB)</scope>
</reference>
<reference key="27">
    <citation type="journal article" date="2004" name="J. Virol.">
        <title>Identification of severe acute respiratory syndrome coronavirus replicase products and characterization of papain-like protease activity.</title>
        <authorList>
            <person name="Harcourt B.H."/>
            <person name="Jukneliene D."/>
            <person name="Kanjanahaluethai A."/>
            <person name="Bechill J."/>
            <person name="Severson K.M."/>
            <person name="Smith C.M."/>
            <person name="Rota P.A."/>
            <person name="Baker S.C."/>
        </authorList>
    </citation>
    <scope>PROTEOLYTIC CLEAVAGE (ISOFORM REPLICASE POLYPROTEIN 1AB)</scope>
    <source>
        <strain>Isolate Urbani</strain>
    </source>
</reference>
<reference key="28">
    <citation type="journal article" date="2005" name="J. Virol.">
        <title>The papain-like protease of severe acute respiratory syndrome coronavirus has deubiquitinating activity.</title>
        <authorList>
            <person name="Barretto N."/>
            <person name="Jukneliene D."/>
            <person name="Ratia K."/>
            <person name="Chen Z."/>
            <person name="Mesecar A.D."/>
            <person name="Baker S.C."/>
        </authorList>
    </citation>
    <scope>CATALYTIC ACTIVITY (PAPAIN-LIKE PROTEASE NSP3)</scope>
    <scope>FUNCTION (PAPAIN-LIKE PROTEASE NSP3)</scope>
    <scope>PROTEOLYTIC CLEAVAGE (ISOFORM REPLICASE POLYPROTEIN 1A)</scope>
    <scope>COFACTOR (PAPAIN-LIKE PROTEASE NSP3)</scope>
    <scope>MUTAGENESIS OF CYS-1651; CYS-1688; CYS-1729; CYS-1732; CYS-1764; CYS-1766 AND ASP-1826</scope>
    <scope>ACTIVE SITE (PAPAIN-LIKE PROTEASE NSP3)</scope>
</reference>
<reference key="29">
    <citation type="journal article" date="2005" name="FEBS Lett.">
        <title>Binding interaction of SARS coronavirus 3CL(pro) protease with vacuolar-H+ ATPase G1 subunit.</title>
        <authorList>
            <person name="Lin C.W."/>
            <person name="Tsai F.J."/>
            <person name="Wan L."/>
            <person name="Lai C.C."/>
            <person name="Lin K.H."/>
            <person name="Hsieh T.H."/>
            <person name="Shiu S.Y."/>
            <person name="Li J.Y."/>
        </authorList>
    </citation>
    <scope>FUNCTION (3C-LIKE PROTEINASE NSP5)</scope>
</reference>
<reference key="30">
    <citation type="journal article" date="2005" name="J. Biol. Chem.">
        <title>Severe acute respiratory syndrome coronavirus 3C-like proteinase N terminus is indispensable for proteolytic activity but not for enzyme dimerization. Biochemical and thermodynamic investigation in conjunction with molecular dynamics simulations.</title>
        <authorList>
            <person name="Chen S."/>
            <person name="Chen L."/>
            <person name="Tan J."/>
            <person name="Chen J."/>
            <person name="Du L."/>
            <person name="Sun T."/>
            <person name="Shen J."/>
            <person name="Chen K."/>
            <person name="Jiang H."/>
            <person name="Shen X."/>
        </authorList>
    </citation>
    <scope>SUBUNIT (3C-LIKE PROTEINASE NSP5)</scope>
</reference>
<reference key="31">
    <citation type="journal article" date="2006" name="Proc. Natl. Acad. Sci. U.S.A.">
        <title>Discovery of an RNA virus 3'-&gt;5' exoribonuclease that is critically involved in coronavirus RNA synthesis.</title>
        <authorList>
            <person name="Minskaia E."/>
            <person name="Hertzig T."/>
            <person name="Gorbalenya A.E."/>
            <person name="Campanacci V."/>
            <person name="Cambillau C."/>
            <person name="Canard B."/>
            <person name="Ziebuhr J."/>
        </authorList>
    </citation>
    <scope>FUNCTION (GUANINE-N7 METHYLTRANSFERASE)</scope>
    <source>
        <strain>Isolate Frankfurt-1</strain>
    </source>
</reference>
<reference key="32">
    <citation type="journal article" date="2006" name="J. Mol. Biol.">
        <title>RNA recognition and cleavage by the SARS coronavirus endoribonuclease.</title>
        <authorList>
            <person name="Bhardwaj K."/>
            <person name="Sun J."/>
            <person name="Holzenburg A."/>
            <person name="Guarino L.A."/>
            <person name="Kao C.C."/>
        </authorList>
    </citation>
    <scope>FUNCTION (URIDYLATE-SPECIFIC ENDORIBONUCLEASE NSP15)</scope>
    <scope>MUTAGENESIS OF HIS-6663</scope>
    <scope>SUBUNIT (URIDYLATE-SPECIFIC ENDORIBONUCLEASE NSP15)</scope>
    <scope>COFACTOR (URIDYLATE-SPECIFIC ENDORIBONUCLEASE NSP15)</scope>
    <scope>CATALYTIC ACTIVITY (URIDYLATE-SPECIFIC ENDORIBONUCLEASE NSP15)</scope>
</reference>
<reference key="33">
    <citation type="journal article" date="2006" name="Proc. Natl. Acad. Sci. U.S.A.">
        <title>Crystal structure and mechanistic determinants of SARS coronavirus nonstructural protein 15 define an endoribonuclease family.</title>
        <authorList>
            <person name="Ricagno S."/>
            <person name="Egloff M.-P."/>
            <person name="Ulferts R."/>
            <person name="Coutard B."/>
            <person name="Nurizzo D."/>
            <person name="Campanacci V."/>
            <person name="Cambillau C."/>
            <person name="Ziebuhr J."/>
            <person name="Canard B."/>
        </authorList>
    </citation>
    <scope>CHARACTERIZATION (URIDYLATE-SPECIFIC ENDORIBONUCLEASE NSP15)</scope>
</reference>
<reference key="34">
    <citation type="journal article" date="2006" name="EMBO J.">
        <title>A second, non-canonical RNA-dependent RNA polymerase in SARS coronavirus.</title>
        <authorList>
            <person name="Imbert I."/>
            <person name="Guillemot J.-C."/>
            <person name="Bourhis J.-M."/>
            <person name="Bussetta C."/>
            <person name="Coutard B."/>
            <person name="Egloff M.-P."/>
            <person name="Ferron F."/>
            <person name="Gorbalenya A.E."/>
            <person name="Canard B."/>
        </authorList>
    </citation>
    <scope>FUNCTION (NON-STRUCTURAL PROTEIN 8)</scope>
</reference>
<reference key="35">
    <citation type="journal article" date="2007" name="Arch. Biochem. Biophys.">
        <title>Selectivity in ISG15 and ubiquitin recognition by the SARS coronavirus papain-like protease.</title>
        <authorList>
            <person name="Lindner H.A."/>
            <person name="Lytvyn V."/>
            <person name="Qi H."/>
            <person name="Lachance P."/>
            <person name="Ziomek E."/>
            <person name="Menard R."/>
        </authorList>
    </citation>
    <scope>FUNCTION (NON-STRUCTURAL PROTEIN 3)</scope>
    <scope>CATALYTIC ACTIVITY (PAPAIN-LIKE PROTEASE NSP3)</scope>
</reference>
<reference key="36">
    <citation type="journal article" date="2007" name="J. Virol.">
        <title>Localization and membrane topology of coronavirus nonstructural protein 4: involvement of the early secretory pathway in replication.</title>
        <authorList>
            <person name="Oostra M."/>
            <person name="te Lintelo E.G."/>
            <person name="Deijs M."/>
            <person name="Verheije M.H."/>
            <person name="Rottier P.J."/>
            <person name="de Haan C.A."/>
        </authorList>
    </citation>
    <scope>SUBCELLULAR LOCATION (NON-STRUCTURAL PROTEIN 4)</scope>
    <scope>TOPOLOGY (NON-STRUCTURAL PROTEIN 4)</scope>
</reference>
<reference key="37">
    <citation type="journal article" date="2007" name="Virology">
        <title>The nonstructural protein 8 (nsp8) of the SARS coronavirus interacts with its ORF6 accessory protein.</title>
        <authorList>
            <person name="Kumar P."/>
            <person name="Gunalan V."/>
            <person name="Liu B."/>
            <person name="Chow V.T."/>
            <person name="Druce J."/>
            <person name="Birch C."/>
            <person name="Catton M."/>
            <person name="Fielding B.C."/>
            <person name="Tan Y.J."/>
            <person name="Lal S.K."/>
        </authorList>
    </citation>
    <scope>INTERACTION WITH ORF6 PROTEIN (NON-STRUCTURAL PROTEIN 8)</scope>
    <scope>SUBCELLULAR LOCATION (NON-STRUCTURAL PROTEIN 8)</scope>
</reference>
<reference key="38">
    <citation type="journal article" date="2008" name="J. Virol.">
        <title>Coronavirus nonstructural protein 16 is a cap-0 binding enzyme possessing (nucleoside-2'O)-methyltransferase activity.</title>
        <authorList>
            <person name="Decroly E."/>
            <person name="Imbert I."/>
            <person name="Coutard B."/>
            <person name="Bouvet M."/>
            <person name="Selisko B."/>
            <person name="Alvarez K."/>
            <person name="Gorbalenya A.E."/>
            <person name="Snijder E.J."/>
            <person name="Canard B."/>
        </authorList>
    </citation>
    <scope>FUNCTION (2'-O-METHYLTRANSFERASE NSP16)</scope>
</reference>
<reference key="39">
    <citation type="journal article" date="2008" name="PLoS ONE">
        <title>Genome-wide analysis of protein-protein interactions and involvement of viral proteins in SARS-CoV replication.</title>
        <authorList>
            <person name="Pan J."/>
            <person name="Peng X."/>
            <person name="Gao Y."/>
            <person name="Li Z."/>
            <person name="Lu X."/>
            <person name="Chen Y."/>
            <person name="Ishaq M."/>
            <person name="Liu D."/>
            <person name="Dediego M.L."/>
            <person name="Enjuanes L."/>
            <person name="Guo D."/>
        </authorList>
    </citation>
    <scope>INTERACTION WITH PROOFREADING EXORIBONUCLEASE NSP14 (NON-STRUCTURAL PROTEIN 10)</scope>
    <scope>INTERACTION WITH 2'-O-METHYLTRANSFERASE NSP16 (NON-STRUCTURAL PROTEIN 10)</scope>
    <scope>INTERACTION WITH NON-STRUCTURAL PROTEIN 10 (PROOFREADING EXORIBONUCLEASE NSP14)</scope>
    <scope>INTERACTION WITH NON-STRUCTURAL PROTEIN 10 (2'-O-METHYLTRANSFERASE NSP16)</scope>
</reference>
<reference key="40">
    <citation type="journal article" date="2008" name="J. Virol.">
        <title>Topology and membrane anchoring of the coronavirus replication complex: not all hydrophobic domains of nsp3 and nsp6 are membrane spanning.</title>
        <authorList>
            <person name="Oostra M."/>
            <person name="Hagemeijer M.C."/>
            <person name="van Gent M."/>
            <person name="Bekker C.P."/>
            <person name="te Lintelo E.G."/>
            <person name="Rottier P.J."/>
            <person name="de Haan C.A."/>
        </authorList>
    </citation>
    <scope>TOPOLOGY (PAPAIN-LIKE PROTEASE NSP3)</scope>
    <scope>TOPOLOGY (NON-STRUCTURAL PROTEIN 4)</scope>
    <scope>TOPOLOGY (NON-STRUCTURAL PROTEIN 6)</scope>
</reference>
<reference key="41">
    <citation type="journal article" date="2009" name="J. Virol.">
        <title>Severe acute respiratory syndrome coronavirus papain-like protease ubiquitin-like domain and catalytic domain regulate antagonism of IRF3 and NF-kappaB signaling.</title>
        <authorList>
            <person name="Frieman M."/>
            <person name="Ratia K."/>
            <person name="Johnston R.E."/>
            <person name="Mesecar A.D."/>
            <person name="Baric R.S."/>
        </authorList>
    </citation>
    <scope>FUNCTION (PAPAIN-LIKE PROTEASE NSP3)</scope>
</reference>
<reference key="42">
    <citation type="journal article" date="2009" name="J. Virol.">
        <title>Severe acute respiratory syndrome coronavirus nonstructural protein 2 interacts with a host protein complex involved in mitochondrial biogenesis and intracellular signaling.</title>
        <authorList>
            <person name="Cornillez-Ty C.T."/>
            <person name="Liao L."/>
            <person name="Yates J.R."/>
            <person name="Kuhn P."/>
            <person name="Buchmeier M.J."/>
        </authorList>
    </citation>
    <scope>FUNCTION (NON-STRUCTURAL PROTEIN 2)</scope>
    <scope>INTERACTION WITH HOST PHB AND PHB2 (NON-STRUCTURAL PROTEIN 2)</scope>
</reference>
<reference key="43">
    <citation type="journal article" date="2009" name="J. Virol.">
        <title>Severe acute respiratory syndrome coronavirus nsp9 dimerization is essential for efficient viral growth.</title>
        <authorList>
            <person name="Miknis Z.J."/>
            <person name="Donaldson E.F."/>
            <person name="Umland T.C."/>
            <person name="Rimmer R.A."/>
            <person name="Baric R.S."/>
            <person name="Schultz L.W."/>
        </authorList>
    </citation>
    <scope>MUTAGENESIS OF GLY-4217 AND GLY-4221</scope>
    <scope>SUBUNIT</scope>
</reference>
<reference key="44">
    <citation type="journal article" date="2010" name="J. Virol.">
        <title>The cellular RNA helicase DDX1 interacts with coronavirus nonstructural protein 14 and enhances viral replication.</title>
        <authorList>
            <person name="Xu L."/>
            <person name="Khadijah S."/>
            <person name="Fang S."/>
            <person name="Wang L."/>
            <person name="Tay F.P."/>
            <person name="Liu D.X."/>
        </authorList>
    </citation>
    <scope>INTERACTION WITH HOST DDX1 (PROOFREADING EXORIBONUCLEASE NSP14)</scope>
</reference>
<reference key="45">
    <citation type="journal article" date="2010" name="PLoS Pathog.">
        <title>In vitro reconstitution of SARS-coronavirus mRNA cap methylation.</title>
        <authorList>
            <person name="Bouvet M."/>
            <person name="Debarnot C."/>
            <person name="Imbert I."/>
            <person name="Selisko B."/>
            <person name="Snijder E.J."/>
            <person name="Canard B."/>
            <person name="Decroly E."/>
        </authorList>
    </citation>
    <scope>FUNCTION (PROOFREADING EXORIBONUCLEASE NSP14)</scope>
    <scope>FUNCTION (2'-O-METHYLTRANSFERASE NSP16)</scope>
</reference>
<reference key="46">
    <citation type="journal article" date="2011" name="PLoS Pathog.">
        <title>SARS coronavirus nsp1 protein induces template-dependent endonucleolytic cleavage of mRNAs: viral mRNAs are resistant to nsp1-induced RNA cleavage.</title>
        <authorList>
            <person name="Huang C."/>
            <person name="Lokugamage K.G."/>
            <person name="Rozovics J.M."/>
            <person name="Narayanan K."/>
            <person name="Semler B.L."/>
            <person name="Makino S."/>
        </authorList>
    </citation>
    <scope>FUNCTION (HOST TRANSLATION INHIBITOR NSP1)</scope>
</reference>
<reference key="47">
    <citation type="journal article" date="2011" name="J. Virol.">
        <title>Mobility and interactions of coronavirus nonstructural protein 4.</title>
        <authorList>
            <person name="Hagemeijer M.C."/>
            <person name="Ulasli M."/>
            <person name="Vonk A.M."/>
            <person name="Reggiori F."/>
            <person name="Rottier P.J."/>
            <person name="de Haan C.A."/>
        </authorList>
    </citation>
    <scope>INTERACTION WITH NON-STRUCTURAL PROTEIN 6 (NON-STRUCTURAL PROTEIN 4)</scope>
    <scope>SUBCELLULAR LOCATION (NON-STRUCTURAL PROTEIN 4)</scope>
    <scope>INTERACTION WITH 3C-LIKE PROTEINASE NSP5 (NON-STRUCTURAL PROTEIN 4)</scope>
</reference>
<reference key="48">
    <citation type="journal article" date="2011" name="RNA Biol.">
        <title>Coronaviruses: an RNA proofreading machine regulates replication fidelity and diversity.</title>
        <authorList>
            <person name="Denison M.R."/>
            <person name="Graham R.L."/>
            <person name="Donaldson E.F."/>
            <person name="Eckerle L.D."/>
            <person name="Baric R.S."/>
        </authorList>
    </citation>
    <scope>FUNCTION (PROOFREADING EXORIBONUCLEASE NSP14)</scope>
</reference>
<reference key="49">
    <citation type="journal article" date="2012" name="Nucleic Acids Res.">
        <title>The SARS-coronavirus nsp7+nsp8 complex is a unique multimeric RNA polymerase capable of both de novo initiation and primer extension.</title>
        <authorList>
            <person name="te Velthuis A.J."/>
            <person name="van den Worm S.H."/>
            <person name="Snijder E.J."/>
        </authorList>
    </citation>
    <scope>FUNCTION (NON-STRUCTURAL PROTEIN 7)</scope>
    <scope>FUNCTION (NON-STRUCTURAL PROTEIN 8)</scope>
</reference>
<reference key="50">
    <citation type="journal article" date="2012" name="J. Virol.">
        <title>Severe acute respiratory syndrome coronavirus protein nsp1 is a novel eukaryotic translation inhibitor that represses multiple steps of translation initiation.</title>
        <authorList>
            <person name="Lokugamage K.G."/>
            <person name="Narayanan K."/>
            <person name="Huang C."/>
            <person name="Makino S."/>
        </authorList>
    </citation>
    <scope>FUNCTION (HOST TRANSLATION INHIBITOR NSP1)</scope>
</reference>
<reference key="51">
    <citation type="journal article" date="2012" name="PLoS ONE">
        <title>Mechanism of nucleic acid unwinding by SARS-CoV helicase.</title>
        <authorList>
            <person name="Adedeji A.O."/>
            <person name="Marchand B."/>
            <person name="Te Velthuis A.J."/>
            <person name="Snijder E.J."/>
            <person name="Weiss S."/>
            <person name="Eoff R.L."/>
            <person name="Singh K."/>
            <person name="Sarafianos S.G."/>
        </authorList>
    </citation>
    <scope>FUNCTION (HELICASE NSP13)</scope>
    <scope>CATALYTIC ACTIVITY (HELICASE NSP13)</scope>
</reference>
<reference key="52">
    <citation type="journal article" date="2012" name="Arch. Virol.">
        <title>Biochemical characterization of a recombinant SARS coronavirus nsp12 RNA-dependent RNA polymerase capable of copying viral RNA templates.</title>
        <authorList>
            <person name="Ahn D.G."/>
            <person name="Choi J.K."/>
            <person name="Taylor D.R."/>
            <person name="Oh J.W."/>
        </authorList>
    </citation>
    <scope>FUNCTION (RNA-DIRECTED RNA POLYMERASE NSP12)</scope>
</reference>
<reference key="53">
    <citation type="journal article" date="2012" name="Proc. Natl. Acad. Sci. U.S.A.">
        <title>RNA 3'-end mismatch excision by the severe acute respiratory syndrome coronavirus nonstructural protein nsp10/nsp14 exoribonuclease complex.</title>
        <authorList>
            <person name="Bouvet M."/>
            <person name="Imbert I."/>
            <person name="Subissi L."/>
            <person name="Gluais L."/>
            <person name="Canard B."/>
            <person name="Decroly E."/>
        </authorList>
    </citation>
    <scope>FUNCTION (NON-STRUCTURAL PROTEIN 10)</scope>
    <scope>FUNCTION (GUANINE-N7 METHYLTRANSFERASE)</scope>
    <scope>INTERACTION WITH NON-STRUCTURAL PROTEIN 14 (NON-STRUCTURAL PROTEIN 10)</scope>
    <scope>INTERACTION WITH NON-STRUCTURAL PROTEIN 10 (NON-STRUCTURAL PROTEIN 14)</scope>
</reference>
<reference key="54">
    <citation type="journal article" date="2013" name="MBio">
        <title>Severe acute respiratory syndrome coronavirus nonstructural proteins 3, 4, and 6 induce double-membrane vesicles.</title>
        <authorList>
            <person name="Angelini M.M."/>
            <person name="Akhlaghpour M."/>
            <person name="Neuman B.W."/>
            <person name="Buchmeier M.J."/>
        </authorList>
    </citation>
    <scope>FUNCTION (NON-STRUCTURAL PROTEIN 4)</scope>
    <scope>SUBCELLULAR LOCATION (NON-STRUCTURAL PROTEIN 4)</scope>
    <scope>FUNCTION (PAPAIN-LIKE PROTEASE NSP3)</scope>
    <scope>FUNCTION (NON-STRUCTURAL PROTEIN 6)</scope>
</reference>
<reference key="55">
    <citation type="journal article" date="2013" name="PLoS Pathog.">
        <title>Coronaviruses lacking exoribonuclease activity are susceptible to lethal mutagenesis: evidence for proofreading and potential therapeutics.</title>
        <authorList>
            <person name="Smith E.C."/>
            <person name="Blanc H."/>
            <person name="Surdel M.C."/>
            <person name="Vignuzzi M."/>
            <person name="Denison M.R."/>
        </authorList>
    </citation>
    <scope>FUNCTION (PROOFREADING EXORIBONUCLEASE NSP14)</scope>
</reference>
<reference key="56">
    <citation type="journal article" date="2014" name="Autophagy">
        <title>Coronavirus NSP6 restricts autophagosome expansion.</title>
        <authorList>
            <person name="Cottam E.M."/>
            <person name="Whelband M.C."/>
            <person name="Wileman T."/>
        </authorList>
    </citation>
    <scope>FUNCTION (NON-STRUCTURAL PROTEIN 6)</scope>
</reference>
<reference key="57">
    <citation type="journal article" date="2014" name="DNA Cell Biol.">
        <title>Untangling membrane rearrangement in the nidovirales.</title>
        <authorList>
            <person name="Angelini M.M."/>
            <person name="Neuman B.W."/>
            <person name="Buchmeier M.J."/>
        </authorList>
    </citation>
    <scope>REVIEW</scope>
</reference>
<reference key="58">
    <citation type="journal article" date="2014" name="Protein Cell">
        <title>SARS coronavirus papain-like protease inhibits the type I interferon signaling pathway through interaction with the STING-TRAF3-TBK1 complex.</title>
        <authorList>
            <person name="Chen X."/>
            <person name="Yang X."/>
            <person name="Zheng Y."/>
            <person name="Yang Y."/>
            <person name="Xing Y."/>
            <person name="Chen Z."/>
        </authorList>
    </citation>
    <scope>FUNCTION (NON-STRUCTURAL PROTEIN 3)</scope>
</reference>
<reference key="59">
    <citation type="journal article" date="2017" name="PLoS Pathog.">
        <title>Early endonuclease-mediated evasion of RNA sensing ensures efficient coronavirus replication.</title>
        <authorList>
            <person name="Kindler E."/>
            <person name="Gil-Cruz C."/>
            <person name="Spanier J."/>
            <person name="Li Y."/>
            <person name="Wilhelm J."/>
            <person name="Rabouw H.H."/>
            <person name="Zuest R."/>
            <person name="Hwang M."/>
            <person name="V'kovski P."/>
            <person name="Stalder H."/>
            <person name="Marti S."/>
            <person name="Habjan M."/>
            <person name="Cervantes-Barragan L."/>
            <person name="Elliot R."/>
            <person name="Karl N."/>
            <person name="Gaughan C."/>
            <person name="van Kuppeveld F.J."/>
            <person name="Silverman R.H."/>
            <person name="Keller M."/>
            <person name="Ludewig B."/>
            <person name="Bergmann C.C."/>
            <person name="Ziebuhr J."/>
            <person name="Weiss S.R."/>
            <person name="Kalinke U."/>
            <person name="Thiel V."/>
        </authorList>
    </citation>
    <scope>FUNCTION (URIDYLATE-SPECIFIC ENDORIBONUCLEASE NSP15)</scope>
</reference>
<reference key="60">
    <citation type="journal article" date="2018" name="MBio">
        <title>Coronavirus Susceptibility to the Antiviral Remdesivir (GS-5734) Is Mediated by the Viral Polymerase and the Proofreading Exoribonuclease.</title>
        <authorList>
            <person name="Agostini M.L."/>
            <person name="Andres E.L."/>
            <person name="Sims A.C."/>
            <person name="Graham R.L."/>
            <person name="Sheahan T.P."/>
            <person name="Lu X."/>
            <person name="Smith E.C."/>
            <person name="Case J.B."/>
            <person name="Feng J.Y."/>
            <person name="Jordan R."/>
            <person name="Ray A.S."/>
            <person name="Cihlar T."/>
            <person name="Siegel D."/>
            <person name="Mackman R.L."/>
            <person name="Clarke M.O."/>
            <person name="Baric R.S."/>
            <person name="Denison M.R."/>
        </authorList>
    </citation>
    <scope>FUNCTION (PROOFREADING EXORIBONUCLEASE NSP14)</scope>
    <scope>ACTIVITY REGULATION (PROOFREADING EXORIBONUCLEASE NSP14)</scope>
</reference>
<reference key="61">
    <citation type="journal article" date="2019" name="Biochem. Cell Biol.">
        <title>SARS coronavirus protein nsp1 disrupts localization of Nup93 from the nuclear pore complex.</title>
        <authorList>
            <person name="Gomez G.N."/>
            <person name="Abrar F."/>
            <person name="Dodhia M.P."/>
            <person name="Gonzalez F.G."/>
            <person name="Nag A."/>
        </authorList>
    </citation>
    <scope>INTERACTION WITH HOST NUP93 (HOST TRANSLATION INHIBITOR NSP1)</scope>
    <scope>FUNCTION (HOST TRANSLATION INHIBITOR NSP1)</scope>
</reference>
<reference key="62">
    <citation type="journal article" date="2020" name="Biochem. J.">
        <title>Processing of the SARS-CoV pp1a/ab nsp7-10 region.</title>
        <authorList>
            <person name="Krichel B."/>
            <person name="Falke S."/>
            <person name="Hilgenfeld R."/>
            <person name="Redecke L."/>
            <person name="Uetrecht C."/>
        </authorList>
    </citation>
    <scope>PROTEOLYTIC CLEAVAGE (ISOFORM REPLICASE POLYPROTEIN 1AB)</scope>
    <scope>MASS SPECTROMETRY (NON-STRUCTURAL PROTEIN 8)</scope>
    <scope>MASS SPECTROMETRY (NON-STRUCTURAL PROTEIN 9)</scope>
    <scope>MASS SPECTROMETRY (NON-STRUCTURAL PROTEIN 10)</scope>
</reference>
<reference key="63">
    <citation type="journal article" date="2021" name="Proc. Natl. Acad. Sci. U.S.A.">
        <title>Structure-function analysis of the nsp14 N7-guanine methyltransferase reveals an essential role in Betacoronavirus replication.</title>
        <authorList>
            <person name="Ogando N.S."/>
            <person name="El Kazzi P."/>
            <person name="Zevenhoven-Dobbe J.C."/>
            <person name="Bontes B.W."/>
            <person name="Decombe A."/>
            <person name="Posthuma C.C."/>
            <person name="Thiel V."/>
            <person name="Canard B."/>
            <person name="Ferron F."/>
            <person name="Decroly E."/>
            <person name="Snijder E.J."/>
        </authorList>
    </citation>
    <scope>FUNCTION (NON-STRUCTURAL PROTEIN 14)</scope>
    <scope>MUTAGENESIS OF TRP-6194; ASN-6208; ARG-6212; ASP-6233; LYS-6238; ASP-6254; ASN-6288; TYR-6322; ASN-6324; HIS-6326 AND PHE-6328</scope>
</reference>
<reference key="64">
    <citation type="journal article" date="2022" name="Mol. Cell">
        <title>Human NLRP1 is a sensor of pathogenic coronavirus 3CL proteases in lung epithelial cells.</title>
        <authorList>
            <consortium name="COVID Human Genetic Effort"/>
            <person name="Planes R."/>
            <person name="Pinilla M."/>
            <person name="Santoni K."/>
            <person name="Hessel A."/>
            <person name="Passemar C."/>
            <person name="Lay K."/>
            <person name="Paillette P."/>
            <person name="Valadao A.C."/>
            <person name="Robinson K.S."/>
            <person name="Bastard P."/>
            <person name="Lam N."/>
            <person name="Fadrique R."/>
            <person name="Rossi I."/>
            <person name="Pericat D."/>
            <person name="Bagayoko S."/>
            <person name="Leon-Icaza S.A."/>
            <person name="Rombouts Y."/>
            <person name="Perouzel E."/>
            <person name="Tiraby M."/>
            <person name="Zhang Q."/>
            <person name="Cicuta P."/>
            <person name="Jouanguy E."/>
            <person name="Neyrolles O."/>
            <person name="Bryant C.E."/>
            <person name="Floto A.R."/>
            <person name="Goujon C."/>
            <person name="Lei F.Z."/>
            <person name="Martin-Blondel G."/>
            <person name="Silva S."/>
            <person name="Casanova J.L."/>
            <person name="Cougoule C."/>
            <person name="Reversade B."/>
            <person name="Marcoux J."/>
            <person name="Ravet E."/>
            <person name="Meunier E."/>
        </authorList>
    </citation>
    <scope>FUNCTION (3C-LIKE PROTEINASE NSP5)</scope>
</reference>
<reference key="65">
    <citation type="journal article" date="2003" name="Science">
        <title>Coronavirus main proteinase (3CLpro) structure: basis for design of anti-SARS drugs.</title>
        <authorList>
            <person name="Anand K."/>
            <person name="Ziebuhr J."/>
            <person name="Wadhwani P."/>
            <person name="Mesters J.R."/>
            <person name="Hilgenfeld R."/>
        </authorList>
    </citation>
    <scope>3D-STRUCTURE MODELING OF 3241-3540</scope>
    <scope>CHARACTERIZATION</scope>
</reference>
<reference key="66">
    <citation type="journal article" date="2003" name="Acta Crystallogr. D">
        <title>Structural genomics of the SARS coronavirus: cloning, expression, crystallization and preliminary crystallographic study of the Nsp9 protein.</title>
        <authorList>
            <person name="Campanacci V."/>
            <person name="Egloff M.-P."/>
            <person name="Longhi S."/>
            <person name="Ferron F."/>
            <person name="Rancurel C."/>
            <person name="Salomoni A."/>
            <person name="Durousseau C."/>
            <person name="Tocque F."/>
            <person name="Bremond N."/>
            <person name="Dobbe J.C."/>
            <person name="Snijder E.J."/>
            <person name="Canard B."/>
            <person name="Cambillau C."/>
        </authorList>
    </citation>
    <scope>X-RAY CRYSTALLOGRAPHY (2.8 ANGSTROMS) OF 4118-4230 (NSP9)</scope>
    <source>
        <strain>Isolate Frankfurt-1</strain>
    </source>
</reference>
<reference key="67">
    <citation type="journal article" date="2004" name="Proc. Natl. Acad. Sci. U.S.A.">
        <title>The severe acute respiratory syndrome-coronavirus replicative protein nsp9 is a single-stranded RNA-binding subunit unique in the RNA virus world.</title>
        <authorList>
            <person name="Egloff M.-P."/>
            <person name="Ferron F."/>
            <person name="Campanacci V."/>
            <person name="Longhi S."/>
            <person name="Rancurel C."/>
            <person name="Dutartre H."/>
            <person name="Snijder E.J."/>
            <person name="Gorbalenya A.E."/>
            <person name="Cambillau C."/>
            <person name="Canard B."/>
        </authorList>
    </citation>
    <scope>X-RAY CRYSTALLOGRAPHY (2.7 ANGSTROMS) OF 4118-4230</scope>
</reference>
<reference key="68">
    <citation type="journal article" date="2004" name="Structure">
        <title>The nsp9 replicase protein of SARS-coronavirus, structure and functional insights.</title>
        <authorList>
            <person name="Sutton G."/>
            <person name="Fry E."/>
            <person name="Carter L."/>
            <person name="Sainsbury S."/>
            <person name="Walter T."/>
            <person name="Nettleship J."/>
            <person name="Berrow N."/>
            <person name="Owens R."/>
            <person name="Gilbert R."/>
            <person name="Davidson A."/>
            <person name="Siddell S."/>
            <person name="Poon L.L.M."/>
            <person name="Diprose J."/>
            <person name="Alderton D."/>
            <person name="Walsh M."/>
            <person name="Grimes J.M."/>
            <person name="Stuart D.I."/>
        </authorList>
    </citation>
    <scope>X-RAY CRYSTALLOGRAPHY (2.8 ANGSTROMS) OF 4107-4230</scope>
    <scope>INTERACTION WITH NON-STRUCTURAL PROTEIN 9 (NON-STRUCTURAL PROTEIN 8)</scope>
    <scope>INTERACTION WITH NON-STRUCTURAL PROTEIN 8 (NON-STRUCTURAL PROTEIN 9)</scope>
</reference>
<reference key="69">
    <citation type="journal article" date="2005" name="Nat. Struct. Mol. Biol.">
        <title>Insights into SARS-CoV transcription and replication from the structure of the nsp7-nsp8 hexadecamer.</title>
        <authorList>
            <person name="Zhai Y."/>
            <person name="Sun F."/>
            <person name="Li X."/>
            <person name="Pang H."/>
            <person name="Xu X."/>
            <person name="Bartlam M."/>
            <person name="Rao Z."/>
        </authorList>
    </citation>
    <scope>X-RAY CRYSTALLOGRAPHY (2.4 ANGSTROMS) OF 3837-4117 AND 3920-4117</scope>
    <scope>INTERACTION WITH NON-STRUCTURAL PROTEIN 7 (NON-STRUCTURAL PROTEIN 8)</scope>
    <scope>INTERACTION WITH NON-STRUCTURAL PROTEIN 8 (NON-STRUCTURAL PROTEIN 7)</scope>
</reference>
<reference key="70">
    <citation type="journal article" date="2005" name="Structure">
        <title>Structural basis of severe acute respiratory syndrome coronavirus ADP-ribose-1''-phosphate dephosphorylation by a conserved domain of nsP3.</title>
        <authorList>
            <person name="Saikatendu K.S."/>
            <person name="Joseph J.S."/>
            <person name="Subramanian V."/>
            <person name="Clayton T."/>
            <person name="Griffith M."/>
            <person name="Moy K."/>
            <person name="Velasquez J."/>
            <person name="Neuman B.W."/>
            <person name="Buchmeier M.J."/>
            <person name="Stevens R.C."/>
            <person name="Kuhn P."/>
        </authorList>
    </citation>
    <scope>X-RAY CRYSTALLOGRAPHY (1.4 ANGSTROMS) OF 1002-1176</scope>
    <scope>FUNCTION (3C-LIKE PROTEINASE NSP5)</scope>
</reference>
<reference key="71">
    <citation type="journal article" date="2006" name="Proc. Natl. Acad. Sci. U.S.A.">
        <title>Severe acute respiratory syndrome coronavirus papain-like protease: structure of a viral deubiquitinating enzyme.</title>
        <authorList>
            <person name="Ratia K."/>
            <person name="Saikatendu K.S."/>
            <person name="Santarsiero B.D."/>
            <person name="Barretto N."/>
            <person name="Baker S.C."/>
            <person name="Stevens R.C."/>
            <person name="Mesecar A.D."/>
        </authorList>
    </citation>
    <scope>X-RAY CRYSTALLOGRAPHY (1.85 ANGSTROMS) OF 1541-1854</scope>
</reference>
<reference key="72">
    <citation type="journal article" date="2006" name="J. Virol.">
        <title>Crystal structure of nonstructural protein 10 from the severe acute respiratory syndrome coronavirus reveals a novel fold with two zinc-binding motifs.</title>
        <authorList>
            <person name="Joseph J.S."/>
            <person name="Saikatendu K.S."/>
            <person name="Subramanian V."/>
            <person name="Neuman B.W."/>
            <person name="Brooun A."/>
            <person name="Griffith M."/>
            <person name="Moy K."/>
            <person name="Yadav M.K."/>
            <person name="Velasquez J."/>
            <person name="Buchmeier M.J."/>
            <person name="Stevens R.C."/>
            <person name="Kuhn P."/>
        </authorList>
    </citation>
    <scope>X-RAY CRYSTALLOGRAPHY (1.8 ANGSTROMS) OF 4240-4362</scope>
    <source>
        <strain>Isolate Tor2</strain>
    </source>
</reference>
<reference key="73">
    <citation type="journal article" date="2006" name="J. Virol.">
        <title>Dodecamer structure of severe acute respiratory syndrome coronavirus nonstructural protein nsp10.</title>
        <authorList>
            <person name="Su D."/>
            <person name="Lou Z."/>
            <person name="Sun F."/>
            <person name="Zhai Y."/>
            <person name="Yang H."/>
            <person name="Zhang R."/>
            <person name="Joachimiak A."/>
            <person name="Zhang X.C."/>
            <person name="Bartlam M."/>
            <person name="Rao Z."/>
        </authorList>
    </citation>
    <scope>X-RAY CRYSTALLOGRAPHY (2.1 ANGSTROMS) OF 4231-4378</scope>
    <scope>SUBUNIT (NON-STRUCTURAL PROTEIN 10)</scope>
</reference>
<reference key="74">
    <citation type="journal article" date="2007" name="J. Virol.">
        <title>Novel beta-barrel fold in the nuclear magnetic resonance structure of the replicase nonstructural protein 1 from the severe acute respiratory syndrome coronavirus.</title>
        <authorList>
            <person name="Almeida M.S."/>
            <person name="Johnson M.A."/>
            <person name="Herrmann T."/>
            <person name="Geralt M."/>
            <person name="Wuthrich K."/>
        </authorList>
    </citation>
    <scope>STRUCTURE BY NMR OF 13-127</scope>
</reference>
<reference key="75">
    <citation type="submission" date="2007-07" db="PDB data bank">
        <title>Crystal structure of Sars coronavirus main proteinase(3CLPRO).</title>
        <authorList>
            <consortium name="RIKEN structural genomics initiative (RSGI)"/>
        </authorList>
    </citation>
    <scope>X-RAY CRYSTALLOGRAPHY (1.7 ANGSTROMS) OF 3241-3546</scope>
</reference>
<reference key="76">
    <citation type="journal article" date="2008" name="J. Biol. Chem.">
        <title>Structural and functional analyses of the severe acute respiratory syndrome coronavirus endoribonuclease Nsp15.</title>
        <authorList>
            <person name="Bhardwaj K."/>
            <person name="Palaninathan S."/>
            <person name="Alcantara J.M.O."/>
            <person name="Li Yi L."/>
            <person name="Guarino L."/>
            <person name="Sacchettini J.C."/>
            <person name="Kao C.C."/>
        </authorList>
    </citation>
    <scope>X-RAY CRYSTALLOGRAPHY (2.64 ANGSTROMS) OF 6429-6774 (URIDYLATE-SPECIFIC ENDORIBONUCLEASE NSP15)</scope>
    <scope>FUNCTION (URIDYLATE-SPECIFIC ENDORIBONUCLEASE NSP15)</scope>
    <scope>MUTAGENESIS OF HIS-6663</scope>
</reference>
<reference key="77">
    <citation type="journal article" date="2011" name="PLoS Pathog.">
        <title>Biochemical and structural insights into the mechanisms of SARS coronavirus RNA ribose 2'-O-methylation by nsp16/nsp10 protein complex.</title>
        <authorList>
            <person name="Chen Y."/>
            <person name="Su C."/>
            <person name="Ke M."/>
            <person name="Jin X."/>
            <person name="Xu L."/>
            <person name="Zhang Z."/>
            <person name="Wu A."/>
            <person name="Sun Y."/>
            <person name="Yang Z."/>
            <person name="Tien P."/>
            <person name="Ahola T."/>
            <person name="Liang Y."/>
            <person name="Liu X."/>
            <person name="Guo D."/>
        </authorList>
    </citation>
    <scope>X-RAY CRYSTALLOGRAPHY (2.0 ANGSTROMS) OF 4240-4382 (NON-STRUCTURAL PROTEIN 10)</scope>
    <scope>X-RAY CRYSTALLOGRAPHY (2.0 ANGSTROMS) OF 6776-7073 (NON-STRUCTURAL PROTEIN 10)</scope>
    <scope>FUNCTION (2'-O-METHYLTRANSFERASE NSP16)</scope>
    <scope>CATALYTIC ACTIVITY (2'-O-METHYLTRANSFERASE NSP16)</scope>
    <scope>FUNCTION (NON-STRUCTURAL PROTEIN 10)</scope>
    <scope>INTERACTION WITH NSP16 (NON-STRUCTURAL PROTEIN 10)</scope>
    <scope>INTERACTION WITH NSP10 (2'-O-METHYLTRANSFERASE NSP16)</scope>
    <scope>MUTAGENESIS OF 4306-TYR--ARG-4308 AND 4313-HIS-PRO-4314</scope>
</reference>
<comment type="function">
    <molecule>Isoform Replicase polyprotein 1ab</molecule>
    <text evidence="81">Multifunctional protein involved in the transcription and replication of viral RNAs. Contains the proteinases responsible for the cleavages of the polyprotein.</text>
</comment>
<comment type="function">
    <molecule>Host translation inhibitor nsp1</molecule>
    <text evidence="65 72">Inhibits host translation by interacting with the 40S ribosomal subunit. The nsp1-40S ribosome complex further induces an endonucleolytic cleavage near the 5'UTR of host mRNAs, targeting them for degradation. Viral mRNAs are not susceptible to nsp1-mediated endonucleolytic RNA cleavage thanks to the presence of a 5'-end leader sequence and are therefore protected from degradation. By suppressing host gene expression, nsp1 facilitates efficient viral gene expression in infected cells and evasion from host immune response (PubMed:23035226). May disrupt nuclear pore function by binding and displacing host NUP93 (PubMed:30943371).</text>
</comment>
<comment type="function">
    <molecule>Non-structural protein 2</molecule>
    <text evidence="55">May play a role in the modulation of host cell survival signaling pathway by interacting with host PHB and PHB2 (PubMed:19640993). Indeed, these two proteins play a role in maintaining the functional integrity of the mitochondria and protecting cells from various stresses (PubMed:19640993).</text>
</comment>
<comment type="function">
    <molecule>Papain-like protease nsp3</molecule>
    <text evidence="42 47 54 66 68 78">Responsible for the cleavages located at the N-terminus of the replicase polyprotein (PubMed:16306590). In addition, PL-PRO possesses a deubiquitinating/deISGylating activity and processes both 'Lys-48'- and 'Lys-63'-linked polyubiquitin chains from cellular substrates (PubMed:16306590, PubMed:17692280). Plays a role in host membrane rearrangement that leads to creation of cytoplasmic double-membrane vesicles (DMV) necessary for viral replication (PubMed:23943763). Nsp3, nsp4 and nsp6 together are sufficient to form DMV (PubMed:24410069). Antagonizes innate immune induction of type I interferon by blocking the phosphorylation, dimerization and subsequent nuclear translocation of host IRF3 (PubMed:19369340, PubMed:24622840). Also prevents host NF-kappa-B signaling (PubMed:19369340, PubMed:24622840).</text>
</comment>
<comment type="function">
    <molecule>Non-structural protein 4</molecule>
    <text evidence="66 78">Plays a role in host membrane rearrangement that leads to creation of cytoplasmic double-membrane vesicles (DMV) necessary for viral replication (PubMed:23943763). Alone appears incapable to induce membrane curvature, but together with nsp3 is able to induce paired membranes. Nsp3, nsp4 and nsp6 together are sufficient to form DMV.</text>
</comment>
<comment type="function">
    <molecule>3C-like proteinase nsp5</molecule>
    <text evidence="7 40 75">Cleaves the C-terminus of replicase polyprotein at 11 sites. Recognizes substrates containing the core sequence [ILMVF]-Q-|-[SGACN]. May cleave human NLRP1 in lung epithelial cells, thereby activating the NLRP1 inflammasome pathway (PubMed:35594856). Also able to bind an ADP-ribose-1''-phosphate (ADRP). May cleave host ATP6V1G1 thereby modifying host vacuoles intracellular pH.</text>
</comment>
<comment type="function">
    <molecule>Non-structural protein 6</molecule>
    <text evidence="69 78">Plays a role in host membrane rearrangement that leads to creation of cytoplasmic double-membrane vesicles (DMV) necessary for viral replication (PubMed:24410069, PubMed:24991833). Nsp3, nsp4 and nsp6 together are sufficient to form DMV (PubMed:24410069, PubMed:24991833). Plays a role in the initial induction of autophagosomes from host endoplasmic reticulum. Later, limits the expansion of these phagosomes that are no longer able to deliver viral components to lysosomes (PubMed:24991833).</text>
</comment>
<comment type="function">
    <molecule>Non-structural protein 7</molecule>
    <text evidence="61">Forms a hexadecamer with nsp8 (8 subunits of each) that may participate in viral replication by acting as a primase. Alternatively, may synthesize substantially longer products than oligonucleotide primers.</text>
</comment>
<comment type="function">
    <molecule>Non-structural protein 8</molecule>
    <text evidence="61">Forms a hexadecamer with nsp7 (8 subunits of each) that may participate in viral replication by acting as a primase. Alternatively, may synthesize substantially longer products than oligonucleotide primers.</text>
</comment>
<comment type="function">
    <molecule>Viral protein genome-linked nsp9</molecule>
    <text evidence="2">Forms a primer, NSP9-pU, which is utilized by the polymerase for the initiation of RNA chains. Interacts with ribosome signal recognition particle RNA (SRP). Together with NSP8, suppress protein integration into the cell membrane, thereby disrupting host immune defenses.</text>
</comment>
<comment type="function">
    <molecule>Non-structural protein 10</molecule>
    <text evidence="60 63">Plays a pivotal role in viral transcription by stimulating both nsp14 3'-5' exoribonuclease and nsp16 2'-O-methyltransferase activities. Therefore plays an essential role in viral mRNAs cap methylation.</text>
</comment>
<comment type="function">
    <molecule>RNA-directed RNA polymerase nsp12</molecule>
    <text evidence="2 64">RNA-directed RNA polymerase that catalyzes the transcription of viral genomic and subgenomic RNAs (PubMed:22791111). Acts in complex with nsp7 and nsp8 to transcribe both the minus and positive strands of genomic RNA. The kinase-like NiRAN domain of NSP12 attaches one or more nucleotides to the amino terminus of NSP9, forming a covalent RNA-protein intermediate that serves as transcription/replication primer. Subgenomic RNAs (sgRNAs) are formed by discontinuous transcription: The polymerase has the ability to pause at transcription-regulating sequences (TRS) and jump to the leader TRS, resulting in a major deletion. This creates a series of subgenomic RNAs that are replicated, transcribed and translated. In addition, Nsp12 is a subunit of the viral RNA capping enzyme that catalyzes the RNA guanylyltransferase reaction for genomic and sub-genomic RNAs. Subsequently, the NiRAN domain transfers RNA to GDP, and forms the core cap structure GpppA-RNA.</text>
</comment>
<comment type="function">
    <molecule>Helicase nsp13</molecule>
    <text evidence="34 62">Multi-functional protein with a zinc-binding domain in N-terminus displaying RNA and DNA duplex-unwinding activities with 5' to 3' polarity. Activity of helicase is dependent on magnesium.</text>
</comment>
<comment type="function">
    <molecule>Guanine-N7 methyltransferase nsp14</molecule>
    <text evidence="43 56 59 63 67 71 74">Plays a role in viral RNA synthesis through two distinct activities. The N7-guanine methyltransferase activity plays a role in the formation of the cap structure GpppA-RNA (PubMed:20421945, PubMed:34845015). The proofreading exoribonuclease reduces the sensitivity of the virus to RNA mutagens during replication (PubMed:16549795, PubMed:21593585, PubMed:22635272, PubMed:23966862, PubMed:29511076). This activity acts on both ssRNA and dsRNA in a 3'-5' direction.</text>
</comment>
<comment type="function">
    <molecule>Uridylate-specific endoribonuclease nsp15</molecule>
    <text evidence="44 49 70">Plays a role in viral transcription/replication and prevents the simultaneous activation of host cell dsRNA sensors, such as MDA5/IFIH1, OAS, and PKR (PubMed:18045871, PubMed:28158275). Acts by degrading the 5'-polyuridines generated during replication of the poly(A) region of viral genomic and subgenomic RNAs. Catalyzes a two-step reaction in which a 2'3'-cyclic phosphate (2'3'-cP) is first generated by 2'-O transesterification, which is then hydrolyzed to a 3'-phosphate (3'-P) (PubMed:16828802). If not degraded, poly(U) RNA would hybridize with poly(A) RNA tails and activate host dsRNA sensors (PubMed:18045871, PubMed:28158275).</text>
</comment>
<comment type="function">
    <molecule>2'-O-methyltransferase nsp16</molecule>
    <text evidence="50 56 60 81">Methyltransferase that mediates mRNA cap 2'-O-ribose methylation to the 5'-cap structure of viral mRNAs (PubMed:18417574, PubMed:20421945, PubMed:22022266). N7-methyl guanosine cap is a prerequisite for binding of nsp16 (PubMed:18417574). Therefore plays an essential role in viral mRNAs cap methylation which is essential to evade immune system (PubMed:18417574, PubMed:20421945, PubMed:22022266).</text>
</comment>
<comment type="catalytic activity">
    <molecule>RNA-directed RNA polymerase nsp12</molecule>
    <reaction evidence="6 36">
        <text>RNA(n) + a ribonucleoside 5'-triphosphate = RNA(n+1) + diphosphate</text>
        <dbReference type="Rhea" id="RHEA:21248"/>
        <dbReference type="Rhea" id="RHEA-COMP:14527"/>
        <dbReference type="Rhea" id="RHEA-COMP:17342"/>
        <dbReference type="ChEBI" id="CHEBI:33019"/>
        <dbReference type="ChEBI" id="CHEBI:61557"/>
        <dbReference type="ChEBI" id="CHEBI:140395"/>
        <dbReference type="EC" id="2.7.7.48"/>
    </reaction>
</comment>
<comment type="catalytic activity">
    <molecule>Helicase nsp13</molecule>
    <reaction evidence="62">
        <text>ATP + H2O = ADP + phosphate + H(+)</text>
        <dbReference type="Rhea" id="RHEA:13065"/>
        <dbReference type="ChEBI" id="CHEBI:15377"/>
        <dbReference type="ChEBI" id="CHEBI:15378"/>
        <dbReference type="ChEBI" id="CHEBI:30616"/>
        <dbReference type="ChEBI" id="CHEBI:43474"/>
        <dbReference type="ChEBI" id="CHEBI:456216"/>
        <dbReference type="EC" id="3.6.4.12"/>
    </reaction>
</comment>
<comment type="catalytic activity">
    <molecule>Helicase nsp13</molecule>
    <reaction evidence="62">
        <text>ATP + H2O = ADP + phosphate + H(+)</text>
        <dbReference type="Rhea" id="RHEA:13065"/>
        <dbReference type="ChEBI" id="CHEBI:15377"/>
        <dbReference type="ChEBI" id="CHEBI:15378"/>
        <dbReference type="ChEBI" id="CHEBI:30616"/>
        <dbReference type="ChEBI" id="CHEBI:43474"/>
        <dbReference type="ChEBI" id="CHEBI:456216"/>
        <dbReference type="EC" id="3.6.4.13"/>
    </reaction>
</comment>
<comment type="catalytic activity">
    <molecule>3C-like proteinase nsp5</molecule>
    <reaction evidence="35 36">
        <text>TSAVLQ-|-SGFRK-NH2 and SGVTFQ-|-GKFKK the two peptides corresponding to the two self-cleavage sites of the SARS 3C-like proteinase are the two most reactive peptide substrates. The enzyme exhibits a strong preference for substrates containing Gln at P1 position and Leu at P2 position.</text>
        <dbReference type="EC" id="3.4.22.69"/>
    </reaction>
</comment>
<comment type="catalytic activity">
    <molecule>Papain-like protease nsp3</molecule>
    <reaction evidence="35 47">
        <text>Thiol-dependent hydrolysis of ester, thioester, amide, peptide and isopeptide bonds formed by the C-terminal Gly of ubiquitin (a 76-residue protein attached to proteins as an intracellular targeting signal).</text>
        <dbReference type="EC" id="3.4.19.12"/>
    </reaction>
</comment>
<comment type="catalytic activity">
    <molecule>2'-O-methyltransferase nsp16</molecule>
    <reaction evidence="60 70">
        <text>a 5'-end (N(7)-methyl 5'-triphosphoguanosine)-ribonucleoside in mRNA + S-adenosyl-L-methionine = a 5'-end (N(7)-methyl 5'-triphosphoguanosine)-(2'-O-methyl-ribonucleoside) in mRNA + S-adenosyl-L-homocysteine + H(+)</text>
        <dbReference type="Rhea" id="RHEA:67020"/>
        <dbReference type="Rhea" id="RHEA-COMP:17167"/>
        <dbReference type="Rhea" id="RHEA-COMP:17168"/>
        <dbReference type="ChEBI" id="CHEBI:15378"/>
        <dbReference type="ChEBI" id="CHEBI:57856"/>
        <dbReference type="ChEBI" id="CHEBI:59789"/>
        <dbReference type="ChEBI" id="CHEBI:156461"/>
        <dbReference type="ChEBI" id="CHEBI:167609"/>
        <dbReference type="EC" id="2.1.1.57"/>
    </reaction>
</comment>
<comment type="catalytic activity">
    <molecule>Uridylate-specific endoribonuclease nsp15</molecule>
    <reaction evidence="44">
        <text>uridylyl-uridylyl-ribonucleotide-RNA = a 3'-end uridylyl-2',3'-cyclophospho-uridine-RNA + a 5'-end dephospho-ribonucleoside-RNA</text>
        <dbReference type="Rhea" id="RHEA:67732"/>
        <dbReference type="Rhea" id="RHEA-COMP:13936"/>
        <dbReference type="Rhea" id="RHEA-COMP:17334"/>
        <dbReference type="Rhea" id="RHEA-COMP:17335"/>
        <dbReference type="ChEBI" id="CHEBI:138284"/>
        <dbReference type="ChEBI" id="CHEBI:173079"/>
        <dbReference type="ChEBI" id="CHEBI:173080"/>
    </reaction>
</comment>
<comment type="catalytic activity">
    <molecule>Guanine-N7 methyltransferase nsp14</molecule>
    <reaction evidence="74">
        <text>a 5'-end (5'-triphosphoguanosine)-ribonucleoside in mRNA + S-adenosyl-L-methionine = a 5'-end (N(7)-methyl 5'-triphosphoguanosine)-ribonucleoside in mRNA + S-adenosyl-L-homocysteine</text>
        <dbReference type="Rhea" id="RHEA:67008"/>
        <dbReference type="Rhea" id="RHEA-COMP:17166"/>
        <dbReference type="Rhea" id="RHEA-COMP:17167"/>
        <dbReference type="ChEBI" id="CHEBI:57856"/>
        <dbReference type="ChEBI" id="CHEBI:59789"/>
        <dbReference type="ChEBI" id="CHEBI:156461"/>
        <dbReference type="ChEBI" id="CHEBI:167617"/>
        <dbReference type="EC" id="2.1.1.56"/>
    </reaction>
</comment>
<comment type="catalytic activity">
    <molecule>RNA-directed RNA polymerase nsp12</molecule>
    <reaction evidence="2">
        <text>a 5'-end diphospho-ribonucleoside in mRNA + GTP + H(+) = a 5'-end (5'-triphosphoguanosine)-ribonucleoside in mRNA + diphosphate</text>
        <dbReference type="Rhea" id="RHEA:67012"/>
        <dbReference type="Rhea" id="RHEA-COMP:17165"/>
        <dbReference type="Rhea" id="RHEA-COMP:17166"/>
        <dbReference type="ChEBI" id="CHEBI:15378"/>
        <dbReference type="ChEBI" id="CHEBI:33019"/>
        <dbReference type="ChEBI" id="CHEBI:37565"/>
        <dbReference type="ChEBI" id="CHEBI:167616"/>
        <dbReference type="ChEBI" id="CHEBI:167617"/>
        <dbReference type="EC" id="2.7.7.50"/>
    </reaction>
</comment>
<comment type="cofactor">
    <molecule>Papain-like protease nsp3</molecule>
    <cofactor evidence="42">
        <name>Zn(2+)</name>
        <dbReference type="ChEBI" id="CHEBI:29105"/>
    </cofactor>
</comment>
<comment type="cofactor">
    <molecule>Uridylate-specific endoribonuclease nsp15</molecule>
    <cofactor evidence="44">
        <name>Mn(2+)</name>
        <dbReference type="ChEBI" id="CHEBI:29035"/>
    </cofactor>
    <text evidence="44">Likely affects Nsp15 binding to RNA.</text>
</comment>
<comment type="cofactor">
    <molecule>RNA-directed RNA polymerase nsp12</molecule>
    <cofactor evidence="2">
        <name>Mg(2+)</name>
        <dbReference type="ChEBI" id="CHEBI:18420"/>
    </cofactor>
</comment>
<comment type="activity regulation">
    <molecule>Guanine-N7 methyltransferase nsp14</molecule>
    <text evidence="71">Inhibited by Remdesivir (GS-5734).</text>
</comment>
<comment type="biophysicochemical properties">
    <kinetics>
        <KM evidence="36">1.15 mM for peptide TSAVLQSGFRK-NH(2)</KM>
        <KM evidence="36">0.58 mM for peptide SGVTFQGKFKK</KM>
        <KM evidence="36">1.44 mM for peptide ATVRLQAGNAT</KM>
        <text>The kinetic parameters are studied for the 3C-like proteinase domain.</text>
    </kinetics>
    <phDependence>
        <text evidence="36">Optimum pH is 7.0 for 3C-like proteinase activity.</text>
    </phDependence>
</comment>
<comment type="subunit">
    <molecule>Non-structural protein 2</molecule>
    <text evidence="55">Interacts with host PHB and PHB2.</text>
</comment>
<comment type="subunit">
    <molecule>Non-structural protein 4</molecule>
    <text evidence="58">Interacts with papain-like protease nsp3 and non-structural protein 6.</text>
</comment>
<comment type="subunit">
    <molecule>3C-like proteinase nsp5</molecule>
    <text evidence="36 38">Monomer. Homodimer. Only the homodimer shows catalytic activity.</text>
</comment>
<comment type="subunit">
    <molecule>Non-structural protein 7</molecule>
    <text evidence="2 41">Interacts with nsp8 and nsp12 to form the replication-transcription complex (RTC): nsp12, nsp7, two subunits of nsp8, and up to two subunits of nsp13 (By similarity). Eight copies of nsp7 and eight copies of nsp8 assemble to form a heterohexadecamer dsRNA-encircling ring structure.</text>
</comment>
<comment type="subunit">
    <molecule>Non-structural protein 8</molecule>
    <text evidence="2 41 46">Interacts with nsp7, nsp13 and nsp12 to form the replication-transcription complex (RTC): nsp12, nsp7, two subunits of nsp8, and up to two subunits of nsp13 (By similarity). Eight copies of nsp7 and eight copies of nsp8 assemble to form a heterohexadecamer dsRNA-encircling ring structure (PubMed:16228002). Interacts with ORF6 protein (PubMed:17532020).</text>
</comment>
<comment type="subunit">
    <molecule>Viral protein genome-linked nsp9</molecule>
    <text evidence="2 53">Homodimer (PubMed:19153232). Interacts with nsp12 (By similarity).</text>
</comment>
<comment type="subunit">
    <molecule>Non-structural protein 10</molecule>
    <text evidence="45 51 60 63">Homododecamer (PubMed:16873247). Interacts with proofreading exoribonuclease nsp14 and 2'-O-methyltransferase nsp16; these interactions enhance nsp14 and nsp16 enzymatic activities (PubMed:18827877, PubMed:22022266, PubMed:22635272).</text>
</comment>
<comment type="subunit">
    <molecule>RNA-directed RNA polymerase nsp12</molecule>
    <text evidence="2">Interacts with nsp7 and nsp8 to form the replication-transcription complex (RTC): nsp12, nsp7, two subunits of nsp8, and up to two subunits of nsp13. Interacts with nsp9.</text>
</comment>
<comment type="subunit">
    <molecule>Helicase nsp13</molecule>
    <text evidence="2">Interacts with nsp8 to form the replication-transcription complex (RTC): nsp12, nsp7, two subunits of nsp8, and up to two subunits of nsp13.</text>
</comment>
<comment type="subunit">
    <molecule>Guanine-N7 methyltransferase nsp14</molecule>
    <text evidence="51 57">Interacts (via N-terminus) with host DDX1 (PubMed:20573827). Interacts with non-structural protein 10 (PubMed:18827877).</text>
</comment>
<comment type="subunit">
    <molecule>Uridylate-specific endoribonuclease nsp15</molecule>
    <text evidence="44">Homohexamer.</text>
</comment>
<comment type="subunit">
    <molecule>2'-O-methyltransferase nsp16</molecule>
    <text evidence="51 60">Interacts with nsp10.</text>
</comment>
<comment type="interaction">
    <interactant intactId="EBI-7843867">
        <id>P0C6X7</id>
    </interactant>
    <interactant intactId="EBI-7843867">
        <id>P0C6X7</id>
        <label>rep</label>
    </interactant>
    <organismsDiffer>false</organismsDiffer>
    <experiments>2</experiments>
</comment>
<comment type="interaction">
    <interactant intactId="EBI-25475797">
        <id>PRO_0000037309</id>
    </interactant>
    <interactant intactId="EBI-25487741">
        <id>P59637</id>
        <label>E</label>
    </interactant>
    <organismsDiffer>false</organismsDiffer>
    <experiments>2</experiments>
</comment>
<comment type="interaction">
    <interactant intactId="EBI-25475797">
        <id>PRO_0000037309</id>
    </interactant>
    <interactant intactId="EBI-25475825">
        <id>PRO_0000037316</id>
        <label>rep</label>
        <dbReference type="UniProtKB" id="P0C6X7"/>
    </interactant>
    <organismsDiffer>false</organismsDiffer>
    <experiments>2</experiments>
</comment>
<comment type="interaction">
    <interactant intactId="EBI-25475797">
        <id>PRO_0000037309</id>
    </interactant>
    <interactant intactId="EBI-718324">
        <id>Q9UQN3</id>
        <label>CHMP2B</label>
    </interactant>
    <organismsDiffer>true</organismsDiffer>
    <experiments>2</experiments>
</comment>
<comment type="interaction">
    <interactant intactId="EBI-25475797">
        <id>PRO_0000037309</id>
    </interactant>
    <interactant intactId="EBI-1027571">
        <id>P62942</id>
        <label>FKBP1A</label>
    </interactant>
    <organismsDiffer>true</organismsDiffer>
    <experiments>4</experiments>
</comment>
<comment type="interaction">
    <interactant intactId="EBI-25475797">
        <id>PRO_0000037309</id>
    </interactant>
    <interactant intactId="EBI-1051591">
        <id>Q9Y4W2</id>
        <label>LAS1L</label>
    </interactant>
    <organismsDiffer>true</organismsDiffer>
    <experiments>2</experiments>
</comment>
<comment type="interaction">
    <interactant intactId="EBI-25475797">
        <id>PRO_0000037309</id>
    </interactant>
    <interactant intactId="EBI-437708">
        <id>P62937</id>
        <label>PPIA</label>
    </interactant>
    <organismsDiffer>true</organismsDiffer>
    <experiments>4</experiments>
</comment>
<comment type="interaction">
    <interactant intactId="EBI-25475797">
        <id>PRO_0000037309</id>
    </interactant>
    <interactant intactId="EBI-396072">
        <id>Q13427</id>
        <label>PPIG</label>
    </interactant>
    <organismsDiffer>true</organismsDiffer>
    <experiments>4</experiments>
</comment>
<comment type="interaction">
    <interactant intactId="EBI-25475797">
        <id>PRO_0000037309</id>
    </interactant>
    <interactant intactId="EBI-1055615">
        <id>O43447</id>
        <label>PPIH</label>
    </interactant>
    <organismsDiffer>true</organismsDiffer>
    <experiments>4</experiments>
</comment>
<comment type="interaction">
    <interactant intactId="EBI-25475797">
        <id>PRO_0000037309</id>
    </interactant>
    <interactant intactId="EBI-9091952">
        <id>Q9UKA8</id>
        <label>RCAN3</label>
    </interactant>
    <organismsDiffer>true</organismsDiffer>
    <experiments>2</experiments>
</comment>
<comment type="interaction">
    <interactant intactId="EBI-25474098">
        <id>PRO_0000037310</id>
    </interactant>
    <interactant intactId="EBI-25492625">
        <id>PRO_0000338265</id>
        <label>1a</label>
        <dbReference type="UniProtKB" id="P0C6U8"/>
    </interactant>
    <organismsDiffer>false</organismsDiffer>
    <experiments>2</experiments>
</comment>
<comment type="interaction">
    <interactant intactId="EBI-25474098">
        <id>PRO_0000037310</id>
    </interactant>
    <interactant intactId="EBI-15595051">
        <id>P59632</id>
        <label>3a</label>
    </interactant>
    <organismsDiffer>false</organismsDiffer>
    <experiments>2</experiments>
</comment>
<comment type="interaction">
    <interactant intactId="EBI-25474098">
        <id>PRO_0000037310</id>
    </interactant>
    <interactant intactId="EBI-25474098">
        <id>PRO_0000037310</id>
        <label>rep</label>
        <dbReference type="UniProtKB" id="P0C6X7"/>
    </interactant>
    <organismsDiffer>false</organismsDiffer>
    <experiments>2</experiments>
</comment>
<comment type="interaction">
    <interactant intactId="EBI-25474098">
        <id>PRO_0000037310</id>
    </interactant>
    <interactant intactId="EBI-25487192">
        <id>PRO_0000037313</id>
        <label>rep</label>
        <dbReference type="UniProtKB" id="P0C6X7"/>
    </interactant>
    <organismsDiffer>false</organismsDiffer>
    <experiments>3</experiments>
</comment>
<comment type="interaction">
    <interactant intactId="EBI-25474098">
        <id>PRO_0000037310</id>
    </interactant>
    <interactant intactId="EBI-25487235">
        <id>PRO_0000037322</id>
        <label>rep</label>
        <dbReference type="UniProtKB" id="P0C6X7"/>
    </interactant>
    <organismsDiffer>false</organismsDiffer>
    <experiments>2</experiments>
</comment>
<comment type="interaction">
    <interactant intactId="EBI-25474098">
        <id>PRO_0000037310</id>
    </interactant>
    <interactant intactId="EBI-1223454">
        <id>P05155</id>
        <label>SERPING1</label>
    </interactant>
    <organismsDiffer>true</organismsDiffer>
    <experiments>2</experiments>
</comment>
<comment type="interaction">
    <interactant intactId="EBI-25474079">
        <id>PRO_0000037311</id>
    </interactant>
    <interactant intactId="EBI-25487741">
        <id>P59637</id>
        <label>E</label>
    </interactant>
    <organismsDiffer>false</organismsDiffer>
    <experiments>5</experiments>
</comment>
<comment type="interaction">
    <interactant intactId="EBI-25474079">
        <id>PRO_0000037311</id>
    </interactant>
    <interactant intactId="EBI-25474098">
        <id>PRO_0000037310</id>
        <label>rep</label>
        <dbReference type="UniProtKB" id="P0C6X7"/>
    </interactant>
    <organismsDiffer>false</organismsDiffer>
    <experiments>3</experiments>
</comment>
<comment type="interaction">
    <interactant intactId="EBI-25474079">
        <id>PRO_0000037311</id>
    </interactant>
    <interactant intactId="EBI-25474079">
        <id>PRO_0000037311</id>
        <label>rep</label>
        <dbReference type="UniProtKB" id="P0C6X7"/>
    </interactant>
    <organismsDiffer>false</organismsDiffer>
    <experiments>2</experiments>
</comment>
<comment type="interaction">
    <interactant intactId="EBI-25474079">
        <id>PRO_0000037311</id>
    </interactant>
    <interactant intactId="EBI-25487926">
        <id>PRO_0000037319</id>
        <label>rep</label>
        <dbReference type="UniProtKB" id="P0C6X7"/>
    </interactant>
    <organismsDiffer>false</organismsDiffer>
    <experiments>2</experiments>
</comment>
<comment type="interaction">
    <interactant intactId="EBI-25474079">
        <id>PRO_0000037311</id>
    </interactant>
    <interactant intactId="EBI-25487328">
        <id>PRO_0000037320</id>
        <label>rep</label>
        <dbReference type="UniProtKB" id="P0C6X7"/>
    </interactant>
    <organismsDiffer>false</organismsDiffer>
    <experiments>2</experiments>
</comment>
<comment type="interaction">
    <interactant intactId="EBI-25474079">
        <id>PRO_0000037311</id>
    </interactant>
    <interactant intactId="EBI-25487235">
        <id>PRO_0000037322</id>
        <label>rep</label>
        <dbReference type="UniProtKB" id="P0C6X7"/>
    </interactant>
    <organismsDiffer>false</organismsDiffer>
    <experiments>3</experiments>
</comment>
<comment type="interaction">
    <interactant intactId="EBI-25474079">
        <id>PRO_0000037311</id>
    </interactant>
    <interactant intactId="EBI-25488721">
        <id>PRO_0000283841</id>
        <label>rep</label>
        <dbReference type="UniProtKB" id="P0C6X7"/>
    </interactant>
    <organismsDiffer>false</organismsDiffer>
    <experiments>3</experiments>
</comment>
<comment type="interaction">
    <interactant intactId="EBI-25474079">
        <id>PRO_0000037311</id>
    </interactant>
    <interactant intactId="EBI-351018">
        <id>Q13557</id>
        <label>CAMK2D</label>
    </interactant>
    <organismsDiffer>true</organismsDiffer>
    <experiments>4</experiments>
</comment>
<comment type="interaction">
    <interactant intactId="EBI-25474079">
        <id>PRO_0000037311</id>
    </interactant>
    <interactant intactId="EBI-2650369">
        <id>Q14653</id>
        <label>IRF3</label>
    </interactant>
    <organismsDiffer>true</organismsDiffer>
    <experiments>5</experiments>
</comment>
<comment type="interaction">
    <interactant intactId="EBI-25474079">
        <id>PRO_0000037311</id>
    </interactant>
    <interactant intactId="EBI-746466">
        <id>P05161</id>
        <label>ISG15</label>
    </interactant>
    <organismsDiffer>true</organismsDiffer>
    <experiments>2</experiments>
</comment>
<comment type="interaction">
    <interactant intactId="EBI-25474079">
        <id>PRO_0000037311</id>
    </interactant>
    <interactant intactId="EBI-8345781">
        <id>Q64339</id>
        <label>Isg15</label>
    </interactant>
    <organismsDiffer>true</organismsDiffer>
    <experiments>4</experiments>
</comment>
<comment type="interaction">
    <interactant intactId="EBI-25474079">
        <id>PRO_0000037311</id>
    </interactant>
    <interactant intactId="EBI-2341005">
        <id>Q9H000</id>
        <label>MKRN2</label>
    </interactant>
    <organismsDiffer>true</organismsDiffer>
    <experiments>2</experiments>
</comment>
<comment type="interaction">
    <interactant intactId="EBI-25474079">
        <id>PRO_0000037311</id>
    </interactant>
    <interactant intactId="EBI-2340269">
        <id>Q13064</id>
        <label>MKRN3</label>
    </interactant>
    <organismsDiffer>true</organismsDiffer>
    <experiments>2</experiments>
</comment>
<comment type="interaction">
    <interactant intactId="EBI-25474079">
        <id>PRO_0000037311</id>
    </interactant>
    <interactant intactId="EBI-947779">
        <id>Q96PM5</id>
        <label>RCHY1</label>
    </interactant>
    <organismsDiffer>true</organismsDiffer>
    <experiments>9</experiments>
</comment>
<comment type="interaction">
    <interactant intactId="EBI-25474079">
        <id>PRO_0000037311</id>
    </interactant>
    <interactant intactId="EBI-2800345">
        <id>Q86WV6</id>
        <label>STING1</label>
    </interactant>
    <organismsDiffer>true</organismsDiffer>
    <experiments>2</experiments>
</comment>
<comment type="interaction">
    <interactant intactId="EBI-25474079">
        <id>PRO_0000037311</id>
    </interactant>
    <interactant intactId="EBI-3390054">
        <id>P0CG48</id>
        <label>UBC</label>
    </interactant>
    <organismsDiffer>true</organismsDiffer>
    <experiments>3</experiments>
</comment>
<comment type="interaction">
    <interactant intactId="EBI-25487250">
        <id>PRO_0000037312</id>
    </interactant>
    <interactant intactId="EBI-25474079">
        <id>PRO_0000037311</id>
        <label>rep</label>
        <dbReference type="UniProtKB" id="P0C6X7"/>
    </interactant>
    <organismsDiffer>false</organismsDiffer>
    <experiments>2</experiments>
</comment>
<comment type="interaction">
    <interactant intactId="EBI-25487250">
        <id>PRO_0000037312</id>
    </interactant>
    <interactant intactId="EBI-25487250">
        <id>PRO_0000037312</id>
        <label>rep</label>
        <dbReference type="UniProtKB" id="P0C6X7"/>
    </interactant>
    <organismsDiffer>false</organismsDiffer>
    <experiments>4</experiments>
</comment>
<comment type="interaction">
    <interactant intactId="EBI-25487250">
        <id>PRO_0000037312</id>
    </interactant>
    <interactant intactId="EBI-25618448">
        <id>K9N638</id>
        <label>1a</label>
    </interactant>
    <organismsDiffer>true</organismsDiffer>
    <experiments>2</experiments>
</comment>
<comment type="interaction">
    <interactant intactId="EBI-25487250">
        <id>PRO_0000037312</id>
    </interactant>
    <interactant intactId="EBI-1027571">
        <id>P62942</id>
        <label>FKBP1A</label>
    </interactant>
    <organismsDiffer>true</organismsDiffer>
    <experiments>2</experiments>
</comment>
<comment type="interaction">
    <interactant intactId="EBI-25487672">
        <id>PRO_0000037314</id>
    </interactant>
    <interactant intactId="EBI-25487672">
        <id>PRO_0000037314</id>
        <label>rep</label>
        <dbReference type="UniProtKB" id="P0C6X7"/>
    </interactant>
    <organismsDiffer>false</organismsDiffer>
    <experiments>2</experiments>
</comment>
<comment type="interaction">
    <interactant intactId="EBI-25487672">
        <id>PRO_0000037314</id>
    </interactant>
    <interactant intactId="EBI-25475825">
        <id>PRO_0000037316</id>
        <label>rep</label>
        <dbReference type="UniProtKB" id="P0C6X7"/>
    </interactant>
    <organismsDiffer>false</organismsDiffer>
    <experiments>2</experiments>
</comment>
<comment type="interaction">
    <interactant intactId="EBI-25487672">
        <id>PRO_0000037314</id>
    </interactant>
    <interactant intactId="EBI-749139">
        <id>O95865</id>
        <label>DDAH2</label>
    </interactant>
    <organismsDiffer>true</organismsDiffer>
    <experiments>2</experiments>
</comment>
<comment type="interaction">
    <interactant intactId="EBI-25487672">
        <id>PRO_0000037314</id>
    </interactant>
    <interactant intactId="EBI-373498">
        <id>A9UHW6</id>
        <label>MIF4GD</label>
    </interactant>
    <organismsDiffer>true</organismsDiffer>
    <experiments>2</experiments>
</comment>
<comment type="interaction">
    <interactant intactId="EBI-25487941">
        <id>PRO_0000037315</id>
    </interactant>
    <interactant intactId="EBI-25487741">
        <id>P59637</id>
        <label>E</label>
    </interactant>
    <organismsDiffer>false</organismsDiffer>
    <experiments>2</experiments>
</comment>
<comment type="interaction">
    <interactant intactId="EBI-25487941">
        <id>PRO_0000037315</id>
    </interactant>
    <interactant intactId="EBI-25493595">
        <id>Q19QW5</id>
        <label>ORF6</label>
    </interactant>
    <organismsDiffer>false</organismsDiffer>
    <experiments>5</experiments>
</comment>
<comment type="interaction">
    <interactant intactId="EBI-25487941">
        <id>PRO_0000037315</id>
    </interactant>
    <interactant intactId="EBI-25474098">
        <id>PRO_0000037310</id>
        <label>rep</label>
        <dbReference type="UniProtKB" id="P0C6X7"/>
    </interactant>
    <organismsDiffer>false</organismsDiffer>
    <experiments>4</experiments>
</comment>
<comment type="interaction">
    <interactant intactId="EBI-25487941">
        <id>PRO_0000037315</id>
    </interactant>
    <interactant intactId="EBI-25474079">
        <id>PRO_0000037311</id>
        <label>rep</label>
        <dbReference type="UniProtKB" id="P0C6X7"/>
    </interactant>
    <organismsDiffer>false</organismsDiffer>
    <experiments>2</experiments>
</comment>
<comment type="interaction">
    <interactant intactId="EBI-25487941">
        <id>PRO_0000037315</id>
    </interactant>
    <interactant intactId="EBI-25487250">
        <id>PRO_0000037312</id>
        <label>rep</label>
        <dbReference type="UniProtKB" id="P0C6X7"/>
    </interactant>
    <organismsDiffer>false</organismsDiffer>
    <experiments>2</experiments>
</comment>
<comment type="interaction">
    <interactant intactId="EBI-25487941">
        <id>PRO_0000037315</id>
    </interactant>
    <interactant intactId="EBI-25487672">
        <id>PRO_0000037314</id>
        <label>rep</label>
        <dbReference type="UniProtKB" id="P0C6X7"/>
    </interactant>
    <organismsDiffer>false</organismsDiffer>
    <experiments>9</experiments>
</comment>
<comment type="interaction">
    <interactant intactId="EBI-25487941">
        <id>PRO_0000037315</id>
    </interactant>
    <interactant intactId="EBI-25487941">
        <id>PRO_0000037315</id>
        <label>rep</label>
        <dbReference type="UniProtKB" id="P0C6X7"/>
    </interactant>
    <organismsDiffer>false</organismsDiffer>
    <experiments>4</experiments>
</comment>
<comment type="interaction">
    <interactant intactId="EBI-25487941">
        <id>PRO_0000037315</id>
    </interactant>
    <interactant intactId="EBI-25475825">
        <id>PRO_0000037316</id>
        <label>rep</label>
        <dbReference type="UniProtKB" id="P0C6X7"/>
    </interactant>
    <organismsDiffer>false</organismsDiffer>
    <experiments>4</experiments>
</comment>
<comment type="interaction">
    <interactant intactId="EBI-25487941">
        <id>PRO_0000037315</id>
    </interactant>
    <interactant intactId="EBI-25487684">
        <id>PRO_0000037318</id>
        <label>rep</label>
        <dbReference type="UniProtKB" id="P0C6X7"/>
    </interactant>
    <organismsDiffer>false</organismsDiffer>
    <experiments>5</experiments>
</comment>
<comment type="interaction">
    <interactant intactId="EBI-25487941">
        <id>PRO_0000037315</id>
    </interactant>
    <interactant intactId="EBI-25487926">
        <id>PRO_0000037319</id>
        <label>rep</label>
        <dbReference type="UniProtKB" id="P0C6X7"/>
    </interactant>
    <organismsDiffer>false</organismsDiffer>
    <experiments>3</experiments>
</comment>
<comment type="interaction">
    <interactant intactId="EBI-25487941">
        <id>PRO_0000037315</id>
    </interactant>
    <interactant intactId="EBI-25487328">
        <id>PRO_0000037320</id>
        <label>rep</label>
        <dbReference type="UniProtKB" id="P0C6X7"/>
    </interactant>
    <organismsDiffer>false</organismsDiffer>
    <experiments>3</experiments>
</comment>
<comment type="interaction">
    <interactant intactId="EBI-25487941">
        <id>PRO_0000037315</id>
    </interactant>
    <interactant intactId="EBI-25487301">
        <id>PRO_0000037321</id>
        <label>rep</label>
        <dbReference type="UniProtKB" id="P0C6X7"/>
    </interactant>
    <organismsDiffer>false</organismsDiffer>
    <experiments>2</experiments>
</comment>
<comment type="interaction">
    <interactant intactId="EBI-25487941">
        <id>PRO_0000037315</id>
    </interactant>
    <interactant intactId="EBI-3922608">
        <id>Q9P0M6</id>
        <label>MACROH2A2</label>
    </interactant>
    <organismsDiffer>true</organismsDiffer>
    <experiments>2</experiments>
</comment>
<comment type="interaction">
    <interactant intactId="EBI-25487941">
        <id>PRO_0000037315</id>
    </interactant>
    <interactant intactId="EBI-947048">
        <id>P69849</id>
        <label>NOMO3</label>
    </interactant>
    <organismsDiffer>true</organismsDiffer>
    <experiments>2</experiments>
</comment>
<comment type="interaction">
    <interactant intactId="EBI-25487941">
        <id>PRO_0000037315</id>
    </interactant>
    <interactant intactId="EBI-710997">
        <id>P54274</id>
        <label>TERF1</label>
    </interactant>
    <organismsDiffer>true</organismsDiffer>
    <experiments>2</experiments>
</comment>
<comment type="interaction">
    <interactant intactId="EBI-25475825">
        <id>PRO_0000037316</id>
    </interactant>
    <interactant intactId="EBI-25475825">
        <id>PRO_0000037316</id>
        <label>rep</label>
        <dbReference type="UniProtKB" id="P0C6X7"/>
    </interactant>
    <organismsDiffer>false</organismsDiffer>
    <experiments>5</experiments>
</comment>
<comment type="interaction">
    <interactant intactId="EBI-25475825">
        <id>PRO_0000037316</id>
    </interactant>
    <interactant intactId="EBI-718324">
        <id>Q9UQN3</id>
        <label>CHMP2B</label>
    </interactant>
    <organismsDiffer>true</organismsDiffer>
    <experiments>2</experiments>
</comment>
<comment type="interaction">
    <interactant intactId="EBI-25475825">
        <id>PRO_0000037316</id>
    </interactant>
    <interactant intactId="EBI-10244848">
        <id>Q5SQN1</id>
        <label>SNAP47</label>
    </interactant>
    <organismsDiffer>true</organismsDiffer>
    <experiments>2</experiments>
</comment>
<comment type="interaction">
    <interactant intactId="EBI-25487277">
        <id>PRO_0000037317</id>
    </interactant>
    <interactant intactId="EBI-25487328">
        <id>PRO_0000037320</id>
        <label>rep</label>
        <dbReference type="UniProtKB" id="P0C6X7"/>
    </interactant>
    <organismsDiffer>false</organismsDiffer>
    <experiments>7</experiments>
</comment>
<comment type="interaction">
    <interactant intactId="EBI-25487277">
        <id>PRO_0000037317</id>
    </interactant>
    <interactant intactId="EBI-25487235">
        <id>PRO_0000037322</id>
        <label>rep</label>
        <dbReference type="UniProtKB" id="P0C6X7"/>
    </interactant>
    <organismsDiffer>false</organismsDiffer>
    <experiments>16</experiments>
</comment>
<comment type="interaction">
    <interactant intactId="EBI-25487684">
        <id>PRO_0000037318</id>
    </interactant>
    <interactant intactId="EBI-25474079">
        <id>PRO_0000037311</id>
        <label>rep</label>
        <dbReference type="UniProtKB" id="P0C6X7"/>
    </interactant>
    <organismsDiffer>false</organismsDiffer>
    <experiments>3</experiments>
</comment>
<comment type="interaction">
    <interactant intactId="EBI-25487684">
        <id>PRO_0000037318</id>
    </interactant>
    <interactant intactId="EBI-25487926">
        <id>PRO_0000037319</id>
        <label>rep</label>
        <dbReference type="UniProtKB" id="P0C6X7"/>
    </interactant>
    <organismsDiffer>false</organismsDiffer>
    <experiments>5</experiments>
</comment>
<comment type="interaction">
    <interactant intactId="EBI-25487684">
        <id>PRO_0000037318</id>
    </interactant>
    <interactant intactId="EBI-25487328">
        <id>PRO_0000037320</id>
        <label>rep</label>
        <dbReference type="UniProtKB" id="P0C6X7"/>
    </interactant>
    <organismsDiffer>false</organismsDiffer>
    <experiments>3</experiments>
</comment>
<comment type="interaction">
    <interactant intactId="EBI-25487926">
        <id>PRO_0000037319</id>
    </interactant>
    <interactant intactId="EBI-1180783">
        <id>O96017</id>
        <label>CHEK2</label>
    </interactant>
    <organismsDiffer>true</organismsDiffer>
    <experiments>2</experiments>
</comment>
<comment type="interaction">
    <interactant intactId="EBI-25487926">
        <id>PRO_0000037319</id>
    </interactant>
    <interactant intactId="EBI-752324">
        <id>Q8N488</id>
        <label>RYBP</label>
    </interactant>
    <organismsDiffer>true</organismsDiffer>
    <experiments>2</experiments>
</comment>
<comment type="interaction">
    <interactant intactId="EBI-25487328">
        <id>PRO_0000037320</id>
    </interactant>
    <interactant intactId="EBI-9021274">
        <id>P59636</id>
        <label>9b</label>
    </interactant>
    <organismsDiffer>false</organismsDiffer>
    <experiments>3</experiments>
</comment>
<comment type="interaction">
    <interactant intactId="EBI-25487328">
        <id>PRO_0000037320</id>
    </interactant>
    <interactant intactId="EBI-25475825">
        <id>PRO_0000037316</id>
        <label>rep</label>
        <dbReference type="UniProtKB" id="P0C6X7"/>
    </interactant>
    <organismsDiffer>false</organismsDiffer>
    <experiments>2</experiments>
</comment>
<comment type="interaction">
    <interactant intactId="EBI-25487328">
        <id>PRO_0000037320</id>
    </interactant>
    <interactant intactId="EBI-1223454">
        <id>P05155</id>
        <label>SERPING1</label>
    </interactant>
    <organismsDiffer>true</organismsDiffer>
    <experiments>2</experiments>
</comment>
<comment type="interaction">
    <interactant intactId="EBI-25487301">
        <id>PRO_0000037321</id>
    </interactant>
    <interactant intactId="EBI-491274">
        <id>P06400</id>
        <label>RB1</label>
    </interactant>
    <organismsDiffer>true</organismsDiffer>
    <experiments>3</experiments>
</comment>
<comment type="interaction">
    <interactant intactId="EBI-25487235">
        <id>PRO_0000037322</id>
    </interactant>
    <interactant intactId="EBI-301246">
        <id>P40337</id>
        <label>VHL</label>
    </interactant>
    <organismsDiffer>true</organismsDiffer>
    <experiments>7</experiments>
</comment>
<comment type="subcellular location">
    <molecule>Non-structural protein 2</molecule>
    <subcellularLocation>
        <location evidence="2">Host cytoplasm</location>
    </subcellularLocation>
    <subcellularLocation>
        <location evidence="2">Host endosome</location>
    </subcellularLocation>
</comment>
<comment type="subcellular location">
    <molecule>Papain-like protease nsp3</molecule>
    <subcellularLocation>
        <location evidence="81">Host membrane</location>
        <topology>Multi-pass membrane protein</topology>
    </subcellularLocation>
    <subcellularLocation>
        <location evidence="66">Host cytoplasm</location>
    </subcellularLocation>
</comment>
<comment type="subcellular location">
    <molecule>Non-structural protein 4</molecule>
    <subcellularLocation>
        <location>Host membrane</location>
        <topology>Multi-pass membrane protein</topology>
    </subcellularLocation>
    <subcellularLocation>
        <location evidence="66">Host cytoplasm</location>
    </subcellularLocation>
    <text evidence="48 58 66">Localizes in virally-induced cytoplasmic double-membrane vesicles.</text>
</comment>
<comment type="subcellular location">
    <molecule>3C-like proteinase nsp5</molecule>
    <subcellularLocation>
        <location evidence="2">Host cytoplasm</location>
    </subcellularLocation>
    <subcellularLocation>
        <location evidence="2">Host Golgi apparatus</location>
    </subcellularLocation>
</comment>
<comment type="subcellular location">
    <molecule>Non-structural protein 6</molecule>
    <subcellularLocation>
        <location evidence="81">Host membrane</location>
        <topology evidence="81">Multi-pass membrane protein</topology>
    </subcellularLocation>
</comment>
<comment type="subcellular location">
    <molecule>Non-structural protein 7</molecule>
    <subcellularLocation>
        <location evidence="1">Host cytoplasm</location>
        <location evidence="1">Host perinuclear region</location>
    </subcellularLocation>
    <subcellularLocation>
        <location evidence="2">Host cytoplasm</location>
    </subcellularLocation>
    <subcellularLocation>
        <location evidence="2">Host endoplasmic reticulum</location>
    </subcellularLocation>
    <text>nsp7, nsp8, nsp9 and nsp10 are localized in cytoplasmic foci, largely perinuclear. Late in infection, they merge into confluent complexes.</text>
</comment>
<comment type="subcellular location">
    <molecule>Non-structural protein 8</molecule>
    <subcellularLocation>
        <location evidence="46">Host cytoplasm</location>
        <location evidence="46">Host perinuclear region</location>
    </subcellularLocation>
    <subcellularLocation>
        <location evidence="2">Host cytoplasm</location>
    </subcellularLocation>
    <subcellularLocation>
        <location evidence="2">Host endoplasmic reticulum</location>
    </subcellularLocation>
    <text>nsp7, nsp8, nsp9 and nsp10 are localized in cytoplasmic foci, largely perinuclear. Late in infection, they merge into confluent complexes.</text>
</comment>
<comment type="subcellular location">
    <molecule>Viral protein genome-linked nsp9</molecule>
    <subcellularLocation>
        <location evidence="1">Host cytoplasm</location>
        <location evidence="1">Host perinuclear region</location>
    </subcellularLocation>
    <subcellularLocation>
        <location evidence="2">Host cytoplasm</location>
    </subcellularLocation>
    <subcellularLocation>
        <location evidence="2">Host endoplasmic reticulum</location>
    </subcellularLocation>
    <text>nsp7, nsp8, nsp9 and nsp10 are localized in cytoplasmic foci, largely perinuclear. Late in infection, they merge into confluent complexes.</text>
</comment>
<comment type="subcellular location">
    <molecule>Non-structural protein 10</molecule>
    <subcellularLocation>
        <location evidence="1">Host cytoplasm</location>
        <location evidence="1">Host perinuclear region</location>
    </subcellularLocation>
    <subcellularLocation>
        <location evidence="2">Host cytoplasm</location>
    </subcellularLocation>
    <subcellularLocation>
        <location evidence="2">Host endoplasmic reticulum</location>
    </subcellularLocation>
    <text>nsp7, nsp8, nsp9 and nsp10 are localized in cytoplasmic foci, largely perinuclear. Late in infection, they merge into confluent complexes.</text>
</comment>
<comment type="subcellular location">
    <molecule>Helicase nsp13</molecule>
    <subcellularLocation>
        <location evidence="81">Host endoplasmic reticulum-Golgi intermediate compartment</location>
    </subcellularLocation>
    <text>The helicase interacts with the N protein in membranous complexes and colocalizes with sites of synthesis of new viral RNA.</text>
</comment>
<comment type="subcellular location">
    <molecule>Guanine-N7 methyltransferase nsp14</molecule>
    <subcellularLocation>
        <location evidence="2">Host cytoplasm</location>
    </subcellularLocation>
    <subcellularLocation>
        <location evidence="2">Host endoplasmic reticulum</location>
    </subcellularLocation>
</comment>
<comment type="subcellular location">
    <molecule>Uridylate-specific endoribonuclease nsp15</molecule>
    <subcellularLocation>
        <location evidence="1">Host cytoplasm</location>
        <location evidence="1">Host perinuclear region</location>
    </subcellularLocation>
</comment>
<comment type="alternative products">
    <event type="ribosomal frameshifting"/>
    <isoform>
        <id>P0C6X7-1</id>
        <name>Replicase polyprotein 1ab</name>
        <name>pp1ab</name>
        <sequence type="displayed"/>
    </isoform>
    <isoform>
        <id>P0C6U8-1</id>
        <name>Replicase polyprotein 1a</name>
        <name>pp1a</name>
        <name>ORF1a polyprotein</name>
        <sequence type="external"/>
    </isoform>
    <text evidence="81">Isoform replicase polyprotein 1ab is produced by -1 ribosomal frameshifting at the 1a-1b genes boundary. Isoform replicase polyprotein 1a is produced by conventional translation.</text>
</comment>
<comment type="domain">
    <molecule>Papain-like protease nsp3</molecule>
    <text evidence="82">The hydrophobic region HD1 probably mediates the membrane association of the replication complex.</text>
</comment>
<comment type="domain">
    <molecule>Non-structural protein 4</molecule>
    <text evidence="82">The hydrophobic region HD2 probably mediates the membrane association of the replication complex.</text>
</comment>
<comment type="domain">
    <molecule>Non-structural protein 6</molecule>
    <text evidence="82">The hydrophobic region HD3 probably mediates the membrane association of the replication complex.</text>
</comment>
<comment type="PTM">
    <molecule>Isoform Replicase polyprotein 1ab</molecule>
    <text evidence="35 37 39 42 73">Specific enzymatic cleavages in vivo by its own proteases yield mature proteins (PubMed:12917450, PubMed:15331731, PubMed:15564471, PubMed:16306590, PubMed:32083638). 3C-like proteinase nsp5 liberates nsps 6-16 from the polyprotein (PubMed:32083638). Papain-like and 3C-like proteinases are autocatalytically processed.</text>
</comment>
<comment type="mass spectrometry" mass="21871.0" method="Electrospray" evidence="73">
    <molecule>Non-structural protein 8</molecule>
</comment>
<comment type="mass spectrometry" mass="12403.0" method="Electrospray" evidence="73">
    <molecule>Viral protein genome-linked nsp9</molecule>
</comment>
<comment type="mass spectrometry" mass="14974.0" method="Electrospray" evidence="73">
    <molecule>Non-structural protein 10</molecule>
</comment>
<comment type="similarity">
    <text evidence="81">Belongs to the coronaviruses polyprotein 1ab family.</text>
</comment>
<comment type="caution">
    <text evidence="81">Isolates SZ3 and SZ16 have been isolated from Paguma larvata and are described as SARS-like in literature.</text>
</comment>
<comment type="sequence caution" evidence="81">
    <conflict type="erroneous gene model prediction">
        <sequence resource="EMBL-CDS" id="AAP13440"/>
    </conflict>
</comment>
<comment type="sequence caution" evidence="81">
    <conflict type="erroneous gene model prediction">
        <sequence resource="EMBL-CDS" id="AAP41036"/>
    </conflict>
</comment>
<comment type="sequence caution" evidence="81">
    <conflict type="erroneous gene model prediction">
        <sequence resource="EMBL-CDS" id="AAP82975"/>
    </conflict>
</comment>
<comment type="sequence caution" evidence="81">
    <conflict type="erroneous gene model prediction">
        <sequence resource="EMBL-CDS" id="AAP97881"/>
    </conflict>
</comment>
<comment type="sequence caution" evidence="81">
    <conflict type="erroneous gene model prediction">
        <sequence resource="EMBL-CDS" id="AAQ01596"/>
    </conflict>
</comment>
<comment type="sequence caution" evidence="81">
    <conflict type="erroneous gene model prediction">
        <sequence resource="EMBL-CDS" id="AAQ01608"/>
    </conflict>
</comment>
<sequence length="7073" mass="790248">MESLVLGVNEKTHVQLSLPVLQVRDVLVRGFGDSVEEALSEAREHLKNGTCGLVELEKGVLPQLEQPYVFIKRSDALSTNHGHKVVELVAEMDGIQYGRSGITLGVLVPHVGETPIAYRNVLLRKNGNKGAGGHSYGIDLKSYDLGDELGTDPIEDYEQNWNTKHGSGALRELTRELNGGAVTRYVDNNFCGPDGYPLDCIKDFLARAGKSMCTLSEQLDYIESKRGVYCCRDHEHEIAWFTERSDKSYEHQTPFEIKSAKKFDTFKGECPKFVFPLNSKVKVIQPRVEKKKTEGFMGRIRSVYPVASPQECNNMHLSTLMKCNHCDEVSWQTCDFLKATCEHCGTENLVIEGPTTCGYLPTNAVVKMPCPACQDPEIGPEHSVADYHNHSNIETRLRKGGRTRCFGGCVFAYVGCYNKRAYWVPRASADIGSGHTGITGDNVETLNEDLLEILSRERVNINIVGDFHLNEEVAIILASFSASTSAFIDTIKSLDYKSFKTIVESCGNYKVTKGKPVKGAWNIGQQRSVLTPLCGFPSQAAGVIRSIFARTLDAANHSIPDLQRAAVTILDGISEQSLRLVDAMVYTSDLLTNSVIIMAYVTGGLVQQTSQWLSNLLGTTVEKLRPIFEWIEAKLSAGVEFLKDAWEILKFLITGVFDIVKGQIQVASDNIKDCVKCFIDVVNKALEMCIDQVTIAGAKLRSLNLGEVFIAQSKGLYRQCIRGKEQLQLLMPLKAPKEVTFLEGDSHDTVLTSEEVVLKNGELEALETPVDSFTNGAIVGTPVCVNGLMLLEIKDKEQYCALSPGLLATNNVFRLKGGAPIKGVTFGEDTVWEVQGYKNVRITFELDERVDKVLNEKCSVYTVESGTEVTEFACVVAEAVVKTLQPVSDLLTNMGIDLDEWSVATFYLFDDAGEENFSSRMYCSFYPPDEEEEDDAECEEEEIDETCEHEYGTEDDYQGLPLEFGASAETVRVEEEEEEDWLDDTTEQSEIEPEPEPTPEEPVNQFTGYLKLTDNVAIKCVDIVKEAQSANPMVIVNAANIHLKHGGGVAGALNKATNGAMQKESDDYIKLNGPLTVGGSCLLSGHNLAKKCLHVVGPNLNAGEDIQLLKAAYENFNSQDILLAPLLSAGIFGAKPLQSLQVCVQTVRTQVYIAVNDKALYEQVVMDYLDNLKPRVEAPKQEEPPNTEDSKTEEKSVVQKPVDVKPKIKACIDEVTTTLEETKFLTNKLLLFADINGKLYHDSQNMLRGEDMSFLEKDAPYMVGDVITSGDITCVVIPSKKAGGTTEMLSRALKKVPVDEYITTYPGQGCAGYTLEEAKTALKKCKSAFYVLPSEAPNAKEEILGTVSWNLREMLAHAEETRKLMPICMDVRAIMATIQRKYKGIKIQEGIVDYGVRFFFYTSKEPVASIITKLNSLNEPLVTMPIGYVTHGFNLEEAARCMRSLKAPAVVSVSSPDAVTTYNGYLTSSSKTSEEHFVETVSLAGSYRDWSYSGQRTELGVEFLKRGDKIVYHTLESPVEFHLDGEVLSLDKLKSLLSLREVKTIKVFTTVDNTNLHTQLVDMSMTYGQQFGPTYLDGADVTKIKPHVNHEGKTFFVLPSDDTLRSEAFEYYHTLDESFLGRYMSALNHTKKWKFPQVGGLTSIKWADNNCYLSSVLLALQQLEVKFNAPALQEAYYRARAGDAANFCALILAYSNKTVGELGDVRETMTHLLQHANLESAKRVLNVVCKHCGQKTTTLTGVEAVMYMGTLSYDNLKTGVSIPCVCGRDATQYLVQQESSFVMMSAPPAEYKLQQGTFLCANEYTGNYQCGHYTHITAKETLYRIDGAHLTKMSEYKGPVTDVFYKETSYTTTIKPVSYKLDGVTYTEIEPKLDGYYKKDNAYYTEQPIDLVPTQPLPNASFDNFKLTCSNTKFADDLNQMTGFTKPASRELSVTFFPDLNGDVVAIDYRHYSASFKKGAKLLHKPIVWHINQATTKTTFKPNTWCLRCLWSTKPVDTSNSFEVLAVEDTQGMDNLACESQQPTSEEVVENPTIQKEVIECDVKTTEVVGNVILKPSDEGVKVTQELGHEDLMAAYVENTSITIKKPNELSLALGLKTIATHGIAAINSVPWSKILAYVKPFLGQAAITTSNCAKRLAQRVFNNYMPYVFTLLFQLCTFTKSTNSRIRASLPTTIAKNSVKSVAKLCLDAGINYVKSPKFSKLFTIAMWLLLLSICLGSLICVTAAFGVLLSNFGAPSYCNGVRELYLNSSNVTTMDFCEGSFPCSICLSGLDSLDSYPALETIQVTISSYKLDLTILGLAAEWVLAYMLFTKFFYLLGLSAIMQVFFGYFASHFISNSWLMWFIISIVQMAPVSAMVRMYIFFASFYYIWKSYVHIMDGCTSSTCMMCYKRNRATRVECTTIVNGMKRSFYVYANGGRGFCKTHNWNCLNCDTFCTGSTFISDEVARDLSLQFKRPINPTDQSSYIVDSVAVKNGALHLYFDKAGQKTYERHPLSHFVNLDNLRANNTKGSLPINVIVFDGKSKCDESASKSASVYYSQLMCQPILLLDQALVSDVGDSTEVSVKMFDAYVDTFSATFSVPMEKLKALVATAHSELAKGVALDGVLSTFVSAARQGVVDTDVDTKDVIECLKLSHHSDLEVTGDSCNNFMLTYNKVENMTPRDLGACIDCNARHINAQVAKSHNVSLIWNVKDYMSLSEQLRKQIRSAAKKNNIPFRLTCATTRQVVNVITTKISLKGGKIVSTCFKLMLKATLLCVLAALVCYIVMPVHTLSIHDGYTNEIIGYKAIQDGVTRDIISTDDCFANKHAGFDAWFSQRGGSYKNDKSCPVVAAIITREIGFIVPGLPGTVLRAINGDFLHFLPRVFSAVGNICYTPSKLIEYSDFATSACVLAAECTIFKDAMGKPVPYCYDTNLLEGSISYSELRPDTRYVLMDGSIIQFPNTYLEGSVRVVTTFDAEYCRHGTCERSEVGICLSTSGRWVLNNEHYRALSGVFCGVDAMNLIANIFTPLVQPVGALDVSASVVAGGIIAILVTCAAYYFMKFRRVFGEYNHVVAANALLFLMSFTILCLVPAYSFLPGVYSVFYLYLTFYFTNDVSFLAHLQWFAMFSPIVPFWITAIYVFCISLKHCHWFFNNYLRKRVMFNGVTFSTFEEAALCTFLLNKEMYLKLRSETLLPLTQYNRYLALYNKYKYFSGALDTTSYREAACCHLAKALNDFSNSGADVLYQPPQTSITSAVLQSGFRKMAFPSGKVEGCMVQVTCGTTTLNGLWLDDTVYCPRHVICTAEDMLNPNYEDLLIRKSNHSFLVQAGNVQLRVIGHSMQNCLLRLKVDTSNPKTPKYKFVRIQPGQTFSVLACYNGSPSGVYQCAMRPNHTIKGSFLNGSCGSVGFNIDYDCVSFCYMHHMELPTGVHAGTDLEGKFYGPFVDRQTAQAAGTDTTITLNVLAWLYAAVINGDRWFLNRFTTTLNDFNLVAMKYNYEPLTQDHVDILGPLSAQTGIAVLDMCAALKELLQNGMNGRTILGSTILEDEFTPFDVVRQCSGVTFQGKFKKIVKGTHHWMLLTFLTSLLILVQSTQWSLFFFVYENAFLPFTLGIMAIAACAMLLVKHKHAFLCLFLLPSLATVAYFNMVYMPASWVMRIMTWLELADTSLSGYRLKDCVMYASALVLLILMTARTVYDDAARRVWTLMNVITLVYKVYYGNALDQAISMWALVISVTSNYSGVVTTIMFLARAIVFVCVEYYPLLFITGNTLQCIMLVYCFLGYCCCCYFGLFCLLNRYFRLTLGVYDYLVSTQEFRYMNSQGLLPPKSSIDAFKLNIKLLGIGGKPCIKVATVQSKMSDVKCTSVVLLSVLQQLRVESSSKLWAQCVQLHNDILLAKDTTEAFEKMVSLLSVLLSMQGAVDINRLCEEMLDNRATLQAIASEFSSLPSYAAYATAQEAYEQAVANGDSEVVLKKLKKSLNVAKSEFDRDAAMQRKLEKMADQAMTQMYKQARSEDKRAKVTSAMQTMLFTMLRKLDNDALNNIINNARDGCVPLNIIPLTTAAKLMVVVPDYGTYKNTCDGNTFTYASALWEIQQVVDADSKIVQLSEINMDNSPNLAWPLIVTALRANSAVKLQNNELSPVALRQMSCAAGTTQTACTDDNALAYYNNSKGGRFVLALLSDHQDLKWARFPKSDGTGTIYTELEPPCRFVTDTPKGPKVKYLYFIKGLNNLNRGMVLGSLAATVRLQAGNATEVPANSTVLSFCAFAVDPAKAYKDYLASGGQPITNCVKMLCTHTGTGQAITVTPEANMDQESFGGASCCLYCRCHIDHPNPKGFCDLKGKYVQIPTTCANDPVGFTLRNTVCTVCGMWKGYGCSCDQLREPLMQSADASTFLNRVCGVSAARLTPCGTGTSTDVVYRAFDIYNEKVAGFAKFLKTNCCRFQEKDEEGNLLDSYFVVKRHTMSNYQHEETIYNLVKDCPAVAVHDFFKFRVDGDMVPHISRQRLTKYTMADLVYALRHFDEGNCDTLKEILVTYNCCDDDYFNKKDWYDFVENPDILRVYANLGERVRQSLLKTVQFCDAMRDAGIVGVLTLDNQDLNGNWYDFGDFVQVAPGCGVPIVDSYYSLLMPILTLTRALAAESHMDADLAKPLIKWDLLKYDFTEERLCLFDRYFKYWDQTYHPNCINCLDDRCILHCANFNVLFSTVFPPTSFGPLVRKIFVDGVPFVVSTGYHFRELGVVHNQDVNLHSSRLSFKELLVYAADPAMHAASGNLLLDKRTTCFSVAALTNNVAFQTVKPGNFNKDFYDFAVSKGFFKEGSSVELKHFFFAQDGNAAISDYDYYRYNLPTMCDIRQLLFVVEVVDKYFDCYDGGCINANQVIVNNLDKSAGFPFNKWGKARLYYDSMSYEDQDALFAYTKRNVIPTITQMNLKYAISAKNRARTVAGVSICSTMTNRQFHQKLLKSIAATRGATVVIGTSKFYGGWHNMLKTVYSDVETPHLMGWDYPKCDRAMPNMLRIMASLVLARKHNTCCNLSHRFYRLANECAQVLSEMVMCGGSLYVKPGGTSSGDATTAYANSVFNICQAVTANVNALLSTDGNKIADKYVRNLQHRLYECLYRNRDVDHEFVDEFYAYLRKHFSMMILSDDAVVCYNSNYAAQGLVASIKNFKAVLYYQNNVFMSEAKCWTETDLTKGPHEFCSQHTMLVKQGDDYVYLPYPDPSRILGAGCFVDDIVKTDGTLMIERFVSLAIDAYPLTKHPNQEYADVFHLYLQYIRKLHDELTGHMLDMYSVMLTNDNTSRYWEPEFYEAMYTPHTVLQAVGACVLCNSQTSLRCGACIRRPFLCCKCCYDHVISTSHKLVLSVNPYVCNAPGCDVTDVTQLYLGGMSYYCKSHKPPISFPLCANGQVFGLYKNTCVGSDNVTDFNAIATCDWTNAGDYILANTCTERLKLFAAETLKATEETFKLSYGIATVREVLSDRELHLSWEVGKPRPPLNRNYVFTGYRVTKNSKVQIGEYTFEKGDYGDAVVYRGTTTYKLNVGDYFVLTSHTVMPLSAPTLVPQEHYVRITGLYPTLNISDEFSSNVANYQKVGMQKYSTLQGPPGTGKSHFAIGLALYYPSARIVYTACSHAAVDALCEKALKYLPIDKCSRIIPARARVECFDKFKVNSTLEQYVFCTVNALPETTADIVVFDEISMATNYDLSVVNARLRAKHYVYIGDPAQLPAPRTLLTKGTLEPEYFNSVCRLMKTIGPDMFLGTCRRCPAEIVDTVSALVYDNKLKAHKDKSAQCFKMFYKGVITHDVSSAINRPQIGVVREFLTRNPAWRKAVFISPYNSQNAVASKILGLPTQTVDSSQGSEYDYVIFTQTTETAHSCNVNRFNVAITRAKIGILCIMSDRDLYDKLQFTSLEIPRRNVATLQAENVTGLFKDCSKIITGLHPTQAPTHLSVDIKFKTEGLCVDIPGIPKDMTYRRLISMMGFKMNYQVNGYPNMFITREEAIRHVRAWIGFDVEGCHATRDAVGTNLPLQLGFSTGVNLVAVPTGYVDTENNTEFTRVNAKPPPGDQFKHLIPLMYKGLPWNVVRIKIVQMLSDTLKGLSDRVVFVLWAHGFELTSMKYFVKIGPERTCCLCDKRATCFSTSSDTYACWNHSVGFDYVYNPFMIDVQQWGFTGNLQSNHDQHCQVHGNAHVASCDAIMTRCLAVHECFVKRVDWSVEYPIIGDELRVNSACRKVQHMVVKSALLADKFPVLHDIGNPKAIKCVPQAEVEWKFYDAQPCSDKAYKIEELFYSYATHHDKFTDGVCLFWNCNVDRYPANAIVCRFDTRVLSNLNLPGCDGGSLYVNKHAFHTPAFDKSAFTNLKQLPFFYYSDSPCESHGKQVVSDIDYVPLKSATCITRCNLGGAVCRHHANEYRQYLDAYNMMISAGFSLWIYKQFDTYNLWNTFTRLQSLENVAYNVVNKGHFDGHAGEAPVSIINNAVYTKVDGIDVEIFENKTTLPVNVAFELWAKRNIKPVPEIKILNNLGVDIAANTVIWDYKREAPAHVSTIGVCTMTDIAKKPTESACSSLTVLFDGRVEGQVDLFRNARNGVLITEGSVKGLTPSKGPAQASVNGVTLIGESVKTQFNYFKKVDGIIQQLPETYFTQSRDLEDFKPRSQMETDFLELAMDEFIQRYKLEGYAFEHIVYGDFSHGQLGGLHLMIGLAKRSQDSPLKLEDFIPMDSTVKNYFITDAQTGSSKCVCSVIDLLLDDFVEIIKSQDLSVISKVVKVTIDYAEISFMLWCKDGHVETFYPKLQASQAWQPGVAMPNLYKMQRMLLEKCDLQNYGENAVIPKGIMMNVAKYTQLCQYLNTLTLAVPYNMRVIHFGAGSDKGVAPGTAVLRQWLPTGTLLVDSDLNDFVSDADSTLIGDCATVHTANKWDLIISDMYDPRTKHVTKENDSKEGFFTYLCGFIKQKLALGGSIAVKITEHSWNADLYKLMGHFSWWTAFVTNVNASSSEAFLIGANYLGKPKEQIDGYTMHANYIFWRNTNPIQLSSYSLFDMSKFPLKLRGTAVMSLKENQINDMIYSLLEKGRLIIRENNRVVVSSDILVNN</sequence>
<proteinExistence type="evidence at protein level"/>